<keyword id="KW-0002">3D-structure</keyword>
<keyword id="KW-0007">Acetylation</keyword>
<keyword id="KW-0036">Amyotrophic lateral sclerosis</keyword>
<keyword id="KW-0049">Antioxidant</keyword>
<keyword id="KW-0186">Copper</keyword>
<keyword id="KW-0963">Cytoplasm</keyword>
<keyword id="KW-0903">Direct protein sequencing</keyword>
<keyword id="KW-0225">Disease variant</keyword>
<keyword id="KW-1015">Disulfide bond</keyword>
<keyword id="KW-0449">Lipoprotein</keyword>
<keyword id="KW-0479">Metal-binding</keyword>
<keyword id="KW-0523">Neurodegeneration</keyword>
<keyword id="KW-0539">Nucleus</keyword>
<keyword id="KW-0560">Oxidoreductase</keyword>
<keyword id="KW-0564">Palmitate</keyword>
<keyword id="KW-0597">Phosphoprotein</keyword>
<keyword id="KW-1267">Proteomics identification</keyword>
<keyword id="KW-1185">Reference proteome</keyword>
<keyword id="KW-0832">Ubl conjugation</keyword>
<keyword id="KW-0862">Zinc</keyword>
<feature type="initiator methionine" description="Removed" evidence="43 44 85">
    <location>
        <position position="1"/>
    </location>
</feature>
<feature type="chain" id="PRO_0000164057" description="Superoxide dismutase [Cu-Zn]">
    <location>
        <begin position="2"/>
        <end position="154"/>
    </location>
</feature>
<feature type="binding site" evidence="14 22">
    <location>
        <position position="47"/>
    </location>
    <ligand>
        <name>Cu cation</name>
        <dbReference type="ChEBI" id="CHEBI:23378"/>
        <note>catalytic</note>
    </ligand>
</feature>
<feature type="binding site" evidence="14 22">
    <location>
        <position position="49"/>
    </location>
    <ligand>
        <name>Cu cation</name>
        <dbReference type="ChEBI" id="CHEBI:23378"/>
        <note>catalytic</note>
    </ligand>
</feature>
<feature type="binding site" evidence="14 22">
    <location>
        <position position="64"/>
    </location>
    <ligand>
        <name>Cu cation</name>
        <dbReference type="ChEBI" id="CHEBI:23378"/>
        <note>catalytic</note>
    </ligand>
</feature>
<feature type="binding site" evidence="30">
    <location>
        <position position="64"/>
    </location>
    <ligand>
        <name>Zn(2+)</name>
        <dbReference type="ChEBI" id="CHEBI:29105"/>
        <note>structural</note>
    </ligand>
</feature>
<feature type="binding site" evidence="30">
    <location>
        <position position="72"/>
    </location>
    <ligand>
        <name>Zn(2+)</name>
        <dbReference type="ChEBI" id="CHEBI:29105"/>
        <note>structural</note>
    </ligand>
</feature>
<feature type="binding site" evidence="30">
    <location>
        <position position="81"/>
    </location>
    <ligand>
        <name>Zn(2+)</name>
        <dbReference type="ChEBI" id="CHEBI:29105"/>
        <note>structural</note>
    </ligand>
</feature>
<feature type="binding site" evidence="30">
    <location>
        <position position="84"/>
    </location>
    <ligand>
        <name>Zn(2+)</name>
        <dbReference type="ChEBI" id="CHEBI:29105"/>
        <note>structural</note>
    </ligand>
</feature>
<feature type="binding site" evidence="14 22">
    <location>
        <position position="121"/>
    </location>
    <ligand>
        <name>Cu cation</name>
        <dbReference type="ChEBI" id="CHEBI:23378"/>
        <note>catalytic</note>
    </ligand>
</feature>
<feature type="modified residue" description="N-acetylalanine" evidence="16 44 85">
    <location>
        <position position="2"/>
    </location>
</feature>
<feature type="modified residue" description="N6-succinyllysine" evidence="2">
    <location>
        <position position="4"/>
    </location>
</feature>
<feature type="modified residue" description="N6-succinyllysine" evidence="2">
    <location>
        <position position="10"/>
    </location>
</feature>
<feature type="modified residue" description="N6-succinyllysine" evidence="2">
    <location>
        <position position="92"/>
    </location>
</feature>
<feature type="modified residue" description="Phosphoserine" evidence="81 83 84">
    <location>
        <position position="99"/>
    </location>
</feature>
<feature type="modified residue" description="Phosphoserine" evidence="84">
    <location>
        <position position="103"/>
    </location>
</feature>
<feature type="modified residue" description="Phosphoserine" evidence="1">
    <location>
        <position position="106"/>
    </location>
</feature>
<feature type="modified residue" description="Phosphoserine" evidence="2">
    <location>
        <position position="108"/>
    </location>
</feature>
<feature type="modified residue" description="N6-acetyllysine; alternate" evidence="82">
    <location>
        <position position="123"/>
    </location>
</feature>
<feature type="modified residue" description="N6-succinyllysine; alternate" evidence="35">
    <location>
        <position position="123"/>
    </location>
</feature>
<feature type="modified residue" description="N6-acetyllysine; alternate" evidence="2">
    <location>
        <position position="137"/>
    </location>
</feature>
<feature type="modified residue" description="N6-succinyllysine; alternate" evidence="2">
    <location>
        <position position="137"/>
    </location>
</feature>
<feature type="lipid moiety-binding region" description="S-palmitoyl cysteine" evidence="33">
    <location>
        <position position="7"/>
    </location>
</feature>
<feature type="disulfide bond" evidence="14 16 18 20">
    <location>
        <begin position="58"/>
        <end position="147"/>
    </location>
</feature>
<feature type="cross-link" description="1-(tryptophan-3-yl)-tryptophan (Trp-Trp) (interchain with W-33)" evidence="29">
    <location>
        <position position="33"/>
    </location>
</feature>
<feature type="sequence variant" id="VAR_013518" description="In ALS1; dbSNP:rs121912444." evidence="75">
    <original>A</original>
    <variation>S</variation>
    <location>
        <position position="5"/>
    </location>
</feature>
<feature type="sequence variant" id="VAR_007130" description="In ALS1; dbSNP:rs121912444." evidence="61">
    <original>A</original>
    <variation>T</variation>
    <location>
        <position position="5"/>
    </location>
</feature>
<feature type="sequence variant" id="VAR_007131" description="In ALS1; severe form; reduces structural stability and enzyme activity; increases tendency to form fibrillar aggregates; dbSNP:rs121912442." evidence="4 14 17 56 62 72">
    <original>A</original>
    <variation>V</variation>
    <location>
        <position position="5"/>
    </location>
</feature>
<feature type="sequence variant" id="VAR_008717" description="In ALS1; dbSNP:rs121912448." evidence="67">
    <original>C</original>
    <variation>F</variation>
    <location>
        <position position="7"/>
    </location>
</feature>
<feature type="sequence variant" id="VAR_007132" description="In ALS1; dbSNP:rs1568807330." evidence="58">
    <original>V</original>
    <variation>E</variation>
    <location>
        <position position="8"/>
    </location>
</feature>
<feature type="sequence variant" id="VAR_013519" description="In ALS1; dbSNP:rs1568807342." evidence="71">
    <original>L</original>
    <variation>Q</variation>
    <location>
        <position position="9"/>
    </location>
</feature>
<feature type="sequence variant" id="VAR_013520" description="In ALS1; dbSNP:rs1568807333." evidence="15">
    <original>L</original>
    <variation>V</variation>
    <location>
        <position position="9"/>
    </location>
</feature>
<feature type="sequence variant" id="VAR_013521" description="In ALS1; dbSNP:rs121912456." evidence="5">
    <original>G</original>
    <variation>R</variation>
    <location>
        <position position="13"/>
    </location>
</feature>
<feature type="sequence variant" id="VAR_013522" description="In ALS1; dbSNP:rs1202989817." evidence="72">
    <original>V</original>
    <variation>G</variation>
    <location>
        <position position="15"/>
    </location>
</feature>
<feature type="sequence variant" id="VAR_007133" description="In ALS1; dbSNP:rs1568807400." evidence="50">
    <original>V</original>
    <variation>M</variation>
    <location>
        <position position="15"/>
    </location>
</feature>
<feature type="sequence variant" id="VAR_007134" description="In ALS1; sporadic young onset; dbSNP:rs121912453." evidence="70">
    <original>G</original>
    <variation>S</variation>
    <location>
        <position position="17"/>
    </location>
</feature>
<feature type="sequence variant" id="VAR_045876" description="In ALS1; dbSNP:rs1555836169." evidence="15">
    <original>F</original>
    <variation>C</variation>
    <location>
        <position position="21"/>
    </location>
</feature>
<feature type="sequence variant" id="VAR_013523" description="In ALS1; dbSNP:rs1568807435." evidence="76">
    <original>E</original>
    <variation>G</variation>
    <location>
        <position position="22"/>
    </location>
</feature>
<feature type="sequence variant" id="VAR_007135" description="In ALS1; dbSNP:rs121912450." evidence="60">
    <original>E</original>
    <variation>K</variation>
    <location>
        <position position="22"/>
    </location>
</feature>
<feature type="sequence variant" id="VAR_045877" description="In ALS1; dbSNP:rs1169198442." evidence="15">
    <original>Q</original>
    <variation>L</variation>
    <location>
        <position position="23"/>
    </location>
</feature>
<feature type="sequence variant" id="VAR_007136" description="In ALS1; mild form; ubiquitinated by RNF19A. Ubiquitinated by MARCHF5; leading to the degradation of mitochondrial SOD1; dbSNP:rs121912431." evidence="4 9 10 26 56 62 63 74">
    <original>G</original>
    <variation>R</variation>
    <location>
        <position position="38"/>
    </location>
</feature>
<feature type="sequence variant" id="VAR_013524" description="In ALS1; dbSNP:rs1555836520." evidence="76">
    <original>L</original>
    <variation>R</variation>
    <location>
        <position position="39"/>
    </location>
</feature>
<feature type="sequence variant" id="VAR_007137" description="In ALS1; dbSNP:rs121912432." evidence="62 63">
    <original>L</original>
    <variation>V</variation>
    <location>
        <position position="39"/>
    </location>
</feature>
<feature type="sequence variant" id="VAR_007139" description="In ALS1; dbSNP:rs121912434." evidence="62 63">
    <original>G</original>
    <variation>D</variation>
    <location>
        <position position="42"/>
    </location>
</feature>
<feature type="sequence variant" id="VAR_007138" description="In ALS1; dbSNP:rs121912433." evidence="62 63">
    <original>G</original>
    <variation>S</variation>
    <location>
        <position position="42"/>
    </location>
</feature>
<feature type="sequence variant" id="VAR_007140" description="In ALS1; reduces structural stability and enzyme activity; increases tendency to form fibrillar aggregates; dbSNP:rs121912435." evidence="14 62 63">
    <original>H</original>
    <variation>R</variation>
    <location>
        <position position="44"/>
    </location>
</feature>
<feature type="sequence variant" id="VAR_013525" description="In ALS1; slow progression; dbSNP:rs121912457." evidence="7">
    <original>F</original>
    <variation>C</variation>
    <location>
        <position position="46"/>
    </location>
</feature>
<feature type="sequence variant" id="VAR_007141" description="In ALS1; 80% of wild-type activity; ubiquitinated by RNF19A; dbSNP:rs121912443." evidence="4 9 12 53">
    <original>H</original>
    <variation>R</variation>
    <location>
        <position position="47"/>
    </location>
</feature>
<feature type="sequence variant" id="VAR_007142" description="In ALS1; dbSNP:rs1568809175." evidence="4 64">
    <original>H</original>
    <variation>Q</variation>
    <location>
        <position position="49"/>
    </location>
</feature>
<feature type="sequence variant" id="VAR_045878" description="In ALS1; dbSNP:rs1568809172." evidence="15">
    <original>H</original>
    <variation>R</variation>
    <location>
        <position position="49"/>
    </location>
</feature>
<feature type="sequence variant" id="VAR_013526" description="In ALS1; dbSNP:rs1568809178." evidence="76">
    <original>E</original>
    <variation>K</variation>
    <location>
        <position position="50"/>
    </location>
</feature>
<feature type="sequence variant" id="VAR_045879" description="In ALS1; reduces tendency to form fibrillar aggregates; dbSNP:rs986277034." evidence="15 24">
    <original>T</original>
    <variation>R</variation>
    <location>
        <position position="55"/>
    </location>
</feature>
<feature type="sequence variant" id="VAR_013527" description="In ALS1; dbSNP:rs1568810275." evidence="10">
    <original>N</original>
    <variation>S</variation>
    <location>
        <position position="66"/>
    </location>
</feature>
<feature type="sequence variant" id="VAR_065560" description="In ALS1; dbSNP:rs1568810289." evidence="32">
    <original>L</original>
    <variation>P</variation>
    <location>
        <position position="68"/>
    </location>
</feature>
<feature type="sequence variant" id="VAR_013528" description="In ALS1; dbSNP:rs1568810289." evidence="76">
    <original>L</original>
    <variation>R</variation>
    <location>
        <position position="68"/>
    </location>
</feature>
<feature type="sequence variant" id="VAR_008718" description="In ALS1; dbSNP:rs121912455." evidence="73">
    <original>G</original>
    <variation>S</variation>
    <location>
        <position position="73"/>
    </location>
</feature>
<feature type="sequence variant" id="VAR_013529" description="In ALS1; dbSNP:rs1601157750." evidence="72">
    <original>D</original>
    <variation>Y</variation>
    <location>
        <position position="77"/>
    </location>
</feature>
<feature type="sequence variant" id="VAR_016874" description="In ALS1; sporadic form; interferes with zinc binding; dbSNP:rs121912458." evidence="11">
    <original>H</original>
    <variation>R</variation>
    <location>
        <position position="81"/>
    </location>
</feature>
<feature type="sequence variant" id="VAR_013530" description="In ALS1; dbSNP:rs1315541036." evidence="76">
    <original>L</original>
    <variation>F</variation>
    <location>
        <position position="85"/>
    </location>
</feature>
<feature type="sequence variant" id="VAR_007143" description="In ALS1; dbSNP:rs121912452." evidence="50">
    <original>L</original>
    <variation>V</variation>
    <location>
        <position position="85"/>
    </location>
</feature>
<feature type="sequence variant" id="VAR_007144" description="In ALS1; ubiquitinated by RNF19A; interferes with zinc-binding; ubiquitinated by MARCHF5; leading to the degradation of mitochondrial SOD1; dbSNP:rs121912436." evidence="4 9 25 26 27 62 63 77">
    <original>G</original>
    <variation>R</variation>
    <location>
        <position position="86"/>
    </location>
</feature>
<feature type="sequence variant" id="VAR_013531" description="In ALS1; dbSNP:rs11556620." evidence="37">
    <original>N</original>
    <variation>S</variation>
    <location>
        <position position="87"/>
    </location>
</feature>
<feature type="sequence variant" id="VAR_045880" description="In ALS1; dbSNP:rs1339283341." evidence="15 37">
    <original>V</original>
    <variation>A</variation>
    <location>
        <position position="88"/>
    </location>
</feature>
<feature type="sequence variant" id="VAR_045881" description="In ALS1; dbSNP:rs1568810660." evidence="15">
    <original>A</original>
    <variation>T</variation>
    <location>
        <position position="90"/>
    </location>
</feature>
<feature type="sequence variant" id="VAR_013532" description="In ALS1; dbSNP:rs1280042397." evidence="39">
    <original>A</original>
    <variation>V</variation>
    <location>
        <position position="90"/>
    </location>
</feature>
<feature type="sequence variant" id="VAR_007145" description="In ALS1; does not seem to be linked with a decrease in activity; dbSNP:rs80265967." evidence="24 28 47 49 72">
    <original>D</original>
    <variation>A</variation>
    <location>
        <position position="91"/>
    </location>
</feature>
<feature type="sequence variant" id="VAR_013533" description="In ALS1; dbSNP:rs80265967." evidence="78">
    <original>D</original>
    <variation>V</variation>
    <location>
        <position position="91"/>
    </location>
</feature>
<feature type="sequence variant" id="VAR_007146" description="In ALS1; increases tendency to form fibrillar aggregates; ubiquitinated by RNF19A; ubiquitinated by MARCHF5; dbSNP:rs121912438." evidence="9 24 27 62 63">
    <original>G</original>
    <variation>A</variation>
    <location>
        <position position="94"/>
    </location>
</feature>
<feature type="sequence variant" id="VAR_007147" description="In ALS1; dbSNP:rs121912437." evidence="62 63">
    <original>G</original>
    <variation>C</variation>
    <location>
        <position position="94"/>
    </location>
</feature>
<feature type="sequence variant" id="VAR_007148" description="In ALS1; dbSNP:rs121912438." evidence="24 57">
    <original>G</original>
    <variation>D</variation>
    <location>
        <position position="94"/>
    </location>
</feature>
<feature type="sequence variant" id="VAR_007149" description="In ALS1; 30% of wild-type activity; dbSNP:rs121912437." evidence="26 51 64">
    <original>G</original>
    <variation>R</variation>
    <location>
        <position position="94"/>
    </location>
</feature>
<feature type="sequence variant" id="VAR_008719" description="In ALS1; dbSNP:rs121912438." evidence="68">
    <original>G</original>
    <variation>V</variation>
    <location>
        <position position="94"/>
    </location>
</feature>
<feature type="sequence variant" id="VAR_065194" description="In ALS1; dbSNP:rs1568810690." evidence="31">
    <original>A</original>
    <variation>G</variation>
    <location>
        <position position="96"/>
    </location>
</feature>
<feature type="sequence variant" id="VAR_045882" description="In ALS1; increases tendency to form fibrillar aggregates; dbSNP:rs1555836806." evidence="15 24">
    <original>V</original>
    <variation>M</variation>
    <location>
        <position position="98"/>
    </location>
</feature>
<feature type="sequence variant" id="VAR_007150" description="In ALS1; dbSNP:rs121912439." evidence="62 63">
    <original>E</original>
    <variation>G</variation>
    <location>
        <position position="101"/>
    </location>
</feature>
<feature type="sequence variant" id="VAR_013534" description="In ALS1; dbSNP:rs76731700." evidence="28 66">
    <original>E</original>
    <variation>K</variation>
    <location>
        <position position="101"/>
    </location>
</feature>
<feature type="sequence variant" id="VAR_007151" description="In ALS1; dbSNP:rs1568810721." evidence="37 48">
    <original>D</original>
    <variation>G</variation>
    <location>
        <position position="102"/>
    </location>
</feature>
<feature type="sequence variant" id="VAR_007152" description="In ALS1; dbSNP:rs1568810715." evidence="37 54">
    <original>D</original>
    <variation>N</variation>
    <location>
        <position position="102"/>
    </location>
</feature>
<feature type="sequence variant" id="VAR_008720" description="In ALS1; dbSNP:rs121912445." evidence="46">
    <original>I</original>
    <variation>F</variation>
    <location>
        <position position="105"/>
    </location>
</feature>
<feature type="sequence variant" id="VAR_013535" description="In ALS1; dbSNP:rs1378590183." evidence="15">
    <original>S</original>
    <variation>L</variation>
    <location>
        <position position="106"/>
    </location>
</feature>
<feature type="sequence variant" id="VAR_007153" description="In ALS1; dbSNP:rs121912440." evidence="62 63">
    <original>L</original>
    <variation>V</variation>
    <location>
        <position position="107"/>
    </location>
</feature>
<feature type="sequence variant" id="VAR_013536" description="In ALS1; dbSNP:rs1359299834." evidence="36">
    <original>G</original>
    <variation>V</variation>
    <location>
        <position position="109"/>
    </location>
</feature>
<feature type="sequence variant" id="VAR_077327" description="In ALS1; dbSNP:rs1601158483." evidence="37">
    <original>C</original>
    <variation>Y</variation>
    <location>
        <position position="112"/>
    </location>
</feature>
<feature type="sequence variant" id="VAR_013537" description="In ALS1; dbSNP:rs1299542356." evidence="10">
    <original>I</original>
    <variation>M</variation>
    <location>
        <position position="113"/>
    </location>
</feature>
<feature type="sequence variant" id="VAR_007154" description="In ALS1; dbSNP:rs74315452." evidence="57 64">
    <original>I</original>
    <variation>T</variation>
    <location>
        <position position="113"/>
    </location>
</feature>
<feature type="sequence variant" id="VAR_007155" description="In ALS1; destabilizes dimeric protein structure and increases tendency to form fibrillar aggregates; dbSNP:rs121912441." evidence="4 6 17 56 59 62 63 64">
    <original>I</original>
    <variation>T</variation>
    <location>
        <position position="114"/>
    </location>
</feature>
<feature type="sequence variant" id="VAR_013538" description="In ALS1; dbSNP:rs1568810789." evidence="15">
    <original>G</original>
    <variation>A</variation>
    <location>
        <position position="115"/>
    </location>
</feature>
<feature type="sequence variant" id="VAR_007156" description="In ALS1; dbSNP:rs1301635320." evidence="55">
    <original>R</original>
    <variation>G</variation>
    <location>
        <position position="116"/>
    </location>
</feature>
<feature type="sequence variant" id="VAR_045883" description="In ALS1; dbSNP:rs1235629842." evidence="15">
    <original>V</original>
    <variation>L</variation>
    <location>
        <position position="119"/>
    </location>
</feature>
<feature type="sequence variant" id="VAR_008721" description="In ALS1.">
    <original>V</original>
    <variation>VFLQ</variation>
    <location>
        <position position="119"/>
    </location>
</feature>
<feature type="sequence variant" id="VAR_045884" description="In ALS1; dbSNP:rs1568811366." evidence="15">
    <original>D</original>
    <variation>G</variation>
    <location>
        <position position="125"/>
    </location>
</feature>
<feature type="sequence variant" id="VAR_008722" description="In ALS1; dbSNP:rs1568811366." evidence="68">
    <original>D</original>
    <variation>V</variation>
    <location>
        <position position="125"/>
    </location>
</feature>
<feature type="sequence variant" id="VAR_007157" description="In ALS1; dbSNP:rs1568811372." evidence="64">
    <original>D</original>
    <variation>H</variation>
    <location>
        <position position="126"/>
    </location>
</feature>
<feature type="sequence variant" id="VAR_013539" description="In ALS1; dbSNP:rs121912454." evidence="8">
    <original>L</original>
    <variation>S</variation>
    <location>
        <position position="127"/>
    </location>
</feature>
<feature type="sequence variant" id="VAR_008723" description="In ALS; dbSNP:rs1568811423." evidence="68">
    <location>
        <position position="134"/>
    </location>
</feature>
<feature type="sequence variant" id="VAR_007158" description="In ALS1; reduced metal binding; increases tendency to form fibrillar aggregates; dbSNP:rs121912451." evidence="12 69">
    <original>S</original>
    <variation>N</variation>
    <location>
        <position position="135"/>
    </location>
</feature>
<feature type="sequence variant" id="VAR_007159" description="In ALS1; dbSNP:rs1804449." evidence="56">
    <original>N</original>
    <variation>K</variation>
    <location>
        <position position="140"/>
    </location>
</feature>
<feature type="sequence variant" id="VAR_007160" description="In ALS1; dbSNP:rs1482760341." evidence="24 56 62">
    <original>L</original>
    <variation>F</variation>
    <location>
        <position position="145"/>
    </location>
</feature>
<feature type="sequence variant" id="VAR_008724" description="In ALS1; dbSNP:rs121912446." evidence="45">
    <original>L</original>
    <variation>S</variation>
    <location>
        <position position="145"/>
    </location>
</feature>
<feature type="sequence variant" id="VAR_008725" description="In ALS1; dbSNP:rs121912447." evidence="45">
    <original>A</original>
    <variation>T</variation>
    <location>
        <position position="146"/>
    </location>
</feature>
<feature type="sequence variant" id="VAR_013540" description="In ALS1; dbSNP:rs1568811515." evidence="66">
    <original>C</original>
    <variation>R</variation>
    <location>
        <position position="147"/>
    </location>
</feature>
<feature type="sequence variant" id="VAR_045885" description="In ALS1; dbSNP:rs1568811520." evidence="15">
    <original>G</original>
    <variation>R</variation>
    <location>
        <position position="148"/>
    </location>
</feature>
<feature type="sequence variant" id="VAR_007161" description="In ALS1; dbSNP:rs1476760624." evidence="62">
    <original>V</original>
    <variation>G</variation>
    <location>
        <position position="149"/>
    </location>
</feature>
<feature type="sequence variant" id="VAR_007162" description="In ALS1; dbSNP:rs567511139." evidence="52">
    <original>V</original>
    <variation>I</variation>
    <location>
        <position position="149"/>
    </location>
</feature>
<feature type="sequence variant" id="VAR_007163" description="In ALS1; dbSNP:rs1424014997." evidence="56 64">
    <original>I</original>
    <variation>T</variation>
    <location>
        <position position="150"/>
    </location>
</feature>
<feature type="sequence variant" id="VAR_007164" description="In ALS1; dbSNP:rs121912449." evidence="65">
    <original>I</original>
    <variation>T</variation>
    <location>
        <position position="152"/>
    </location>
</feature>
<feature type="mutagenesis site" description="Enhances formation of fibrillar aggregates in the absence of bound zinc; when associated with S-58; S-112 and S-147." evidence="21 26 33">
    <original>C</original>
    <variation>S</variation>
    <location>
        <position position="7"/>
    </location>
</feature>
<feature type="mutagenesis site" description="No palmitoylation, reduced nuclear targeting." evidence="21 26 33">
    <original>C</original>
    <variation>S</variation>
    <location>
        <position position="7"/>
    </location>
</feature>
<feature type="mutagenesis site" description="Abolishes dimerization; when associated with Q-134." evidence="3 26">
    <original>FG</original>
    <variation>EE</variation>
    <location>
        <begin position="51"/>
        <end position="52"/>
    </location>
</feature>
<feature type="mutagenesis site" description="Exhibits very slow copper acquisition." evidence="21 26 34">
    <original>C</original>
    <variation>A</variation>
    <location>
        <position position="58"/>
    </location>
</feature>
<feature type="mutagenesis site" description="Enhances formation of fibrillar aggregates in the absence of bound zinc; when associated with S-7; S-112 and S-147." evidence="21 26 34">
    <original>C</original>
    <variation>S</variation>
    <location>
        <position position="58"/>
    </location>
</feature>
<feature type="mutagenesis site" description="Loss of zinc binding and enhanced tendency to form aggregates; when associated with A-84." evidence="23 26">
    <original>H</original>
    <variation>A</variation>
    <location>
        <position position="81"/>
    </location>
</feature>
<feature type="mutagenesis site" description="Destabilization of dimer and loss of zinc binding; when associated with S-84." evidence="23 26">
    <original>H</original>
    <variation>S</variation>
    <location>
        <position position="81"/>
    </location>
</feature>
<feature type="mutagenesis site" description="Loss of zinc binding and enhanced tendency to form aggregates; when associated with A-81." evidence="23 26">
    <original>D</original>
    <variation>A</variation>
    <location>
        <position position="84"/>
    </location>
</feature>
<feature type="mutagenesis site" description="Destabilization of dimer and loss of zinc binding; when associated with S-81." evidence="23 26">
    <original>D</original>
    <variation>S</variation>
    <location>
        <position position="84"/>
    </location>
</feature>
<feature type="mutagenesis site" description="Enhances formation of fibrillar aggregates in the absence of bound zinc; when associated with S-7; S-58 and S-147." evidence="21 26">
    <original>C</original>
    <variation>S</variation>
    <location>
        <position position="112"/>
    </location>
</feature>
<feature type="mutagenesis site" description="Decreased succinylation." evidence="35">
    <original>K</original>
    <variation>A</variation>
    <location>
        <position position="123"/>
    </location>
</feature>
<feature type="mutagenesis site" description="Mimicks constitutive succinylation state; decreased activity." evidence="35">
    <original>K</original>
    <variation>E</variation>
    <location>
        <position position="123"/>
    </location>
</feature>
<feature type="mutagenesis site" description="Abolishes dimerization; when associated with E-50 and E-51." evidence="3">
    <original>E</original>
    <variation>Q</variation>
    <location>
        <position position="134"/>
    </location>
</feature>
<feature type="mutagenesis site" description="Exhibits very slow copper acquisition." evidence="21 26 34">
    <original>C</original>
    <variation>A</variation>
    <location>
        <position position="147"/>
    </location>
</feature>
<feature type="mutagenesis site" description="Enhances formation of fibrillar aggregates in the absence of bound zinc; when associated with S-7; S-58 and S-112." evidence="21 26 34">
    <original>C</original>
    <variation>S</variation>
    <location>
        <position position="147"/>
    </location>
</feature>
<feature type="sequence conflict" description="In Ref. 3; no nucleotide entry." evidence="79" ref="3">
    <original>I</original>
    <variation>S</variation>
    <location>
        <position position="18"/>
    </location>
</feature>
<feature type="sequence conflict" description="In Ref. 3; no nucleotide entry." evidence="79" ref="3">
    <original>S</original>
    <variation>V</variation>
    <location>
        <position position="99"/>
    </location>
</feature>
<feature type="strand" evidence="94">
    <location>
        <begin position="3"/>
        <end position="10"/>
    </location>
</feature>
<feature type="strand" evidence="94">
    <location>
        <begin position="12"/>
        <end position="14"/>
    </location>
</feature>
<feature type="strand" evidence="94">
    <location>
        <begin position="16"/>
        <end position="25"/>
    </location>
</feature>
<feature type="strand" evidence="88">
    <location>
        <begin position="26"/>
        <end position="28"/>
    </location>
</feature>
<feature type="strand" evidence="94">
    <location>
        <begin position="30"/>
        <end position="38"/>
    </location>
</feature>
<feature type="strand" evidence="94">
    <location>
        <begin position="41"/>
        <end position="50"/>
    </location>
</feature>
<feature type="strand" evidence="93">
    <location>
        <begin position="51"/>
        <end position="53"/>
    </location>
</feature>
<feature type="strand" evidence="96">
    <location>
        <begin position="55"/>
        <end position="57"/>
    </location>
</feature>
<feature type="helix" evidence="94">
    <location>
        <begin position="58"/>
        <end position="61"/>
    </location>
</feature>
<feature type="strand" evidence="86">
    <location>
        <begin position="63"/>
        <end position="65"/>
    </location>
</feature>
<feature type="strand" evidence="86">
    <location>
        <begin position="67"/>
        <end position="69"/>
    </location>
</feature>
<feature type="strand" evidence="88">
    <location>
        <begin position="74"/>
        <end position="76"/>
    </location>
</feature>
<feature type="strand" evidence="87">
    <location>
        <begin position="77"/>
        <end position="79"/>
    </location>
</feature>
<feature type="turn" evidence="92">
    <location>
        <begin position="80"/>
        <end position="82"/>
    </location>
</feature>
<feature type="strand" evidence="94">
    <location>
        <begin position="84"/>
        <end position="90"/>
    </location>
</feature>
<feature type="helix" evidence="89">
    <location>
        <begin position="92"/>
        <end position="94"/>
    </location>
</feature>
<feature type="strand" evidence="94">
    <location>
        <begin position="96"/>
        <end position="104"/>
    </location>
</feature>
<feature type="strand" evidence="94">
    <location>
        <begin position="106"/>
        <end position="108"/>
    </location>
</feature>
<feature type="helix" evidence="94">
    <location>
        <begin position="109"/>
        <end position="111"/>
    </location>
</feature>
<feature type="strand" evidence="97">
    <location>
        <begin position="113"/>
        <end position="115"/>
    </location>
</feature>
<feature type="strand" evidence="94">
    <location>
        <begin position="116"/>
        <end position="123"/>
    </location>
</feature>
<feature type="strand" evidence="91">
    <location>
        <begin position="127"/>
        <end position="129"/>
    </location>
</feature>
<feature type="strand" evidence="94">
    <location>
        <begin position="130"/>
        <end position="132"/>
    </location>
</feature>
<feature type="helix" evidence="94">
    <location>
        <begin position="133"/>
        <end position="136"/>
    </location>
</feature>
<feature type="strand" evidence="95">
    <location>
        <begin position="137"/>
        <end position="139"/>
    </location>
</feature>
<feature type="strand" evidence="94">
    <location>
        <begin position="143"/>
        <end position="149"/>
    </location>
</feature>
<feature type="strand" evidence="90">
    <location>
        <begin position="151"/>
        <end position="153"/>
    </location>
</feature>
<accession>P00441</accession>
<accession>A6NHJ0</accession>
<accession>D3DSE4</accession>
<accession>Q16669</accession>
<accession>Q16711</accession>
<accession>Q16838</accession>
<accession>Q16839</accession>
<accession>Q16840</accession>
<accession>Q6NR85</accession>
<proteinExistence type="evidence at protein level"/>
<gene>
    <name evidence="80" type="primary">SOD1</name>
</gene>
<organism>
    <name type="scientific">Homo sapiens</name>
    <name type="common">Human</name>
    <dbReference type="NCBI Taxonomy" id="9606"/>
    <lineage>
        <taxon>Eukaryota</taxon>
        <taxon>Metazoa</taxon>
        <taxon>Chordata</taxon>
        <taxon>Craniata</taxon>
        <taxon>Vertebrata</taxon>
        <taxon>Euteleostomi</taxon>
        <taxon>Mammalia</taxon>
        <taxon>Eutheria</taxon>
        <taxon>Euarchontoglires</taxon>
        <taxon>Primates</taxon>
        <taxon>Haplorrhini</taxon>
        <taxon>Catarrhini</taxon>
        <taxon>Hominidae</taxon>
        <taxon>Homo</taxon>
    </lineage>
</organism>
<evidence type="ECO:0000250" key="1">
    <source>
        <dbReference type="UniProtKB" id="P07632"/>
    </source>
</evidence>
<evidence type="ECO:0000250" key="2">
    <source>
        <dbReference type="UniProtKB" id="P08228"/>
    </source>
</evidence>
<evidence type="ECO:0000269" key="3">
    <source>
    </source>
</evidence>
<evidence type="ECO:0000269" key="4">
    <source>
    </source>
</evidence>
<evidence type="ECO:0000269" key="5">
    <source>
    </source>
</evidence>
<evidence type="ECO:0000269" key="6">
    <source>
    </source>
</evidence>
<evidence type="ECO:0000269" key="7">
    <source>
    </source>
</evidence>
<evidence type="ECO:0000269" key="8">
    <source>
    </source>
</evidence>
<evidence type="ECO:0000269" key="9">
    <source>
    </source>
</evidence>
<evidence type="ECO:0000269" key="10">
    <source>
    </source>
</evidence>
<evidence type="ECO:0000269" key="11">
    <source>
    </source>
</evidence>
<evidence type="ECO:0000269" key="12">
    <source>
    </source>
</evidence>
<evidence type="ECO:0000269" key="13">
    <source>
    </source>
</evidence>
<evidence type="ECO:0000269" key="14">
    <source>
    </source>
</evidence>
<evidence type="ECO:0000269" key="15">
    <source>
    </source>
</evidence>
<evidence type="ECO:0000269" key="16">
    <source>
    </source>
</evidence>
<evidence type="ECO:0000269" key="17">
    <source>
    </source>
</evidence>
<evidence type="ECO:0000269" key="18">
    <source>
    </source>
</evidence>
<evidence type="ECO:0000269" key="19">
    <source>
    </source>
</evidence>
<evidence type="ECO:0000269" key="20">
    <source>
    </source>
</evidence>
<evidence type="ECO:0000269" key="21">
    <source>
    </source>
</evidence>
<evidence type="ECO:0000269" key="22">
    <source>
    </source>
</evidence>
<evidence type="ECO:0000269" key="23">
    <source>
    </source>
</evidence>
<evidence type="ECO:0000269" key="24">
    <source>
    </source>
</evidence>
<evidence type="ECO:0000269" key="25">
    <source>
    </source>
</evidence>
<evidence type="ECO:0000269" key="26">
    <source>
    </source>
</evidence>
<evidence type="ECO:0000269" key="27">
    <source>
    </source>
</evidence>
<evidence type="ECO:0000269" key="28">
    <source>
    </source>
</evidence>
<evidence type="ECO:0000269" key="29">
    <source>
    </source>
</evidence>
<evidence type="ECO:0000269" key="30">
    <source>
    </source>
</evidence>
<evidence type="ECO:0000269" key="31">
    <source>
    </source>
</evidence>
<evidence type="ECO:0000269" key="32">
    <source>
    </source>
</evidence>
<evidence type="ECO:0000269" key="33">
    <source>
    </source>
</evidence>
<evidence type="ECO:0000269" key="34">
    <source>
    </source>
</evidence>
<evidence type="ECO:0000269" key="35">
    <source>
    </source>
</evidence>
<evidence type="ECO:0000269" key="36">
    <source>
    </source>
</evidence>
<evidence type="ECO:0000269" key="37">
    <source>
    </source>
</evidence>
<evidence type="ECO:0000269" key="38">
    <source>
    </source>
</evidence>
<evidence type="ECO:0000269" key="39">
    <source>
    </source>
</evidence>
<evidence type="ECO:0000269" key="40">
    <source>
    </source>
</evidence>
<evidence type="ECO:0000269" key="41">
    <source>
    </source>
</evidence>
<evidence type="ECO:0000269" key="42">
    <source>
    </source>
</evidence>
<evidence type="ECO:0000269" key="43">
    <source>
    </source>
</evidence>
<evidence type="ECO:0000269" key="44">
    <source>
    </source>
</evidence>
<evidence type="ECO:0000269" key="45">
    <source>
    </source>
</evidence>
<evidence type="ECO:0000269" key="46">
    <source>
    </source>
</evidence>
<evidence type="ECO:0000269" key="47">
    <source>
    </source>
</evidence>
<evidence type="ECO:0000269" key="48">
    <source>
    </source>
</evidence>
<evidence type="ECO:0000269" key="49">
    <source>
    </source>
</evidence>
<evidence type="ECO:0000269" key="50">
    <source>
    </source>
</evidence>
<evidence type="ECO:0000269" key="51">
    <source>
    </source>
</evidence>
<evidence type="ECO:0000269" key="52">
    <source>
    </source>
</evidence>
<evidence type="ECO:0000269" key="53">
    <source>
    </source>
</evidence>
<evidence type="ECO:0000269" key="54">
    <source>
    </source>
</evidence>
<evidence type="ECO:0000269" key="55">
    <source>
    </source>
</evidence>
<evidence type="ECO:0000269" key="56">
    <source>
    </source>
</evidence>
<evidence type="ECO:0000269" key="57">
    <source>
    </source>
</evidence>
<evidence type="ECO:0000269" key="58">
    <source>
    </source>
</evidence>
<evidence type="ECO:0000269" key="59">
    <source>
    </source>
</evidence>
<evidence type="ECO:0000269" key="60">
    <source>
    </source>
</evidence>
<evidence type="ECO:0000269" key="61">
    <source>
    </source>
</evidence>
<evidence type="ECO:0000269" key="62">
    <source>
    </source>
</evidence>
<evidence type="ECO:0000269" key="63">
    <source>
    </source>
</evidence>
<evidence type="ECO:0000269" key="64">
    <source>
    </source>
</evidence>
<evidence type="ECO:0000269" key="65">
    <source>
    </source>
</evidence>
<evidence type="ECO:0000269" key="66">
    <source>
    </source>
</evidence>
<evidence type="ECO:0000269" key="67">
    <source>
    </source>
</evidence>
<evidence type="ECO:0000269" key="68">
    <source>
    </source>
</evidence>
<evidence type="ECO:0000269" key="69">
    <source>
    </source>
</evidence>
<evidence type="ECO:0000269" key="70">
    <source>
    </source>
</evidence>
<evidence type="ECO:0000269" key="71">
    <source>
    </source>
</evidence>
<evidence type="ECO:0000269" key="72">
    <source>
    </source>
</evidence>
<evidence type="ECO:0000269" key="73">
    <source>
    </source>
</evidence>
<evidence type="ECO:0000269" key="74">
    <source>
    </source>
</evidence>
<evidence type="ECO:0000269" key="75">
    <source>
    </source>
</evidence>
<evidence type="ECO:0000269" key="76">
    <source>
    </source>
</evidence>
<evidence type="ECO:0000269" key="77">
    <source ref="51"/>
</evidence>
<evidence type="ECO:0000269" key="78">
    <source ref="85"/>
</evidence>
<evidence type="ECO:0000305" key="79"/>
<evidence type="ECO:0000312" key="80">
    <source>
        <dbReference type="HGNC" id="HGNC:11179"/>
    </source>
</evidence>
<evidence type="ECO:0007744" key="81">
    <source>
    </source>
</evidence>
<evidence type="ECO:0007744" key="82">
    <source>
    </source>
</evidence>
<evidence type="ECO:0007744" key="83">
    <source>
    </source>
</evidence>
<evidence type="ECO:0007744" key="84">
    <source>
    </source>
</evidence>
<evidence type="ECO:0007744" key="85">
    <source>
    </source>
</evidence>
<evidence type="ECO:0007829" key="86">
    <source>
        <dbReference type="PDB" id="1KMG"/>
    </source>
</evidence>
<evidence type="ECO:0007829" key="87">
    <source>
        <dbReference type="PDB" id="1MFM"/>
    </source>
</evidence>
<evidence type="ECO:0007829" key="88">
    <source>
        <dbReference type="PDB" id="1RK7"/>
    </source>
</evidence>
<evidence type="ECO:0007829" key="89">
    <source>
        <dbReference type="PDB" id="1SPD"/>
    </source>
</evidence>
<evidence type="ECO:0007829" key="90">
    <source>
        <dbReference type="PDB" id="2C9S"/>
    </source>
</evidence>
<evidence type="ECO:0007829" key="91">
    <source>
        <dbReference type="PDB" id="2LU5"/>
    </source>
</evidence>
<evidence type="ECO:0007829" key="92">
    <source>
        <dbReference type="PDB" id="2MP3"/>
    </source>
</evidence>
<evidence type="ECO:0007829" key="93">
    <source>
        <dbReference type="PDB" id="2NAM"/>
    </source>
</evidence>
<evidence type="ECO:0007829" key="94">
    <source>
        <dbReference type="PDB" id="4A7U"/>
    </source>
</evidence>
<evidence type="ECO:0007829" key="95">
    <source>
        <dbReference type="PDB" id="6FLH"/>
    </source>
</evidence>
<evidence type="ECO:0007829" key="96">
    <source>
        <dbReference type="PDB" id="7FB6"/>
    </source>
</evidence>
<evidence type="ECO:0007829" key="97">
    <source>
        <dbReference type="PDB" id="7VZF"/>
    </source>
</evidence>
<reference key="1">
    <citation type="journal article" date="1983" name="Proc. Natl. Acad. Sci. U.S.A.">
        <title>Nucleotide sequence and expression of human chromosome 21-encoded superoxide dismutase mRNA.</title>
        <authorList>
            <person name="Sherman L."/>
            <person name="Dafni N."/>
            <person name="Lieman-Hurwitz J."/>
            <person name="Groner Y."/>
        </authorList>
    </citation>
    <scope>NUCLEOTIDE SEQUENCE [MRNA]</scope>
</reference>
<reference key="2">
    <citation type="journal article" date="1985" name="EMBO J.">
        <title>Architecture and anatomy of the chromosomal locus in human chromosome 21 encoding the Cu/Zn superoxide dismutase.</title>
        <authorList>
            <person name="Levanon D."/>
            <person name="Lieman-Hurwitz J."/>
            <person name="Dafni N."/>
            <person name="Wigderson M."/>
            <person name="Sherman L."/>
            <person name="Bernstein Y."/>
            <person name="Laver-Rudich Z."/>
            <person name="Danciger E."/>
            <person name="Stein O."/>
            <person name="Groner Y."/>
        </authorList>
    </citation>
    <scope>NUCLEOTIDE SEQUENCE [GENOMIC DNA]</scope>
</reference>
<reference key="3">
    <citation type="journal article" date="1985" name="Nucleic Acids Res.">
        <title>Human Cu/Zn superoxide dismutase cDNA: isolation of clones synthesising high levels of active or inactive enzyme from an expression library.</title>
        <authorList>
            <person name="Hallewell R.A."/>
            <person name="Masiarz F.R."/>
            <person name="Najarian R.C."/>
            <person name="Puma J.P."/>
            <person name="Quiroga M.R."/>
            <person name="Randolph A."/>
            <person name="Sanchez-Pescador R."/>
            <person name="Scandella C.J."/>
            <person name="Smith B."/>
            <person name="Steimer K.S."/>
            <person name="Mullenbach G.T."/>
        </authorList>
    </citation>
    <scope>NUCLEOTIDE SEQUENCE [MRNA]</scope>
</reference>
<reference key="4">
    <citation type="journal article" date="1988" name="J. Biochem.">
        <title>Comparison of properties between human recombinant and placental copper-zinc SOD.</title>
        <authorList>
            <person name="Kajihara J."/>
            <person name="Enomoto M."/>
            <person name="Nishijima K."/>
            <person name="Yabuuchi M."/>
            <person name="Katoh K."/>
        </authorList>
    </citation>
    <scope>NUCLEOTIDE SEQUENCE [MRNA]</scope>
</reference>
<reference key="5">
    <citation type="submission" date="2001-07" db="EMBL/GenBank/DDBJ databases">
        <authorList>
            <person name="Xu Y."/>
            <person name="Hu X."/>
            <person name="Zhou Y."/>
            <person name="Peng X."/>
            <person name="Yuan J."/>
            <person name="Qiang B."/>
        </authorList>
    </citation>
    <scope>NUCLEOTIDE SEQUENCE [MRNA]</scope>
</reference>
<reference key="6">
    <citation type="submission" date="2003-10" db="EMBL/GenBank/DDBJ databases">
        <authorList>
            <person name="Lu X."/>
            <person name="Hui L."/>
        </authorList>
    </citation>
    <scope>NUCLEOTIDE SEQUENCE [MRNA]</scope>
</reference>
<reference key="7">
    <citation type="submission" date="2006-11" db="EMBL/GenBank/DDBJ databases">
        <title>Direct sequencing and cloning of superoxide dismutase 1 from peripheral blood.</title>
        <authorList>
            <person name="Staege M.S."/>
            <person name="Bergmann S."/>
            <person name="Heins S."/>
        </authorList>
    </citation>
    <scope>NUCLEOTIDE SEQUENCE [MRNA]</scope>
</reference>
<reference key="8">
    <citation type="journal article" date="2004" name="Nat. Genet.">
        <title>Complete sequencing and characterization of 21,243 full-length human cDNAs.</title>
        <authorList>
            <person name="Ota T."/>
            <person name="Suzuki Y."/>
            <person name="Nishikawa T."/>
            <person name="Otsuki T."/>
            <person name="Sugiyama T."/>
            <person name="Irie R."/>
            <person name="Wakamatsu A."/>
            <person name="Hayashi K."/>
            <person name="Sato H."/>
            <person name="Nagai K."/>
            <person name="Kimura K."/>
            <person name="Makita H."/>
            <person name="Sekine M."/>
            <person name="Obayashi M."/>
            <person name="Nishi T."/>
            <person name="Shibahara T."/>
            <person name="Tanaka T."/>
            <person name="Ishii S."/>
            <person name="Yamamoto J."/>
            <person name="Saito K."/>
            <person name="Kawai Y."/>
            <person name="Isono Y."/>
            <person name="Nakamura Y."/>
            <person name="Nagahari K."/>
            <person name="Murakami K."/>
            <person name="Yasuda T."/>
            <person name="Iwayanagi T."/>
            <person name="Wagatsuma M."/>
            <person name="Shiratori A."/>
            <person name="Sudo H."/>
            <person name="Hosoiri T."/>
            <person name="Kaku Y."/>
            <person name="Kodaira H."/>
            <person name="Kondo H."/>
            <person name="Sugawara M."/>
            <person name="Takahashi M."/>
            <person name="Kanda K."/>
            <person name="Yokoi T."/>
            <person name="Furuya T."/>
            <person name="Kikkawa E."/>
            <person name="Omura Y."/>
            <person name="Abe K."/>
            <person name="Kamihara K."/>
            <person name="Katsuta N."/>
            <person name="Sato K."/>
            <person name="Tanikawa M."/>
            <person name="Yamazaki M."/>
            <person name="Ninomiya K."/>
            <person name="Ishibashi T."/>
            <person name="Yamashita H."/>
            <person name="Murakawa K."/>
            <person name="Fujimori K."/>
            <person name="Tanai H."/>
            <person name="Kimata M."/>
            <person name="Watanabe M."/>
            <person name="Hiraoka S."/>
            <person name="Chiba Y."/>
            <person name="Ishida S."/>
            <person name="Ono Y."/>
            <person name="Takiguchi S."/>
            <person name="Watanabe S."/>
            <person name="Yosida M."/>
            <person name="Hotuta T."/>
            <person name="Kusano J."/>
            <person name="Kanehori K."/>
            <person name="Takahashi-Fujii A."/>
            <person name="Hara H."/>
            <person name="Tanase T.-O."/>
            <person name="Nomura Y."/>
            <person name="Togiya S."/>
            <person name="Komai F."/>
            <person name="Hara R."/>
            <person name="Takeuchi K."/>
            <person name="Arita M."/>
            <person name="Imose N."/>
            <person name="Musashino K."/>
            <person name="Yuuki H."/>
            <person name="Oshima A."/>
            <person name="Sasaki N."/>
            <person name="Aotsuka S."/>
            <person name="Yoshikawa Y."/>
            <person name="Matsunawa H."/>
            <person name="Ichihara T."/>
            <person name="Shiohata N."/>
            <person name="Sano S."/>
            <person name="Moriya S."/>
            <person name="Momiyama H."/>
            <person name="Satoh N."/>
            <person name="Takami S."/>
            <person name="Terashima Y."/>
            <person name="Suzuki O."/>
            <person name="Nakagawa S."/>
            <person name="Senoh A."/>
            <person name="Mizoguchi H."/>
            <person name="Goto Y."/>
            <person name="Shimizu F."/>
            <person name="Wakebe H."/>
            <person name="Hishigaki H."/>
            <person name="Watanabe T."/>
            <person name="Sugiyama A."/>
            <person name="Takemoto M."/>
            <person name="Kawakami B."/>
            <person name="Yamazaki M."/>
            <person name="Watanabe K."/>
            <person name="Kumagai A."/>
            <person name="Itakura S."/>
            <person name="Fukuzumi Y."/>
            <person name="Fujimori Y."/>
            <person name="Komiyama M."/>
            <person name="Tashiro H."/>
            <person name="Tanigami A."/>
            <person name="Fujiwara T."/>
            <person name="Ono T."/>
            <person name="Yamada K."/>
            <person name="Fujii Y."/>
            <person name="Ozaki K."/>
            <person name="Hirao M."/>
            <person name="Ohmori Y."/>
            <person name="Kawabata A."/>
            <person name="Hikiji T."/>
            <person name="Kobatake N."/>
            <person name="Inagaki H."/>
            <person name="Ikema Y."/>
            <person name="Okamoto S."/>
            <person name="Okitani R."/>
            <person name="Kawakami T."/>
            <person name="Noguchi S."/>
            <person name="Itoh T."/>
            <person name="Shigeta K."/>
            <person name="Senba T."/>
            <person name="Matsumura K."/>
            <person name="Nakajima Y."/>
            <person name="Mizuno T."/>
            <person name="Morinaga M."/>
            <person name="Sasaki M."/>
            <person name="Togashi T."/>
            <person name="Oyama M."/>
            <person name="Hata H."/>
            <person name="Watanabe M."/>
            <person name="Komatsu T."/>
            <person name="Mizushima-Sugano J."/>
            <person name="Satoh T."/>
            <person name="Shirai Y."/>
            <person name="Takahashi Y."/>
            <person name="Nakagawa K."/>
            <person name="Okumura K."/>
            <person name="Nagase T."/>
            <person name="Nomura N."/>
            <person name="Kikuchi H."/>
            <person name="Masuho Y."/>
            <person name="Yamashita R."/>
            <person name="Nakai K."/>
            <person name="Yada T."/>
            <person name="Nakamura Y."/>
            <person name="Ohara O."/>
            <person name="Isogai T."/>
            <person name="Sugano S."/>
        </authorList>
    </citation>
    <scope>NUCLEOTIDE SEQUENCE [LARGE SCALE MRNA]</scope>
    <source>
        <tissue>Colon</tissue>
    </source>
</reference>
<reference key="9">
    <citation type="submission" date="2004-05" db="EMBL/GenBank/DDBJ databases">
        <title>Cloning of human full open reading frames in Gateway(TM) system entry vector (pDONR201).</title>
        <authorList>
            <person name="Ebert L."/>
            <person name="Schick M."/>
            <person name="Neubert P."/>
            <person name="Schatten R."/>
            <person name="Henze S."/>
            <person name="Korn B."/>
        </authorList>
    </citation>
    <scope>NUCLEOTIDE SEQUENCE [LARGE SCALE MRNA]</scope>
</reference>
<reference key="10">
    <citation type="submission" date="2004-06" db="EMBL/GenBank/DDBJ databases">
        <title>Cloning of human full open reading frames in Gateway(TM) system entry vector (pDONR201).</title>
        <authorList>
            <person name="Halleck A."/>
            <person name="Ebert L."/>
            <person name="Mkoundinya M."/>
            <person name="Schick M."/>
            <person name="Eisenstein S."/>
            <person name="Neubert P."/>
            <person name="Kstrang K."/>
            <person name="Schatten R."/>
            <person name="Shen B."/>
            <person name="Henze S."/>
            <person name="Mar W."/>
            <person name="Korn B."/>
            <person name="Zuo D."/>
            <person name="Hu Y."/>
            <person name="LaBaer J."/>
        </authorList>
    </citation>
    <scope>NUCLEOTIDE SEQUENCE [LARGE SCALE MRNA]</scope>
</reference>
<reference key="11">
    <citation type="submission" date="2004-06" db="EMBL/GenBank/DDBJ databases">
        <title>Cloning of human full-length CDSs in BD Creator(TM) system donor vector.</title>
        <authorList>
            <person name="Kalnine N."/>
            <person name="Chen X."/>
            <person name="Rolfs A."/>
            <person name="Halleck A."/>
            <person name="Hines L."/>
            <person name="Eisenstein S."/>
            <person name="Koundinya M."/>
            <person name="Raphael J."/>
            <person name="Moreira D."/>
            <person name="Kelley T."/>
            <person name="LaBaer J."/>
            <person name="Lin Y."/>
            <person name="Phelan M."/>
            <person name="Farmer A."/>
        </authorList>
    </citation>
    <scope>NUCLEOTIDE SEQUENCE [LARGE SCALE MRNA]</scope>
</reference>
<reference key="12">
    <citation type="submission" date="2004-11" db="EMBL/GenBank/DDBJ databases">
        <authorList>
            <consortium name="NIEHS SNPs program"/>
        </authorList>
    </citation>
    <scope>NUCLEOTIDE SEQUENCE [GENOMIC DNA]</scope>
</reference>
<reference key="13">
    <citation type="journal article" date="2000" name="Nature">
        <title>The DNA sequence of human chromosome 21.</title>
        <authorList>
            <person name="Hattori M."/>
            <person name="Fujiyama A."/>
            <person name="Taylor T.D."/>
            <person name="Watanabe H."/>
            <person name="Yada T."/>
            <person name="Park H.-S."/>
            <person name="Toyoda A."/>
            <person name="Ishii K."/>
            <person name="Totoki Y."/>
            <person name="Choi D.-K."/>
            <person name="Groner Y."/>
            <person name="Soeda E."/>
            <person name="Ohki M."/>
            <person name="Takagi T."/>
            <person name="Sakaki Y."/>
            <person name="Taudien S."/>
            <person name="Blechschmidt K."/>
            <person name="Polley A."/>
            <person name="Menzel U."/>
            <person name="Delabar J."/>
            <person name="Kumpf K."/>
            <person name="Lehmann R."/>
            <person name="Patterson D."/>
            <person name="Reichwald K."/>
            <person name="Rump A."/>
            <person name="Schillhabel M."/>
            <person name="Schudy A."/>
            <person name="Zimmermann W."/>
            <person name="Rosenthal A."/>
            <person name="Kudoh J."/>
            <person name="Shibuya K."/>
            <person name="Kawasaki K."/>
            <person name="Asakawa S."/>
            <person name="Shintani A."/>
            <person name="Sasaki T."/>
            <person name="Nagamine K."/>
            <person name="Mitsuyama S."/>
            <person name="Antonarakis S.E."/>
            <person name="Minoshima S."/>
            <person name="Shimizu N."/>
            <person name="Nordsiek G."/>
            <person name="Hornischer K."/>
            <person name="Brandt P."/>
            <person name="Scharfe M."/>
            <person name="Schoen O."/>
            <person name="Desario A."/>
            <person name="Reichelt J."/>
            <person name="Kauer G."/>
            <person name="Bloecker H."/>
            <person name="Ramser J."/>
            <person name="Beck A."/>
            <person name="Klages S."/>
            <person name="Hennig S."/>
            <person name="Riesselmann L."/>
            <person name="Dagand E."/>
            <person name="Wehrmeyer S."/>
            <person name="Borzym K."/>
            <person name="Gardiner K."/>
            <person name="Nizetic D."/>
            <person name="Francis F."/>
            <person name="Lehrach H."/>
            <person name="Reinhardt R."/>
            <person name="Yaspo M.-L."/>
        </authorList>
    </citation>
    <scope>NUCLEOTIDE SEQUENCE [LARGE SCALE GENOMIC DNA]</scope>
</reference>
<reference key="14">
    <citation type="submission" date="2005-09" db="EMBL/GenBank/DDBJ databases">
        <authorList>
            <person name="Mural R.J."/>
            <person name="Istrail S."/>
            <person name="Sutton G.G."/>
            <person name="Florea L."/>
            <person name="Halpern A.L."/>
            <person name="Mobarry C.M."/>
            <person name="Lippert R."/>
            <person name="Walenz B."/>
            <person name="Shatkay H."/>
            <person name="Dew I."/>
            <person name="Miller J.R."/>
            <person name="Flanigan M.J."/>
            <person name="Edwards N.J."/>
            <person name="Bolanos R."/>
            <person name="Fasulo D."/>
            <person name="Halldorsson B.V."/>
            <person name="Hannenhalli S."/>
            <person name="Turner R."/>
            <person name="Yooseph S."/>
            <person name="Lu F."/>
            <person name="Nusskern D.R."/>
            <person name="Shue B.C."/>
            <person name="Zheng X.H."/>
            <person name="Zhong F."/>
            <person name="Delcher A.L."/>
            <person name="Huson D.H."/>
            <person name="Kravitz S.A."/>
            <person name="Mouchard L."/>
            <person name="Reinert K."/>
            <person name="Remington K.A."/>
            <person name="Clark A.G."/>
            <person name="Waterman M.S."/>
            <person name="Eichler E.E."/>
            <person name="Adams M.D."/>
            <person name="Hunkapiller M.W."/>
            <person name="Myers E.W."/>
            <person name="Venter J.C."/>
        </authorList>
    </citation>
    <scope>NUCLEOTIDE SEQUENCE [LARGE SCALE GENOMIC DNA]</scope>
</reference>
<reference key="15">
    <citation type="journal article" date="2004" name="Genome Res.">
        <title>The status, quality, and expansion of the NIH full-length cDNA project: the Mammalian Gene Collection (MGC).</title>
        <authorList>
            <consortium name="The MGC Project Team"/>
        </authorList>
    </citation>
    <scope>NUCLEOTIDE SEQUENCE [LARGE SCALE MRNA]</scope>
    <source>
        <tissue>Placenta</tissue>
    </source>
</reference>
<reference key="16">
    <citation type="journal article" date="1980" name="Biochemistry">
        <title>Some sulfhydryl properties and primary structure of human erythrocyte superoxide dismutase.</title>
        <authorList>
            <person name="Jabusch J.R."/>
            <person name="Farb D.L."/>
            <person name="Kerschensteiner D.A."/>
            <person name="Deutsch H.F."/>
        </authorList>
    </citation>
    <scope>PROTEIN SEQUENCE OF 2-154</scope>
</reference>
<reference key="17">
    <citation type="journal article" date="1980" name="FEBS Lett.">
        <title>The complete amino acid sequence of human Cu/Zn superoxide dismutase.</title>
        <authorList>
            <person name="Barra D."/>
            <person name="Martini F."/>
            <person name="Bannister J.V."/>
            <person name="Schinina M.E."/>
            <person name="Rotilio G."/>
            <person name="Bannister W.H."/>
            <person name="Bossa F."/>
        </authorList>
    </citation>
    <scope>PROTEIN SEQUENCE OF 2-154</scope>
    <scope>CLEAVAGE OF INITIATOR METHIONINE</scope>
    <scope>ACETYLATION AT ALA-2</scope>
</reference>
<reference key="18">
    <citation type="submission" date="2008-12" db="UniProtKB">
        <authorList>
            <person name="Lubec G."/>
            <person name="Chen W.-Q."/>
            <person name="Sun Y."/>
        </authorList>
    </citation>
    <scope>PROTEIN SEQUENCE OF 11-24 AND 81-116</scope>
    <source>
        <tissue>Fetal brain cortex</tissue>
    </source>
</reference>
<reference key="19">
    <citation type="journal article" date="1995" name="Hum. Mol. Genet.">
        <title>Two novel mutations in the gene for copper zinc superoxide dismutase in UK families with amyotrophic lateral sclerosis.</title>
        <authorList>
            <person name="Enayat Z.E."/>
            <person name="Orrell R.W."/>
            <person name="Claus A."/>
            <person name="Ludolph A."/>
            <person name="Bachus R."/>
            <person name="Brockmueller J."/>
            <person name="Ray-Chaudhuri K."/>
            <person name="Radunovic A."/>
            <person name="Shaw C."/>
            <person name="Wilkinson J."/>
            <person name="King A."/>
            <person name="Swash M."/>
            <person name="Leigh P.N."/>
            <person name="de Belleroche J."/>
            <person name="Powell J."/>
        </authorList>
    </citation>
    <scope>NUCLEOTIDE SEQUENCE [GENOMIC DNA] OF 25-56 AND 120-154</scope>
    <scope>VARIANTS ALS1 GLN-49; ARG-94; THR-113; THR-114; HIS-126 AND THR-150</scope>
</reference>
<reference key="20">
    <citation type="journal article" date="1996" name="Hum. Genet.">
        <title>Superoxide dismutase 1: identification of a novel mutation in a case of familial amyotrophic lateral sclerosis.</title>
        <authorList>
            <person name="Kostrzewa M."/>
            <person name="Daamian M."/>
            <person name="Mueller U."/>
        </authorList>
    </citation>
    <scope>NUCLEOTIDE SEQUENCE [GENOMIC DNA] OF 120-154</scope>
    <scope>VARIANT ALS1 THR-152</scope>
</reference>
<reference key="21">
    <citation type="journal article" date="2004" name="J. Biol. Chem.">
        <title>The unusually stable quaternary structure of human Cu,Zn-superoxide dismutase 1 is controlled by both metal occupancy and disulfide status.</title>
        <authorList>
            <person name="Arnesano F."/>
            <person name="Banci L."/>
            <person name="Bertini I."/>
            <person name="Martinelli M."/>
            <person name="Furukawa Y."/>
            <person name="O'Halloran T.V."/>
        </authorList>
    </citation>
    <scope>SUBUNIT</scope>
    <scope>DISULFIDE BOND</scope>
</reference>
<reference key="22">
    <citation type="journal article" date="2008" name="Proc. Natl. Acad. Sci. U.S.A.">
        <title>A quantitative atlas of mitotic phosphorylation.</title>
        <authorList>
            <person name="Dephoure N."/>
            <person name="Zhou C."/>
            <person name="Villen J."/>
            <person name="Beausoleil S.A."/>
            <person name="Bakalarski C.E."/>
            <person name="Elledge S.J."/>
            <person name="Gygi S.P."/>
        </authorList>
    </citation>
    <scope>PHOSPHORYLATION [LARGE SCALE ANALYSIS] AT SER-99</scope>
    <scope>IDENTIFICATION BY MASS SPECTROMETRY [LARGE SCALE ANALYSIS]</scope>
    <source>
        <tissue>Cervix carcinoma</tissue>
    </source>
</reference>
<reference key="23">
    <citation type="journal article" date="2009" name="Science">
        <title>Lysine acetylation targets protein complexes and co-regulates major cellular functions.</title>
        <authorList>
            <person name="Choudhary C."/>
            <person name="Kumar C."/>
            <person name="Gnad F."/>
            <person name="Nielsen M.L."/>
            <person name="Rehman M."/>
            <person name="Walther T.C."/>
            <person name="Olsen J.V."/>
            <person name="Mann M."/>
        </authorList>
    </citation>
    <scope>ACETYLATION [LARGE SCALE ANALYSIS] AT LYS-123</scope>
    <scope>IDENTIFICATION BY MASS SPECTROMETRY [LARGE SCALE ANALYSIS]</scope>
</reference>
<reference key="24">
    <citation type="journal article" date="2010" name="Free Radic. Biol. Med.">
        <title>A ditryptophan cross-link is responsible for the covalent dimerization of human superoxide dismutase 1 during its bicarbonate-dependent peroxidase activity.</title>
        <authorList>
            <person name="Medinas D.B."/>
            <person name="Gozzo F.C."/>
            <person name="Santos L.F."/>
            <person name="Iglesias A.H."/>
            <person name="Augusto O."/>
        </authorList>
    </citation>
    <scope>SUBUNIT</scope>
    <scope>DITRYPTOPHAN CROSS-LINK AT TRP-33</scope>
</reference>
<reference key="25">
    <citation type="journal article" date="2010" name="Sci. Signal.">
        <title>Quantitative phosphoproteomics reveals widespread full phosphorylation site occupancy during mitosis.</title>
        <authorList>
            <person name="Olsen J.V."/>
            <person name="Vermeulen M."/>
            <person name="Santamaria A."/>
            <person name="Kumar C."/>
            <person name="Miller M.L."/>
            <person name="Jensen L.J."/>
            <person name="Gnad F."/>
            <person name="Cox J."/>
            <person name="Jensen T.S."/>
            <person name="Nigg E.A."/>
            <person name="Brunak S."/>
            <person name="Mann M."/>
        </authorList>
    </citation>
    <scope>PHOSPHORYLATION [LARGE SCALE ANALYSIS] AT SER-99</scope>
    <scope>IDENTIFICATION BY MASS SPECTROMETRY [LARGE SCALE ANALYSIS]</scope>
    <source>
        <tissue>Cervix carcinoma</tissue>
    </source>
</reference>
<reference key="26">
    <citation type="journal article" date="2011" name="BMC Syst. Biol.">
        <title>Initial characterization of the human central proteome.</title>
        <authorList>
            <person name="Burkard T.R."/>
            <person name="Planyavsky M."/>
            <person name="Kaupe I."/>
            <person name="Breitwieser F.P."/>
            <person name="Buerckstuemmer T."/>
            <person name="Bennett K.L."/>
            <person name="Superti-Furga G."/>
            <person name="Colinge J."/>
        </authorList>
    </citation>
    <scope>IDENTIFICATION BY MASS SPECTROMETRY [LARGE SCALE ANALYSIS]</scope>
</reference>
<reference key="27">
    <citation type="journal article" date="2012" name="Circ. Res.">
        <title>Endothelial cell palmitoylproteomic identifies novel lipid-modified targets and potential substrates for protein acyl transferases.</title>
        <authorList>
            <person name="Marin E.P."/>
            <person name="Derakhshan B."/>
            <person name="Lam T.T."/>
            <person name="Davalos A."/>
            <person name="Sessa W.C."/>
        </authorList>
    </citation>
    <scope>PALMITOYLATION AT CYS-7</scope>
    <scope>SUBCELLULAR LOCATION</scope>
    <scope>MUTAGENESIS OF CYS-7</scope>
</reference>
<reference key="28">
    <citation type="journal article" date="2012" name="J. Proteome Res.">
        <title>Resveratrol-induced changes of the human adipocyte secretion profile.</title>
        <authorList>
            <person name="Rosenow A."/>
            <person name="Noben J.P."/>
            <person name="Jocken J."/>
            <person name="Kallendrusch S."/>
            <person name="Fischer-Posovszky P."/>
            <person name="Mariman E.C."/>
            <person name="Renes J."/>
        </authorList>
    </citation>
    <scope>IDENTIFICATION BY MASS SPECTROMETRY [LARGE SCALE ANALYSIS]</scope>
</reference>
<reference key="29">
    <citation type="journal article" date="2013" name="Biochem. Biophys. Res. Commun.">
        <title>SIRT5 desuccinylates and activates SOD1 to eliminate ROS.</title>
        <authorList>
            <person name="Lin Z.F."/>
            <person name="Xu H.B."/>
            <person name="Wang J.Y."/>
            <person name="Lin Q."/>
            <person name="Ruan Z."/>
            <person name="Liu F.B."/>
            <person name="Jin W."/>
            <person name="Huang H.H."/>
            <person name="Chen X."/>
        </authorList>
    </citation>
    <scope>SUCCINYLATION AT LYS-123</scope>
    <scope>DESUCCINYLATION BY SIRT5</scope>
    <scope>MUTAGENESIS OF LYS-123</scope>
    <scope>CATALYTIC ACTIVITY</scope>
    <scope>FUNCTION</scope>
</reference>
<reference key="30">
    <citation type="journal article" date="2013" name="ChemBioChem">
        <title>Mechanistic aspects of hSOD1 maturation from the solution structure of Cu(I) -loaded hCCS domain 1 and analysis of disulfide-free hSOD1 mutants.</title>
        <authorList>
            <person name="Banci L."/>
            <person name="Cantini F."/>
            <person name="Kozyreva T."/>
            <person name="Rubino J.T."/>
        </authorList>
    </citation>
    <scope>MUTAGENESIS OF CYS-58 AND CYS-147</scope>
</reference>
<reference key="31">
    <citation type="journal article" date="2014" name="J. Proteomics">
        <title>An enzyme assisted RP-RPLC approach for in-depth analysis of human liver phosphoproteome.</title>
        <authorList>
            <person name="Bian Y."/>
            <person name="Song C."/>
            <person name="Cheng K."/>
            <person name="Dong M."/>
            <person name="Wang F."/>
            <person name="Huang J."/>
            <person name="Sun D."/>
            <person name="Wang L."/>
            <person name="Ye M."/>
            <person name="Zou H."/>
        </authorList>
    </citation>
    <scope>PHOSPHORYLATION [LARGE SCALE ANALYSIS] AT SER-99 AND SER-103</scope>
    <scope>IDENTIFICATION BY MASS SPECTROMETRY [LARGE SCALE ANALYSIS]</scope>
    <source>
        <tissue>Liver</tissue>
    </source>
</reference>
<reference key="32">
    <citation type="journal article" date="2015" name="Proteomics">
        <title>N-terminome analysis of the human mitochondrial proteome.</title>
        <authorList>
            <person name="Vaca Jacome A.S."/>
            <person name="Rabilloud T."/>
            <person name="Schaeffer-Reiss C."/>
            <person name="Rompais M."/>
            <person name="Ayoub D."/>
            <person name="Lane L."/>
            <person name="Bairoch A."/>
            <person name="Van Dorsselaer A."/>
            <person name="Carapito C."/>
        </authorList>
    </citation>
    <scope>ACETYLATION [LARGE SCALE ANALYSIS] AT ALA-2</scope>
    <scope>CLEAVAGE OF INITIATOR METHIONINE [LARGE SCALE ANALYSIS]</scope>
    <scope>IDENTIFICATION BY MASS SPECTROMETRY [LARGE SCALE ANALYSIS]</scope>
</reference>
<reference key="33">
    <citation type="journal article" date="2018" name="Free Radic. Res.">
        <title>pLG72 induces superoxide radicals via interaction and aggregation with SOD1.</title>
        <authorList>
            <person name="Wang M."/>
            <person name="Saw H.P."/>
            <person name="Cui F.F."/>
            <person name="Lin S.Y."/>
            <person name="Chang H.T."/>
            <person name="Chiu C.D."/>
        </authorList>
    </citation>
    <scope>INTERACTION WITH DAOA</scope>
</reference>
<reference key="34">
    <citation type="journal article" date="2019" name="BioMetals">
        <title>Copper-zinc superoxide dismutase (Sod1) activation terminates interaction between its copper chaperone (Ccs) and the cytosolic metal-binding domain of the copper importer Ctr1.</title>
        <authorList>
            <person name="Skopp A."/>
            <person name="Boyd S.D."/>
            <person name="Ullrich M.S."/>
            <person name="Liu L."/>
            <person name="Winkler D.D."/>
        </authorList>
    </citation>
    <scope>INTERACTION WITH CCS</scope>
    <scope>SUBUNIT</scope>
</reference>
<reference key="35">
    <citation type="journal article" date="2019" name="Brain">
        <title>SOD1 deficiency: a novel syndrome distinct from amyotrophic lateral sclerosis.</title>
        <authorList>
            <person name="Park J.H."/>
            <person name="Elpers C."/>
            <person name="Reunert J."/>
            <person name="McCormick M.L."/>
            <person name="Mohr J."/>
            <person name="Biskup S."/>
            <person name="Schwartz O."/>
            <person name="Rust S."/>
            <person name="Grueneberg M."/>
            <person name="Seelhoefer A."/>
            <person name="Schara U."/>
            <person name="Boltshauser E."/>
            <person name="Spitz D.R."/>
            <person name="Marquardt T."/>
        </authorList>
    </citation>
    <scope>INVOLVEMENT IN STAHP</scope>
</reference>
<reference key="36">
    <citation type="journal article" date="2019" name="N. Engl. J. Med.">
        <title>Phenotype in an Infant with SOD1 Homozygous Truncating Mutation.</title>
        <authorList>
            <person name="Andersen P.M."/>
            <person name="Nordstroem U."/>
            <person name="Tsiakas K."/>
            <person name="Johannsen J."/>
            <person name="Volk A.E."/>
            <person name="Bierhals T."/>
            <person name="Zetterstroem P."/>
            <person name="Marklund S.L."/>
            <person name="Hempel M."/>
            <person name="Santer R."/>
        </authorList>
    </citation>
    <scope>INVOLVEMENT IN STAHP</scope>
</reference>
<reference key="37">
    <citation type="journal article" date="1992" name="Proc. Natl. Acad. Sci. U.S.A.">
        <title>Atomic structures of wild-type and thermostable mutant recombinant human Cu,Zn superoxide dismutase.</title>
        <authorList>
            <person name="Parge H.E."/>
            <person name="Hallewell R.A."/>
            <person name="Tainer J.A."/>
        </authorList>
    </citation>
    <scope>X-RAY CRYSTALLOGRAPHY (2.5 ANGSTROMS)</scope>
</reference>
<reference key="38">
    <citation type="journal article" date="1998" name="Protein Sci.">
        <title>Subunit asymmetry in the three-dimensional structure of a human CuZnSOD mutant found in familial amyotrophic lateral sclerosis.</title>
        <authorList>
            <person name="Hart P.J."/>
            <person name="Liu H."/>
            <person name="Pellegrini M."/>
            <person name="Nersissian A.M."/>
            <person name="Gralla E.B."/>
            <person name="Valentine J.S."/>
            <person name="Eisenberg D."/>
        </authorList>
    </citation>
    <scope>X-RAY CRYSTALLOGRAPHY (1.9 ANGSTROMS) OF VARIANT ALS1 ARG-38</scope>
</reference>
<reference key="39">
    <citation type="journal article" date="1998" name="Biochemistry">
        <title>Solution structure of reduced monomeric Q133M2 copper, zinc superoxide dismutase (SOD). Why is SOD a dimeric enzyme?</title>
        <authorList>
            <person name="Banci L."/>
            <person name="Benedetto M."/>
            <person name="Bertini I."/>
            <person name="del Conte R."/>
            <person name="Piccioli M."/>
            <person name="Viezzoli M.S."/>
        </authorList>
    </citation>
    <scope>STRUCTURE BY NMR</scope>
</reference>
<reference key="40">
    <citation type="journal article" date="1999" name="J. Mol. Biol.">
        <title>The crystal structure of the monomeric human SOD mutant F50E/G51E/E133Q at atomic resolution. The enzyme mechanism revisited.</title>
        <authorList>
            <person name="Ferraroni M."/>
            <person name="Rypniewski W."/>
            <person name="Wilson K.S."/>
            <person name="Viezzoli M.S."/>
            <person name="Banci L."/>
            <person name="Bertini I."/>
            <person name="Mangani S."/>
        </authorList>
    </citation>
    <scope>X-RAY CRYSTALLOGRAPHY (1.02 ANGSTROMS) OF MUTANT GLU-51/GLU-52/GLN-134</scope>
    <scope>SUBUNIT</scope>
    <scope>MUTAGENESIS OF 51-PHE-GLY-52 AND GLU-134</scope>
</reference>
<reference key="41">
    <citation type="journal article" date="2003" name="Biochemistry">
        <title>Solution structure of Apo Cu,Zn superoxide dismutase: role of metal ions in protein folding.</title>
        <authorList>
            <person name="Banci L."/>
            <person name="Bertini I."/>
            <person name="Cramaro F."/>
            <person name="Del Conte R."/>
            <person name="Viezzoli M.S."/>
        </authorList>
    </citation>
    <scope>STRUCTURE BY NMR OF MUTANT GLU51/GLU-52/GLN-134</scope>
    <scope>SUBUNIT</scope>
</reference>
<reference key="42">
    <citation type="journal article" date="2003" name="J. Mol. Biol.">
        <title>ALS mutants of human superoxide dismutase form fibrous aggregates via framework destabilization.</title>
        <authorList>
            <person name="DiDonato M."/>
            <person name="Craig L."/>
            <person name="Huff M.E."/>
            <person name="Thayer M.M."/>
            <person name="Cardoso R.M."/>
            <person name="Kassmann C.J."/>
            <person name="Lo T.P."/>
            <person name="Bruns C.K."/>
            <person name="Powers E.T."/>
            <person name="Kelly J.W."/>
            <person name="Getzoff E.D."/>
            <person name="Tainer J.A."/>
        </authorList>
    </citation>
    <scope>X-RAY CRYSTALLOGRAPHY (1.7 ANGSTROMS) IN COMPLEX WITH COPPER AND ZINC IONS</scope>
    <scope>DISULFIDE BOND</scope>
    <scope>SUBUNIT</scope>
    <scope>CHARACTERIZATION OF VARIANTS ALS1 VAL-5 AND ARG-44</scope>
</reference>
<reference key="43">
    <citation type="journal article" date="2003" name="Nat. Struct. Biol.">
        <title>Amyloid-like filaments and water-filled nanotubes formed by SOD1 mutant proteins linked to familial ALS.</title>
        <authorList>
            <person name="Elam J.S."/>
            <person name="Taylor A.B."/>
            <person name="Strange R."/>
            <person name="Antonyuk S."/>
            <person name="Doucette P.A."/>
            <person name="Rodriguez J.A."/>
            <person name="Hasnain S.S."/>
            <person name="Hayward L.J."/>
            <person name="Valentine J.S."/>
            <person name="Yeates T.O."/>
            <person name="Hart P.J."/>
        </authorList>
    </citation>
    <scope>X-RAY CRYSTALLOGRAPHY (1.3 ANGSTROMS) OF VARIANTS ALS1 ASN-135 AND ARG-47</scope>
    <scope>FORMATION OF FIBRILLAR AGGREGATES</scope>
</reference>
<reference key="44">
    <citation type="journal article" date="2004" name="Proc. Natl. Acad. Sci. U.S.A.">
        <title>Dimer destabilization in superoxide dismutase may result in disease-causing properties: structures of motor neuron disease mutants.</title>
        <authorList>
            <person name="Hough M.A."/>
            <person name="Grossmann J.G."/>
            <person name="Antonyuk S.V."/>
            <person name="Strange R.W."/>
            <person name="Doucette P.A."/>
            <person name="Rodriguez J.A."/>
            <person name="Whitson L.J."/>
            <person name="Hart P.J."/>
            <person name="Hayward L.J."/>
            <person name="Valentine J.S."/>
            <person name="Hasnain S.S."/>
        </authorList>
    </citation>
    <scope>X-RAY CRYSTALLOGRAPHY (1.6 ANGSTROMS) OF VARIANTS ALS1 VAL-5 AND THR-114</scope>
    <scope>CHARACTERIZATION OF VARIANTS ALS1 VAL-5 AND THR-114</scope>
</reference>
<reference key="45">
    <citation type="journal article" date="2006" name="J. Biol. Chem.">
        <title>Human SOD1 before harboring the catalytic metal: solution structure of copper-depleted, disulfide-reduced form.</title>
        <authorList>
            <person name="Banci L."/>
            <person name="Bertini I."/>
            <person name="Cantini F."/>
            <person name="D'Amelio N."/>
            <person name="Gaggelli E."/>
        </authorList>
    </citation>
    <scope>STRUCTURE BY NMR OF MUTANT ALA-7/SER-112</scope>
    <scope>SUBUNIT</scope>
</reference>
<reference key="46">
    <citation type="journal article" date="2006" name="J. Mol. Biol.">
        <title>Variable metallation of human superoxide dismutase: atomic resolution crystal structures of Cu-Zn, Zn-Zn and as-isolated wild-type enzymes.</title>
        <authorList>
            <person name="Strange R.W."/>
            <person name="Antonyuk S.V."/>
            <person name="Hough M.A."/>
            <person name="Doucette P.A."/>
            <person name="Valentine J.S."/>
            <person name="Hasnain S.S."/>
        </authorList>
    </citation>
    <scope>X-RAY CRYSTALLOGRAPHY (1.07 ANGSTROMS) IN COMPLEXES WITH COPPER AND ZINC IONS</scope>
    <scope>DISULFIDE BOND</scope>
    <scope>SUBUNIT</scope>
</reference>
<reference key="47">
    <citation type="journal article" date="2007" name="J. Mol. Biol.">
        <title>The coupling between disulphide status, metallation and dimer interface strength in Cu/Zn superoxide dismutase.</title>
        <authorList>
            <person name="Hoernberg A."/>
            <person name="Logan D.T."/>
            <person name="Marklund S.L."/>
            <person name="Oliveberg M."/>
        </authorList>
    </citation>
    <scope>X-RAY CRYSTALLOGRAPHY (1.7 ANGSTROMS) OF MUTANTS ALA-7/ALA-112 AND ALA-7/ALA-58/ALA-112/ALA-147</scope>
    <scope>MUTAGENESIS OF CYS-7; CYS-58; CYS-112 AND CYS-147</scope>
</reference>
<reference key="48">
    <citation type="journal article" date="2007" name="J. Mol. Biol.">
        <title>Structural characterization of zinc-deficient human superoxide dismutase and implications for ALS.</title>
        <authorList>
            <person name="Roberts B.R."/>
            <person name="Tainer J.A."/>
            <person name="Getzoff E.D."/>
            <person name="Malencik D.A."/>
            <person name="Anderson S.R."/>
            <person name="Bomben V.C."/>
            <person name="Meyers K.R."/>
            <person name="Karplus P.A."/>
            <person name="Beckman J.S."/>
        </authorList>
    </citation>
    <scope>X-RAY CRYSTALLOGRAPHY (2.0 ANGSTROMS) OF MUTANT SER-81/SER-84 IN COMPLEX WITH COPPER IONS</scope>
    <scope>SUBUNIT</scope>
    <scope>MUTAGENESIS OF HIS-81 AND ASP-84</scope>
    <scope>COFACTOR</scope>
</reference>
<reference key="49">
    <citation type="journal article" date="2007" name="Proc. Natl. Acad. Sci. U.S.A.">
        <title>Molecular dynamics using atomic-resolution structure reveal structural fluctuations that may lead to polymerization of human Cu-Zn superoxide dismutase.</title>
        <authorList>
            <person name="Strange R.W."/>
            <person name="Yong C.W."/>
            <person name="Smith W."/>
            <person name="Hasnain S.S."/>
        </authorList>
    </citation>
    <scope>X-RAY CRYSTALLOGRAPHY (1.15 ANGSTROMS) IN COMPLEX WITH COPPER AND ZINC IONS</scope>
    <scope>SUBUNIT</scope>
    <scope>FORMATION OF FIBRILLAR AGGREGATES BY ZINC-DEPLETED SOD1</scope>
</reference>
<reference key="50">
    <citation type="journal article" date="2008" name="J. Biol. Chem.">
        <title>Structures of the G85R variant of SOD1 in familial amyotrophic lateral sclerosis.</title>
        <authorList>
            <person name="Cao X."/>
            <person name="Antonyuk S.V."/>
            <person name="Seetharaman S.V."/>
            <person name="Whitson L.J."/>
            <person name="Taylor A.B."/>
            <person name="Holloway S.P."/>
            <person name="Strange R.W."/>
            <person name="Doucette P.A."/>
            <person name="Valentine J.S."/>
            <person name="Tiwari A."/>
            <person name="Hayward L.J."/>
            <person name="Padua S."/>
            <person name="Cohlberg J.A."/>
            <person name="Hasnain S.S."/>
            <person name="Hart P.J."/>
        </authorList>
    </citation>
    <scope>X-RAY CRYSTALLOGRAPHY (1.3 ANGSTROMS) OF VARIANT ALS1 ARG-86</scope>
    <scope>CHARACTERIZATION OF VARIANT ALS1 ARG-86</scope>
</reference>
<reference key="51">
    <citation type="submission" date="2008-04" db="PDB data bank">
        <title>Crystal structure of human Cu-Zn superoxide dismutase mutant G85R (P21).</title>
        <authorList>
            <consortium name="RIKEN structural genomics initiative (RSGI)"/>
        </authorList>
    </citation>
    <scope>X-RAY CRYSTALLOGRAPHY (1.9 ANGSTROMS) OF VARIANT ALS1 ARG-86</scope>
</reference>
<reference key="52">
    <citation type="journal article" date="1995" name="J. Med. Genet.">
        <title>Familial amyotrophic lateral sclerosis/motor neurone disease (FALS): a review of current developments.</title>
        <authorList>
            <person name="de Belleroche J."/>
            <person name="Orrell R."/>
            <person name="King A."/>
        </authorList>
    </citation>
    <scope>REVIEW ON VARIANTS</scope>
</reference>
<reference key="53">
    <citation type="journal article" date="2010" name="Arch. Biochem. Biophys.">
        <title>Structures of mouse SOD1 and human/mouse SOD1 chimeras.</title>
        <authorList>
            <person name="Seetharaman S.V."/>
            <person name="Taylor A.B."/>
            <person name="Holloway S."/>
            <person name="Hart P.J."/>
        </authorList>
    </citation>
    <scope>X-RAY CRYSTALLOGRAPHY (2.20 ANGSTROMS) OF 2-154 IN COMPLEX WITH ZINC</scope>
</reference>
<reference key="54">
    <citation type="journal article" date="1993" name="Nature">
        <title>Mutations in Cu/Zn superoxide dismutase gene are associated with familial amyotrophic lateral sclerosis.</title>
        <authorList>
            <person name="Rosen D.R."/>
            <person name="Siddique T."/>
            <person name="Patterson D."/>
            <person name="Figlewicz D.A."/>
            <person name="Sapp P."/>
            <person name="Hentati A."/>
            <person name="Donaldson D."/>
            <person name="Goto J."/>
            <person name="O'Regan J.P."/>
            <person name="Deng H.-X."/>
            <person name="Rahmani Z."/>
            <person name="Krizus A."/>
            <person name="McKenna-Yasek D."/>
            <person name="Cayabyab A."/>
            <person name="Gaston S.M."/>
            <person name="Berger R."/>
            <person name="Tanzi R.E."/>
            <person name="Halperin J.J."/>
            <person name="Herzfeldt B."/>
            <person name="van den Bergh R."/>
            <person name="Hung W.-Y."/>
            <person name="Bird T."/>
            <person name="Deng G."/>
            <person name="Mulder D.W."/>
            <person name="Smyth C."/>
            <person name="Laing N.G."/>
            <person name="Soriano E."/>
            <person name="Pericak-Vance M.A."/>
            <person name="Haines J."/>
            <person name="Rouleau G.A."/>
            <person name="Gusella J.S."/>
            <person name="Horvitz H.R."/>
            <person name="Brown R.H. Jr."/>
        </authorList>
    </citation>
    <scope>VARIANTS ALS1 ARG-38; VAL-39; ASP-42; SER-42; ARG-44; ARG-86; ALA-94; CYS-94; GLY-101; VAL-107 AND THR-114</scope>
</reference>
<reference key="55">
    <citation type="journal article" date="1993" name="Nature">
        <authorList>
            <person name="Rosen D.R."/>
        </authorList>
    </citation>
    <scope>ERRATUM OF PUBMED:8446170</scope>
</reference>
<reference key="56">
    <citation type="journal article" date="1993" name="Science">
        <title>Amyotrophic lateral sclerosis and structural defects in Cu,Zn superoxide dismutase.</title>
        <authorList>
            <person name="Deng H.-X."/>
            <person name="Hentati A."/>
            <person name="Tainer J.A."/>
            <person name="Iqbal Z."/>
            <person name="Cayabyab A."/>
            <person name="Hung W.-Y."/>
            <person name="Getzoff E.D."/>
            <person name="Hu P."/>
            <person name="Herzfeldt B."/>
            <person name="Roos R.P."/>
            <person name="Warner C."/>
            <person name="Deng G."/>
            <person name="Soriano E."/>
            <person name="Smyth C."/>
            <person name="Parge H.E."/>
            <person name="Ahmed A."/>
            <person name="Roses A.D."/>
            <person name="Hallewell R.A."/>
            <person name="Pericak-Vance M.A."/>
            <person name="Siddique T."/>
        </authorList>
    </citation>
    <scope>VARIANTS ALS1 VAL-5; ARG-38; VAL-39; ASP-42; SER-42; ARG-44; ARG-86; ALA-94; CYS-94; GLY-101; VAL-107; THR-114; PHE-145 AND GLY-149</scope>
</reference>
<reference key="57">
    <citation type="journal article" date="1994" name="Biochem. Biophys. Res. Commun.">
        <title>A novel mutation in Cu/Zn superoxide dismutase gene in Japanese familial amyotrophic lateral sclerosis.</title>
        <authorList>
            <person name="Nakano R."/>
            <person name="Sato S."/>
            <person name="Inuzuka T."/>
            <person name="Sakimura K."/>
            <person name="Mishina M."/>
            <person name="Takahashi H."/>
            <person name="Ikuta F."/>
            <person name="Honma Y."/>
            <person name="Fujii J."/>
            <person name="Taniguchi N."/>
            <person name="Tsuji S."/>
        </authorList>
    </citation>
    <scope>VARIANT ALS1 THR-5</scope>
</reference>
<reference key="58">
    <citation type="journal article" date="1994" name="Biochem. Biophys. Res. Commun.">
        <title>A new variant Cu/Zn superoxide dismutase (Val7--&gt;Glu) deduced from lymphocyte mRNA sequences from Japanese patients with familial amyotrophic lateral sclerosis.</title>
        <authorList>
            <person name="Hirano M."/>
            <person name="Fujii J."/>
            <person name="Nagai Y."/>
            <person name="Sonobe M."/>
            <person name="Okamoto K."/>
            <person name="Araki H."/>
            <person name="Taniguchi N."/>
            <person name="Ueno S."/>
        </authorList>
    </citation>
    <scope>VARIANT ALS1 GLU-8</scope>
</reference>
<reference key="59">
    <citation type="journal article" date="1994" name="Hum. Mol. Genet.">
        <title>Identification of a novel SOD1 mutation in an apparently sporadic amyotrophic lateral sclerosis patient and the detection of Ile113Thr in three others.</title>
        <authorList>
            <person name="Jones C.T."/>
            <person name="Swinger R.J."/>
            <person name="Brock D.J.H."/>
        </authorList>
    </citation>
    <scope>VARIANT ALS1 LYS-22</scope>
</reference>
<reference key="60">
    <citation type="journal article" date="1994" name="Hum. Mol. Genet.">
        <title>Identification of two novel mutations and a new polymorphism in the gene for Cu/Zn superoxide dismutase in patients with amyotrophic lateral sclerosis.</title>
        <authorList>
            <person name="Esteban J."/>
            <person name="Rosen D.R."/>
            <person name="Bowling A.C."/>
            <person name="Sapp P."/>
            <person name="McKenna-Yasek D."/>
            <person name="O'Regan J.P."/>
            <person name="Beal M.F."/>
            <person name="Horvitz H.R."/>
            <person name="Brown R.H. Jr."/>
        </authorList>
    </citation>
    <scope>VARIANTS ALS1 ASP-94 AND THR-113</scope>
</reference>
<reference key="61">
    <citation type="journal article" date="1994" name="Hum. Mol. Genet.">
        <title>Autosomal dominant amyotrophic lateral sclerosis: a novel mutation in the Cu/Zn superoxide dismutase-1 gene.</title>
        <authorList>
            <person name="Kostrzewa M."/>
            <person name="Burck-Lehmann U."/>
            <person name="Mueller U."/>
        </authorList>
    </citation>
    <scope>VARIANT ALS1 GLY-116</scope>
</reference>
<reference key="62">
    <citation type="journal article" date="1994" name="J. Neurol. Sci.">
        <title>Familial amyotrophic lateral sclerosis (ALS) in Japan associated with H46R mutation in Cu/Zn superoxide dismutase gene: a possible new subtype of familial ALS.</title>
        <authorList>
            <person name="Aoki M."/>
            <person name="Ogasawara M."/>
            <person name="Matsubara Y."/>
            <person name="Narisawa K."/>
            <person name="Nakamura S."/>
            <person name="Itoyama Y."/>
            <person name="Abe K."/>
        </authorList>
    </citation>
    <scope>VARIANT ALS1 ARG-47</scope>
</reference>
<reference key="63">
    <citation type="journal article" date="1994" name="Lancet">
        <title>'Sporadic' motoneuron disease due to familial SOD1 mutation with low penetrance.</title>
        <authorList>
            <person name="Suthers G."/>
            <person name="Laing N."/>
            <person name="Wilton S."/>
            <person name="Dorosz S."/>
            <person name="Waddy H."/>
        </authorList>
    </citation>
    <scope>VARIANT ALS1 THR-114</scope>
</reference>
<reference key="64">
    <citation type="journal article" date="1994" name="Mol. Cell. Probes">
        <title>Identification of a novel exon 4 SOD1 mutation in a sporadic amyotrophic lateral sclerosis patient.</title>
        <authorList>
            <person name="Jones C.T."/>
            <person name="Shaw P.J."/>
            <person name="Chari G."/>
            <person name="Brock D.J."/>
        </authorList>
    </citation>
    <scope>VARIANT ALS1 ASN-102</scope>
</reference>
<reference key="65">
    <citation type="journal article" date="1995" name="Am. J. Hum. Genet.">
        <title>Identification of new mutations in the Cu/Zn superoxide dismutase gene of patients with familial amyotrophic lateral sclerosis.</title>
        <authorList>
            <person name="Pramatarova A."/>
            <person name="Figlewicz D.A."/>
            <person name="Krizus A."/>
            <person name="Han F.Y."/>
            <person name="Ceballos-Picot I."/>
            <person name="Nicole A."/>
            <person name="Dib M."/>
            <person name="Meininger V."/>
            <person name="Brown R.H. Jr."/>
            <person name="Rouleau G.A."/>
        </authorList>
    </citation>
    <scope>VARIANTS ALS1 VAL-5; ARG-38; THR-114; LYS-140; PHE-145 AND THR-150</scope>
</reference>
<reference key="66">
    <citation type="journal article" date="1995" name="Hum. Mol. Genet.">
        <title>A novel point mutation in the Cu/Zn superoxide dismutase gene in a patient with familial amyotrophic lateral sclerosis.</title>
        <authorList>
            <person name="Ikeda M."/>
            <person name="Abe K."/>
            <person name="Aoki M."/>
            <person name="Ogasawara M."/>
            <person name="Kameya T."/>
            <person name="Watanabe M."/>
            <person name="Shoji M."/>
            <person name="Hirai S."/>
            <person name="Itoyama Y."/>
        </authorList>
    </citation>
    <scope>VARIANT ALS1 ILE-149</scope>
</reference>
<reference key="67">
    <citation type="journal article" date="1995" name="Hum. Mol. Genet.">
        <title>An improved protocol for the analysis of SOD1 gene mutations, and a new mutation in exon 4.</title>
        <authorList>
            <person name="Yulug I.G."/>
            <person name="Katsanis N."/>
            <person name="de Belleroche J."/>
            <person name="Collinge J."/>
            <person name="Fisher E.M.C."/>
        </authorList>
    </citation>
    <scope>VARIANT ALS1 GLY-102</scope>
</reference>
<reference key="68">
    <citation type="journal article" date="1995" name="Hum. Mol. Genet.">
        <title>The D90A mutation results in a polymorphism of Cu,Zn superoxide dismutase that is prevalent in northern Sweden and Finland.</title>
        <authorList>
            <person name="Sjaelander A."/>
            <person name="Beckman G."/>
            <person name="Deng H.-X."/>
            <person name="Iqbal Z."/>
            <person name="Tainer J.A."/>
            <person name="Siddique T."/>
        </authorList>
    </citation>
    <scope>VARIANT ALS1 ALA-91</scope>
</reference>
<reference key="69">
    <citation type="journal article" date="1995" name="Hum. Mol. Genet.">
        <title>Two novel SOD1 mutations in patients with familial amyotrophic lateral sclerosis.</title>
        <authorList>
            <person name="Deng H.-X."/>
            <person name="Tainer J.A."/>
            <person name="Mitsumoto H."/>
            <person name="Ohnishi A."/>
            <person name="He X."/>
            <person name="Hung W.-Y."/>
            <person name="Zhao Y."/>
            <person name="Juneja T."/>
            <person name="Hentati A."/>
            <person name="Siddique T."/>
        </authorList>
    </citation>
    <scope>VARIANTS ALS1 MET-15 AND VAL-85</scope>
</reference>
<reference key="70">
    <citation type="journal article" date="1995" name="Nature">
        <title>A novel SOD mutant and ALS.</title>
        <authorList>
            <person name="Orrell R."/>
            <person name="de Belleroche J."/>
            <person name="Marklund S."/>
            <person name="Bowe F."/>
            <person name="Hallewell R."/>
        </authorList>
    </citation>
    <scope>VARIANT ALS1 ARG-94</scope>
</reference>
<reference key="71">
    <citation type="journal article" date="1995" name="Nat. Genet.">
        <title>Amyotrophic lateral sclerosis associated with homozygosity for an Asp90Ala mutation in CuZn-superoxide dismutase.</title>
        <authorList>
            <person name="Andersen P.M."/>
            <person name="Nilsson P."/>
            <person name="Ala-Hurula V."/>
            <person name="Keraenen M.-L."/>
            <person name="Tarvainen I."/>
            <person name="Haltia T."/>
            <person name="Nilsson L."/>
            <person name="Binzer M."/>
            <person name="Forsgren L."/>
            <person name="Marklund S.L."/>
        </authorList>
    </citation>
    <scope>VARIANT ALS1 ALA-91</scope>
</reference>
<reference key="72">
    <citation type="journal article" date="1995" name="Neurology">
        <title>Variable clinical symptoms in familial amyotrophic lateral sclerosis with a novel point mutation in the Cu/Zn superoxide dismutase gene.</title>
        <authorList>
            <person name="Ikeda M."/>
            <person name="Abe K."/>
            <person name="Aoki M."/>
            <person name="Sahara M."/>
            <person name="Watanabe M."/>
            <person name="Shoji M."/>
            <person name="St George-Hyslop P.H."/>
            <person name="Hirai S."/>
            <person name="Itoyama Y."/>
        </authorList>
    </citation>
    <scope>VARIANT ALS1 PHE-105</scope>
</reference>
<reference key="73">
    <citation type="journal article" date="1995" name="Neuromuscul. Disord.">
        <title>Identification of three novel mutations in the gene for Cu/Zn superoxide dismutase in patients with familial amyotrophic lateral sclerosis.</title>
        <authorList>
            <person name="Sapp P.C."/>
            <person name="Rosen D.R."/>
            <person name="Hosler B.A."/>
            <person name="Esteban J."/>
            <person name="McKenna-Yasek D."/>
            <person name="O'Regan J.P."/>
            <person name="Horvitz H.R."/>
            <person name="Brown R.H. Jr."/>
        </authorList>
    </citation>
    <scope>VARIANTS ALS1 SER-145; THR-146 AND PHE-LEU-GLN-119 INS</scope>
</reference>
<reference key="74">
    <citation type="journal article" date="1996" name="Hum. Mol. Genet.">
        <title>Genetics of amyotrophic lateral sclerosis.</title>
        <authorList>
            <person name="Siddique T."/>
            <person name="Deng H.X."/>
        </authorList>
    </citation>
    <scope>VARIANTS ALS1 LYS-101 AND ARG-147</scope>
</reference>
<reference key="75">
    <citation type="journal article" date="1996" name="Neuromuscul. Disord.">
        <title>Three novel mutations and two variants in the gene for Cu/Zn superoxide dismutase in familial amyotrophic lateral sclerosis.</title>
        <authorList>
            <person name="Hosler B.A."/>
            <person name="Nicholson G.A."/>
            <person name="Sapp P.C."/>
            <person name="Chin W."/>
            <person name="Orrell R.W."/>
            <person name="de Belleroche J.S."/>
            <person name="Esteban J."/>
            <person name="Hayward L.J."/>
            <person name="Mckenna-Yasek D."/>
            <person name="Yeung L."/>
            <person name="Cherryson A.K."/>
            <person name="Dench J.E."/>
            <person name="Wilton S.D."/>
            <person name="Laing N.G."/>
            <person name="Horvitz R.H."/>
            <person name="Brown R.H. Jr."/>
        </authorList>
    </citation>
    <scope>VARIANTS ALS1 VAL-94; VAL-125 AND GLU-134 DEL</scope>
</reference>
<reference key="76">
    <citation type="journal article" date="1996" name="Neurosci. Lett.">
        <title>A novel two-base mutation in the Cu/Zn superoxide dismutase gene associated with familial amyotrophic lateral sclerosis in Japan.</title>
        <authorList>
            <person name="Morita M."/>
            <person name="Aoki M."/>
            <person name="Abe K."/>
            <person name="Hasegawa T."/>
            <person name="Sakuma R."/>
            <person name="Onodera Y."/>
            <person name="Ichikawa N."/>
            <person name="Nishizawa M."/>
            <person name="Itoyama Y."/>
        </authorList>
    </citation>
    <scope>VARIANT ALS1 PHE-7</scope>
</reference>
<reference key="77">
    <citation type="journal article" date="1997" name="Brain">
        <title>Phenotypic heterogeneity in motor neuron disease patients with CuZn-superoxide dismutase mutations in Scandinavia.</title>
        <authorList>
            <person name="Andersen P.M."/>
            <person name="Nilsson P."/>
            <person name="Keraenen M.L."/>
            <person name="Forsgren L."/>
            <person name="Haegglund J."/>
            <person name="Karlsborg M."/>
            <person name="Ronnevi L.O."/>
            <person name="Gredal O."/>
            <person name="Marklund S.L."/>
        </authorList>
    </citation>
    <scope>VARIANTS ALS1 VAL-5; GLY-15; TYR-77 AND ALA-91</scope>
</reference>
<reference key="78">
    <citation type="journal article" date="1997" name="Eur. J. Neurol.">
        <title>A novel mutation of SOD-1 (Gly 108 Val) in familial amyotrophic lateral sclerosis.</title>
        <authorList>
            <person name="Orrell R.W."/>
            <person name="Habgood J.J."/>
            <person name="Shepherd D.I."/>
            <person name="Donnai D."/>
            <person name="de Belleroche J."/>
        </authorList>
    </citation>
    <scope>VARIANT ALS1 VAL-109</scope>
</reference>
<reference key="79">
    <citation type="journal article" date="1997" name="Hum. Mutat.">
        <title>A novel missense point mutation (S134N) of the Cu/Zn superoxide dismutase gene in a patient with familial motor neuron disease.</title>
        <authorList>
            <person name="Watanabe M."/>
            <person name="Aoki M."/>
            <person name="Abe K."/>
            <person name="Shoji M."/>
            <person name="Lizuka T."/>
            <person name="Ikeda Y."/>
            <person name="Hirai S."/>
            <person name="Kurokawa K."/>
            <person name="Kato T."/>
            <person name="Sasaki H."/>
            <person name="Itoyama Y."/>
        </authorList>
    </citation>
    <scope>VARIANT ALS1 ASN-135</scope>
</reference>
<reference key="80">
    <citation type="journal article" date="1997" name="Hum. Mutat.">
        <title>Novel G16S (GGC-AGC) mutation in the SOD-1 gene in a patient with apparently sporadic young-onset amyotrophic lateral sclerosis.</title>
        <authorList>
            <person name="Kawamata J."/>
            <person name="Shimohama S."/>
            <person name="Takano S."/>
            <person name="Harada K."/>
            <person name="Ueda K."/>
            <person name="Kimura J."/>
        </authorList>
    </citation>
    <scope>VARIANT ALS1 SER-17</scope>
</reference>
<reference key="81">
    <citation type="journal article" date="1997" name="J. Neurol. Sci.">
        <title>Familial ALS is associated with mutations in all exons of SOD1: a novel mutation in exon 3 (Gly72Ser).</title>
        <authorList>
            <person name="Orrell R.W."/>
            <person name="Marklund S.L."/>
            <person name="deBelleroche J.S."/>
        </authorList>
    </citation>
    <scope>VARIANT ALS1 SER-73</scope>
</reference>
<reference key="82">
    <citation type="journal article" date="1997" name="Neurogenetics">
        <title>A missense mutation in the SOD1 gene in patients with amyotrophic lateral sclerosis from the Kii Peninsula and its vicinity, Japan.</title>
        <authorList>
            <person name="Kikugawa K."/>
            <person name="Nakano R."/>
            <person name="Inuzuka T."/>
            <person name="Kokubo Y."/>
            <person name="Narita Y."/>
            <person name="Kuzuhara S."/>
            <person name="Yoshida S."/>
            <person name="Tsuji S."/>
        </authorList>
    </citation>
    <scope>VARIANT ALS1 THR-114</scope>
</reference>
<reference key="83">
    <citation type="journal article" date="1997" name="Neuromuscul. Disord.">
        <title>A novel SOD1 mutation in an Austrian family with amyotrophic lateral sclerosis.</title>
        <authorList>
            <person name="Bereznai B."/>
            <person name="Winkler A."/>
            <person name="Borasio G.D."/>
            <person name="Gasser T."/>
        </authorList>
    </citation>
    <scope>VARIANT ALS1 GLN-9</scope>
</reference>
<reference key="84">
    <citation type="journal article" date="1998" name="Can. J. Neurol. Sci.">
        <title>Identification of six novel SOD1 gene mutations in familial amyotrophic lateral sclerosis.</title>
        <authorList>
            <person name="Boukaftane Y."/>
            <person name="Khoris J."/>
            <person name="Moulard B."/>
            <person name="Salachas F."/>
            <person name="Meininger V."/>
            <person name="Malafosse A."/>
            <person name="Camu W."/>
            <person name="Rouleau G.A."/>
        </authorList>
    </citation>
    <scope>VARIANTS ALS1 GLY-22; ARG-39; LYS-50; ARG-68 AND PHE-85</scope>
</reference>
<reference key="85">
    <citation type="journal article" date="1998" name="Eur. J. Neurol.">
        <title>A novel mutation Asp90Val in the SOD1 gene associated with Japanese familial ALS.</title>
        <authorList>
            <person name="Morita M."/>
            <person name="Abe K."/>
            <person name="Takahashi M."/>
            <person name="Onodera Y."/>
            <person name="Okumura H."/>
            <person name="Niino M."/>
            <person name="Tashiro K."/>
            <person name="Nakano I."/>
            <person name="Itoyama Y."/>
        </authorList>
    </citation>
    <scope>VARIANT ALS1 VAL-91</scope>
</reference>
<reference key="86">
    <citation type="journal article" date="1998" name="J. Neurosci. Methods">
        <title>Simple and defined method to detect the SOD-1 mutants from patients with familial amyotrophic lateral sclerosis by mass spectrometry.</title>
        <authorList>
            <person name="Nakanishi T."/>
            <person name="Kishikawa M."/>
            <person name="Miyazaki A."/>
            <person name="Shimizu A."/>
            <person name="Ogawa Y."/>
            <person name="Sakoda S."/>
            <person name="Ohi T."/>
            <person name="Shoji H."/>
        </authorList>
    </citation>
    <scope>VARIANT ALS1 SER-5</scope>
</reference>
<reference key="87">
    <citation type="journal article" date="1999" name="Hum. Mol. Genet.">
        <title>Variation in the biochemical/biophysical properties of mutant superoxide dismutase 1 enzymes and the rate of disease progression in familial amyotrophic lateral sclerosis kindreds.</title>
        <authorList>
            <person name="Ratovitski T."/>
            <person name="Corson L.B."/>
            <person name="Strain J."/>
            <person name="Wong P."/>
            <person name="Cleveland D.W."/>
            <person name="Culotta V.C."/>
            <person name="Borchelt D.R."/>
        </authorList>
    </citation>
    <scope>CHARACTERIZATION OF VARIANTS ALS1 VAL-5; ARG-38; ARG-47; GLN-49; ARG-86 AND THR-114</scope>
</reference>
<reference key="88">
    <citation type="journal article" date="1999" name="Neurology">
        <title>A SOD1 gene mutation in a patient with slowly progressing familial ALS.</title>
        <authorList>
            <person name="Penco S."/>
            <person name="Schenone A."/>
            <person name="Bordo D."/>
            <person name="Bolognesi M."/>
            <person name="Abbruzzese M."/>
            <person name="Bugiani O."/>
            <person name="Ajmar F."/>
            <person name="Garre C."/>
        </authorList>
    </citation>
    <scope>VARIANT ALS1 ARG-13</scope>
</reference>
<reference key="89">
    <citation type="journal article" date="2001" name="Neurology">
        <authorList>
            <person name="Penco S."/>
            <person name="Schenone A."/>
            <person name="Bordo D."/>
            <person name="Bolognesi M."/>
            <person name="Abbruzzese M."/>
            <person name="Bugiani O."/>
            <person name="Ajmar F."/>
            <person name="Garre C."/>
        </authorList>
    </citation>
    <scope>ERRATUM OF PUBMED:10430435</scope>
</reference>
<reference key="90">
    <citation type="journal article" date="2001" name="J. Neurol. Sci.">
        <title>A novel SOD1 gene mutation in familial ALS with low penetrance in females.</title>
        <authorList>
            <person name="Murakami T."/>
            <person name="Warita H."/>
            <person name="Hayashi T."/>
            <person name="Sato K."/>
            <person name="Manabe Y."/>
            <person name="Mizuno S."/>
            <person name="Yamane K."/>
            <person name="Abe K."/>
        </authorList>
    </citation>
    <scope>VARIANT ALS1 SER-127</scope>
</reference>
<reference key="91">
    <citation type="journal article" date="2001" name="Neuromuscul. Disord.">
        <title>Superoxide dismutase gene mutations in Italian patients with familial and sporadic amyotrophic lateral sclerosis: identification of three novel missense mutations.</title>
        <authorList>
            <person name="Gellera C."/>
            <person name="Castellotti B."/>
            <person name="Riggio M.C."/>
            <person name="Silani V."/>
            <person name="Morandi L."/>
            <person name="Testa D."/>
            <person name="Casali C."/>
            <person name="Taroni F."/>
            <person name="Di Donato S."/>
            <person name="Zeviani M."/>
            <person name="Mariotti C."/>
        </authorList>
    </citation>
    <scope>VARIANT ALS1 CYS-46</scope>
</reference>
<reference key="92">
    <citation type="journal article" date="2002" name="Ann. Neurol.">
        <title>'True' sporadic ALS associated with a novel SOD-1 mutation.</title>
        <authorList>
            <person name="Alexander M.D."/>
            <person name="Traynor B.J."/>
            <person name="Miller N."/>
            <person name="Corr B."/>
            <person name="Frost E."/>
            <person name="McQuaid S."/>
            <person name="Brett F.M."/>
            <person name="Green A."/>
            <person name="Hardiman O."/>
        </authorList>
    </citation>
    <scope>VARIANT ALS1 ARG-81</scope>
</reference>
<reference key="93">
    <citation type="journal article" date="2002" name="J. Biol. Chem.">
        <title>Dorfin ubiquitylates mutant SOD1 and prevents mutant SOD1-mediated neurotoxicity.</title>
        <authorList>
            <person name="Niwa J."/>
            <person name="Ishigaki S."/>
            <person name="Hishikawa N."/>
            <person name="Yamamoto M."/>
            <person name="Doyu M."/>
            <person name="Murata S."/>
            <person name="Tanaka K."/>
            <person name="Taniguchi N."/>
            <person name="Sobue G."/>
        </authorList>
    </citation>
    <scope>CHARACTERIZATION OF VARIANTS ALS1 ARG-38; ARG-47; ARG-86 AND ALA-94</scope>
    <scope>INTERACTION WITH RNF19A</scope>
    <scope>UBIQUITINATION</scope>
</reference>
<reference key="94">
    <citation type="journal article" date="2002" name="Muscle Nerve">
        <title>Molecular analysis of the superoxide dismutase 1 gene in Spanish patients with sporadic or familial amyotrophic lateral sclerosis.</title>
        <authorList>
            <person name="Garcia-Redondo A."/>
            <person name="Bustos F."/>
            <person name="Juan Y Seva B."/>
            <person name="Del Hoyo P."/>
            <person name="Jimenez S."/>
            <person name="Campos Y."/>
            <person name="Martin M.A."/>
            <person name="Rubio J.C."/>
            <person name="Canadillas F."/>
            <person name="Arenas J."/>
            <person name="Esteban J."/>
        </authorList>
    </citation>
    <scope>VARIANTS ALS1 ARG-38; SER-66 AND MET-113</scope>
</reference>
<reference key="95">
    <citation type="journal article" date="2003" name="Amyotroph. Lateral Scler.">
        <title>Sixteen novel mutations in the Cu/Zn superoxide dismutase gene in amyotrophic lateral sclerosis: a decade of discoveries, defects and disputes.</title>
        <authorList>
            <person name="Andersen P.M."/>
            <person name="Sims K.B."/>
            <person name="Xin W.W."/>
            <person name="Kiely R."/>
            <person name="O'Neill G."/>
            <person name="Ravits J."/>
            <person name="Pioro E."/>
            <person name="Harati Y."/>
            <person name="Brower R.D."/>
            <person name="Levine J.S."/>
            <person name="Heinicke H.U."/>
            <person name="Seltzer W."/>
            <person name="Boss M."/>
            <person name="Brown R.H. Jr."/>
        </authorList>
    </citation>
    <scope>VARIANTS ALS1 VAL-9; CYS-21; LEU-23; ARG-49; ARG-55; ALA-88; THR-90; MET-98; LEU-106; ALA-115; LEU-119; GLY-125 AND ARG-148</scope>
</reference>
<reference key="96">
    <citation type="journal article" date="2008" name="J. Biol. Chem.">
        <title>Complete loss of post-translational modifications triggers fibrillar aggregation of SOD1 in the familial form of amyotrophic lateral sclerosis.</title>
        <authorList>
            <person name="Furukawa Y."/>
            <person name="Kaneko K."/>
            <person name="Yamanaka K."/>
            <person name="O'Halloran T.V."/>
            <person name="Nukina N."/>
        </authorList>
    </citation>
    <scope>CHARACTERIZATION OF VARIANTS ALS1 ARG-38; ARG-86 AND ARG-94</scope>
    <scope>MUTAGENESIS OF CYS-7; 51-PHE-GLY-52; CYS-58; HIS-81; ASP-84; CYS-112 AND CYS-147</scope>
    <scope>IDENTIFICATION BY MASS SPECTROMETRY</scope>
</reference>
<reference key="97">
    <citation type="journal article" date="2008" name="PLoS ONE">
        <title>SOD1 and amyotrophic lateral sclerosis: mutations and oligomerization.</title>
        <authorList>
            <person name="Banci L."/>
            <person name="Bertini I."/>
            <person name="Boca M."/>
            <person name="Girotto S."/>
            <person name="Martinelli M."/>
            <person name="Valentine J.S."/>
            <person name="Vieru M."/>
        </authorList>
    </citation>
    <scope>CHARACTERIZATION OF VARIANTS ALS1 ARG-55; ALA-91; ALA-94; ASP-94; MET-98 AND PHE-145</scope>
</reference>
<reference key="98">
    <citation type="journal article" date="2009" name="Mol. Biol. Cell">
        <title>Mitochondrial ubiquitin ligase MITOL ubiquitinates mutant SOD1 and attenuates mutant SOD1-induced reactive oxygen species generation.</title>
        <authorList>
            <person name="Yonashiro R."/>
            <person name="Sugiura A."/>
            <person name="Miyachi M."/>
            <person name="Fukuda T."/>
            <person name="Matsushita N."/>
            <person name="Inatome R."/>
            <person name="Ogata Y."/>
            <person name="Suzuki T."/>
            <person name="Dohmae N."/>
            <person name="Yanagi S."/>
        </authorList>
    </citation>
    <scope>CHARACTERIZATION OF VARIANTS ALS1 ARG-86 AND ALA-94</scope>
    <scope>UBIQUITINATION BY MARCH5</scope>
    <scope>SUBCELLULAR LOCATION</scope>
</reference>
<reference key="99">
    <citation type="journal article" date="2010" name="J. Neurol. Neurosurg. Psych.">
        <title>Four familial ALS pedigrees discordant for two SOD1 mutations: are all SOD1 mutations pathogenic?</title>
        <authorList>
            <person name="Felbecker A."/>
            <person name="Camu W."/>
            <person name="Valdmanis P.N."/>
            <person name="Sperfeld A.D."/>
            <person name="Waibel S."/>
            <person name="Steinbach P."/>
            <person name="Rouleau G.A."/>
            <person name="Ludolph A.C."/>
            <person name="Andersen P.M."/>
        </authorList>
    </citation>
    <scope>VARIANTS ALS1 ALA-91 AND LYS-101</scope>
</reference>
<reference key="100">
    <citation type="journal article" date="2011" name="Amyotroph. Lateral Scler.">
        <title>A novel L67P SOD1 mutation in an Italian ALS patient.</title>
        <authorList>
            <person name="del Grande A."/>
            <person name="Luigetti M."/>
            <person name="Conte A."/>
            <person name="Mancuso I."/>
            <person name="Lattante S."/>
            <person name="Marangi G."/>
            <person name="Stipa G."/>
            <person name="Zollino M."/>
            <person name="Sabatelli M."/>
        </authorList>
    </citation>
    <scope>VARIANT ALS1 PRO-68</scope>
</reference>
<reference key="101">
    <citation type="journal article" date="2011" name="Arch. Neurol.">
        <title>Large proportion of amyotrophic lateral sclerosis cases in Sardinia due to a single founder mutation of the TARDBP gene.</title>
        <authorList>
            <person name="Chio A."/>
            <person name="Borghero G."/>
            <person name="Pugliatti M."/>
            <person name="Ticca A."/>
            <person name="Calvo A."/>
            <person name="Moglia C."/>
            <person name="Mutani R."/>
            <person name="Brunetti M."/>
            <person name="Ossola I."/>
            <person name="Marrosu M.G."/>
            <person name="Murru M.R."/>
            <person name="Floris G."/>
            <person name="Cannas A."/>
            <person name="Parish L.D."/>
            <person name="Cossu P."/>
            <person name="Abramzon Y."/>
            <person name="Johnson J.O."/>
            <person name="Nalls M.A."/>
            <person name="Arepalli S."/>
            <person name="Chong S."/>
            <person name="Hernandez D.G."/>
            <person name="Traynor B.J."/>
            <person name="Restagno G."/>
        </authorList>
    </citation>
    <scope>VARIANT ALS1 GLY-96</scope>
</reference>
<reference key="102">
    <citation type="journal article" date="2016" name="Sci. Rep.">
        <title>Screening of SOD1, FUS and TARDBP genes in patients with amyotrophic lateral sclerosis in central-southern China.</title>
        <authorList>
            <person name="Hou L."/>
            <person name="Jiao B."/>
            <person name="Xiao T."/>
            <person name="Zhou L."/>
            <person name="Zhou Z."/>
            <person name="Du J."/>
            <person name="Yan X."/>
            <person name="Wang J."/>
            <person name="Tang B."/>
            <person name="Shen L."/>
        </authorList>
    </citation>
    <scope>VARIANTS ALS1 SER-87; ALA-88; ASN-102; GLY-102 AND TYR-112</scope>
</reference>
<reference key="103">
    <citation type="journal article" date="2019" name="Neurol. Genet.">
        <title>Oligogenic basis of sporadic ALS: The example of SOD1 p.Ala90Val mutation.</title>
        <authorList>
            <person name="Kuuluvainen L."/>
            <person name="Kaivola K."/>
            <person name="Moenkaere S."/>
            <person name="Laaksovirta H."/>
            <person name="Jokela M."/>
            <person name="Udd B."/>
            <person name="Valori M."/>
            <person name="Pasanen P."/>
            <person name="Paetau A."/>
            <person name="Traynor B.J."/>
            <person name="Stone D.J."/>
            <person name="Schleutker J."/>
            <person name="Poeyhoenen M."/>
            <person name="Tienari P.J."/>
            <person name="Myllykangas L."/>
        </authorList>
    </citation>
    <scope>VARIANT ALS1 VAL-90</scope>
</reference>
<protein>
    <recommendedName>
        <fullName evidence="79">Superoxide dismutase [Cu-Zn]</fullName>
        <ecNumber evidence="35">1.15.1.1</ecNumber>
    </recommendedName>
    <alternativeName>
        <fullName>Superoxide dismutase 1</fullName>
        <shortName>hSod1</shortName>
    </alternativeName>
</protein>
<name>SODC_HUMAN</name>
<sequence length="154" mass="15936">MATKAVCVLKGDGPVQGIINFEQKESNGPVKVWGSIKGLTEGLHGFHVHEFGDNTAGCTSAGPHFNPLSRKHGGPKDEERHVGDLGNVTADKDGVADVSIEDSVISLSGDHCIIGRTLVVHEKADDLGKGGNEESTKTGNAGSRLACGVIGIAQ</sequence>
<comment type="function">
    <text evidence="35">Destroys radicals which are normally produced within the cells and which are toxic to biological systems.</text>
</comment>
<comment type="catalytic activity">
    <reaction evidence="35">
        <text>2 superoxide + 2 H(+) = H2O2 + O2</text>
        <dbReference type="Rhea" id="RHEA:20696"/>
        <dbReference type="ChEBI" id="CHEBI:15378"/>
        <dbReference type="ChEBI" id="CHEBI:15379"/>
        <dbReference type="ChEBI" id="CHEBI:16240"/>
        <dbReference type="ChEBI" id="CHEBI:18421"/>
        <dbReference type="EC" id="1.15.1.1"/>
    </reaction>
</comment>
<comment type="cofactor">
    <cofactor evidence="23">
        <name>Cu cation</name>
        <dbReference type="ChEBI" id="CHEBI:23378"/>
    </cofactor>
    <text evidence="23">Binds 1 copper ion per subunit.</text>
</comment>
<comment type="cofactor">
    <cofactor evidence="23">
        <name>Zn(2+)</name>
        <dbReference type="ChEBI" id="CHEBI:29105"/>
    </cofactor>
    <text evidence="23">Binds 1 zinc ion per subunit.</text>
</comment>
<comment type="subunit">
    <text evidence="2 3 13 14 18 19 20 22 23 29 30 38 40">Homodimer; non-disulfide-linked (By similarity). Homodimerization may take place via the ditryptophan cross-link at Trp-33. Heterodimer with SOD1 (PubMed:31292775). The heterodimer CCS:SOD1 interacts with SLC31A1; this heterotrimer is Cu(1+)-mediated and its maintenance is regulated through SOD1 activation (PubMed:31292775). Interacts with DAOA; the interaction is direct (PubMed:30037290).</text>
</comment>
<comment type="interaction">
    <interactant intactId="EBI-990792">
        <id>P00441</id>
    </interactant>
    <interactant intactId="EBI-2556915">
        <id>P13928</id>
        <label>ANXA8</label>
    </interactant>
    <organismsDiffer>false</organismsDiffer>
    <experiments>3</experiments>
</comment>
<comment type="interaction">
    <interactant intactId="EBI-990792">
        <id>P00441</id>
    </interactant>
    <interactant intactId="EBI-11529439">
        <id>P63010-2</id>
        <label>AP2B1</label>
    </interactant>
    <organismsDiffer>false</organismsDiffer>
    <experiments>3</experiments>
</comment>
<comment type="interaction">
    <interactant intactId="EBI-990792">
        <id>P00441</id>
    </interactant>
    <interactant intactId="EBI-10186132">
        <id>Q0P5N6</id>
        <label>ARL16</label>
    </interactant>
    <organismsDiffer>false</organismsDiffer>
    <experiments>3</experiments>
</comment>
<comment type="interaction">
    <interactant intactId="EBI-990792">
        <id>P00441</id>
    </interactant>
    <interactant intactId="EBI-519866">
        <id>Q16611</id>
        <label>BAK1</label>
    </interactant>
    <organismsDiffer>false</organismsDiffer>
    <experiments>3</experiments>
</comment>
<comment type="interaction">
    <interactant intactId="EBI-990792">
        <id>P00441</id>
    </interactant>
    <interactant intactId="EBI-77694">
        <id>P10415</id>
        <label>BCL2</label>
    </interactant>
    <organismsDiffer>false</organismsDiffer>
    <experiments>3</experiments>
</comment>
<comment type="interaction">
    <interactant intactId="EBI-990792">
        <id>P00441</id>
    </interactant>
    <interactant intactId="EBI-747430">
        <id>Q9BXK5</id>
        <label>BCL2L13</label>
    </interactant>
    <organismsDiffer>false</organismsDiffer>
    <experiments>2</experiments>
</comment>
<comment type="interaction">
    <interactant intactId="EBI-990792">
        <id>P00441</id>
    </interactant>
    <interactant intactId="EBI-10697767">
        <id>Q5SZD1</id>
        <label>C6orf141</label>
    </interactant>
    <organismsDiffer>false</organismsDiffer>
    <experiments>3</experiments>
</comment>
<comment type="interaction">
    <interactant intactId="EBI-990792">
        <id>P00441</id>
    </interactant>
    <interactant intactId="EBI-6677628">
        <id>P02748</id>
        <label>C9</label>
    </interactant>
    <organismsDiffer>false</organismsDiffer>
    <experiments>3</experiments>
</comment>
<comment type="interaction">
    <interactant intactId="EBI-990792">
        <id>P00441</id>
    </interactant>
    <interactant intactId="EBI-25850646">
        <id>Q8N5S9-2</id>
        <label>CAMKK1</label>
    </interactant>
    <organismsDiffer>false</organismsDiffer>
    <experiments>3</experiments>
</comment>
<comment type="interaction">
    <interactant intactId="EBI-990792">
        <id>P00441</id>
    </interactant>
    <interactant intactId="EBI-744027">
        <id>Q13191</id>
        <label>CBLB</label>
    </interactant>
    <organismsDiffer>false</organismsDiffer>
    <experiments>3</experiments>
</comment>
<comment type="interaction">
    <interactant intactId="EBI-990792">
        <id>P00441</id>
    </interactant>
    <interactant intactId="EBI-11668690">
        <id>O14618</id>
        <label>CCS</label>
    </interactant>
    <organismsDiffer>false</organismsDiffer>
    <experiments>7</experiments>
</comment>
<comment type="interaction">
    <interactant intactId="EBI-990792">
        <id>P00441</id>
    </interactant>
    <interactant intactId="EBI-750444">
        <id>P53672</id>
        <label>CRYBA2</label>
    </interactant>
    <organismsDiffer>false</organismsDiffer>
    <experiments>3</experiments>
</comment>
<comment type="interaction">
    <interactant intactId="EBI-990792">
        <id>P00441</id>
    </interactant>
    <interactant intactId="EBI-9087876">
        <id>P48730-2</id>
        <label>CSNK1D</label>
    </interactant>
    <organismsDiffer>false</organismsDiffer>
    <experiments>3</experiments>
</comment>
<comment type="interaction">
    <interactant intactId="EBI-990792">
        <id>P00441</id>
    </interactant>
    <interactant intactId="EBI-1171238">
        <id>P98082</id>
        <label>DAB2</label>
    </interactant>
    <organismsDiffer>false</organismsDiffer>
    <experiments>3</experiments>
</comment>
<comment type="interaction">
    <interactant intactId="EBI-990792">
        <id>P00441</id>
    </interactant>
    <interactant intactId="EBI-8568003">
        <id>Q8TCX1</id>
        <label>DYNC2LI1</label>
    </interactant>
    <organismsDiffer>false</organismsDiffer>
    <experiments>3</experiments>
</comment>
<comment type="interaction">
    <interactant intactId="EBI-990792">
        <id>P00441</id>
    </interactant>
    <interactant intactId="EBI-358607">
        <id>P29692</id>
        <label>EEF1D</label>
    </interactant>
    <organismsDiffer>false</organismsDiffer>
    <experiments>3</experiments>
</comment>
<comment type="interaction">
    <interactant intactId="EBI-990792">
        <id>P00441</id>
    </interactant>
    <interactant intactId="EBI-9246952">
        <id>Q8TC29</id>
        <label>ENKUR</label>
    </interactant>
    <organismsDiffer>false</organismsDiffer>
    <experiments>3</experiments>
</comment>
<comment type="interaction">
    <interactant intactId="EBI-990792">
        <id>P00441</id>
    </interactant>
    <interactant intactId="EBI-9640259">
        <id>P02671-2</id>
        <label>FGA</label>
    </interactant>
    <organismsDiffer>false</organismsDiffer>
    <experiments>3</experiments>
</comment>
<comment type="interaction">
    <interactant intactId="EBI-990792">
        <id>P00441</id>
    </interactant>
    <interactant intactId="EBI-16467458">
        <id>Q8WW76</id>
        <label>FGA</label>
    </interactant>
    <organismsDiffer>false</organismsDiffer>
    <experiments>3</experiments>
</comment>
<comment type="interaction">
    <interactant intactId="EBI-990792">
        <id>P00441</id>
    </interactant>
    <interactant intactId="EBI-23893155">
        <id>F2Z2M7</id>
        <label>GALNT10</label>
    </interactant>
    <organismsDiffer>false</organismsDiffer>
    <experiments>3</experiments>
</comment>
<comment type="interaction">
    <interactant intactId="EBI-990792">
        <id>P00441</id>
    </interactant>
    <interactant intactId="EBI-354056">
        <id>P04406</id>
        <label>GAPDH</label>
    </interactant>
    <organismsDiffer>false</organismsDiffer>
    <experiments>3</experiments>
</comment>
<comment type="interaction">
    <interactant intactId="EBI-990792">
        <id>P00441</id>
    </interactant>
    <interactant intactId="EBI-356942">
        <id>P62879</id>
        <label>GNB2</label>
    </interactant>
    <organismsDiffer>false</organismsDiffer>
    <experiments>3</experiments>
</comment>
<comment type="interaction">
    <interactant intactId="EBI-990792">
        <id>P00441</id>
    </interactant>
    <interactant intactId="EBI-347538">
        <id>Q9Y4H4</id>
        <label>GPSM3</label>
    </interactant>
    <organismsDiffer>false</organismsDiffer>
    <experiments>3</experiments>
</comment>
<comment type="interaction">
    <interactant intactId="EBI-990792">
        <id>P00441</id>
    </interactant>
    <interactant intactId="EBI-25845242">
        <id>Q8WVV9-3</id>
        <label>HNRNPLL</label>
    </interactant>
    <organismsDiffer>false</organismsDiffer>
    <experiments>3</experiments>
</comment>
<comment type="interaction">
    <interactant intactId="EBI-990792">
        <id>P00441</id>
    </interactant>
    <interactant intactId="EBI-3923226">
        <id>P09017</id>
        <label>HOXC4</label>
    </interactant>
    <organismsDiffer>false</organismsDiffer>
    <experiments>3</experiments>
</comment>
<comment type="interaction">
    <interactant intactId="EBI-990792">
        <id>P00441</id>
    </interactant>
    <interactant intactId="EBI-12823003">
        <id>P80217-2</id>
        <label>IFI35</label>
    </interactant>
    <organismsDiffer>false</organismsDiffer>
    <experiments>3</experiments>
</comment>
<comment type="interaction">
    <interactant intactId="EBI-990792">
        <id>P00441</id>
    </interactant>
    <interactant intactId="EBI-21911304">
        <id>Q6DN90-2</id>
        <label>IQSEC1</label>
    </interactant>
    <organismsDiffer>false</organismsDiffer>
    <experiments>3</experiments>
</comment>
<comment type="interaction">
    <interactant intactId="EBI-990792">
        <id>P00441</id>
    </interactant>
    <interactant intactId="EBI-2127319">
        <id>O14713</id>
        <label>ITGB1BP1</label>
    </interactant>
    <organismsDiffer>false</organismsDiffer>
    <experiments>3</experiments>
</comment>
<comment type="interaction">
    <interactant intactId="EBI-990792">
        <id>P00441</id>
    </interactant>
    <interactant intactId="EBI-356367">
        <id>Q15046</id>
        <label>KARS1</label>
    </interactant>
    <organismsDiffer>false</organismsDiffer>
    <experiments>3</experiments>
</comment>
<comment type="interaction">
    <interactant intactId="EBI-990792">
        <id>P00441</id>
    </interactant>
    <interactant intactId="EBI-25871195">
        <id>Q9NVX7-2</id>
        <label>KBTBD4</label>
    </interactant>
    <organismsDiffer>false</organismsDiffer>
    <experiments>3</experiments>
</comment>
<comment type="interaction">
    <interactant intactId="EBI-990792">
        <id>P00441</id>
    </interactant>
    <interactant intactId="EBI-10973851">
        <id>Q8N4N3-2</id>
        <label>KLHL36</label>
    </interactant>
    <organismsDiffer>false</organismsDiffer>
    <experiments>3</experiments>
</comment>
<comment type="interaction">
    <interactant intactId="EBI-990792">
        <id>P00441</id>
    </interactant>
    <interactant intactId="EBI-11985629">
        <id>Q96JM7-2</id>
        <label>L3MBTL3</label>
    </interactant>
    <organismsDiffer>false</organismsDiffer>
    <experiments>3</experiments>
</comment>
<comment type="interaction">
    <interactant intactId="EBI-990792">
        <id>P00441</id>
    </interactant>
    <interactant intactId="EBI-1108377">
        <id>Q9BYZ2</id>
        <label>LDHAL6B</label>
    </interactant>
    <organismsDiffer>false</organismsDiffer>
    <experiments>3</experiments>
</comment>
<comment type="interaction">
    <interactant intactId="EBI-990792">
        <id>P00441</id>
    </interactant>
    <interactant intactId="EBI-2340947">
        <id>Q8N448</id>
        <label>LNX2</label>
    </interactant>
    <organismsDiffer>false</organismsDiffer>
    <experiments>3</experiments>
</comment>
<comment type="interaction">
    <interactant intactId="EBI-990792">
        <id>P00441</id>
    </interactant>
    <interactant intactId="EBI-347779">
        <id>O95777</id>
        <label>LSM8</label>
    </interactant>
    <organismsDiffer>false</organismsDiffer>
    <experiments>3</experiments>
</comment>
<comment type="interaction">
    <interactant intactId="EBI-990792">
        <id>P00441</id>
    </interactant>
    <interactant intactId="EBI-4397720">
        <id>Q8TDB4</id>
        <label>MGARP</label>
    </interactant>
    <organismsDiffer>false</organismsDiffer>
    <experiments>3</experiments>
</comment>
<comment type="interaction">
    <interactant intactId="EBI-990792">
        <id>P00441</id>
    </interactant>
    <interactant intactId="EBI-21250407">
        <id>A4FUJ8</id>
        <label>MKL1</label>
    </interactant>
    <organismsDiffer>false</organismsDiffer>
    <experiments>3</experiments>
</comment>
<comment type="interaction">
    <interactant intactId="EBI-990792">
        <id>P00441</id>
    </interactant>
    <interactant intactId="EBI-2512452">
        <id>Q8N594</id>
        <label>MPND</label>
    </interactant>
    <organismsDiffer>false</organismsDiffer>
    <experiments>3</experiments>
</comment>
<comment type="interaction">
    <interactant intactId="EBI-990792">
        <id>P00441</id>
    </interactant>
    <interactant intactId="EBI-1058491">
        <id>Q96FW1</id>
        <label>OTUB1</label>
    </interactant>
    <organismsDiffer>false</organismsDiffer>
    <experiments>3</experiments>
</comment>
<comment type="interaction">
    <interactant intactId="EBI-990792">
        <id>P00441</id>
    </interactant>
    <interactant intactId="EBI-25830200">
        <id>Q6GQQ9-2</id>
        <label>OTUD7B</label>
    </interactant>
    <organismsDiffer>false</organismsDiffer>
    <experiments>3</experiments>
</comment>
<comment type="interaction">
    <interactant intactId="EBI-990792">
        <id>P00441</id>
    </interactant>
    <interactant intactId="EBI-10302990">
        <id>Q9BYU1</id>
        <label>PBX4</label>
    </interactant>
    <organismsDiffer>false</organismsDiffer>
    <experiments>3</experiments>
</comment>
<comment type="interaction">
    <interactant intactId="EBI-990792">
        <id>P00441</id>
    </interactant>
    <interactant intactId="EBI-716063">
        <id>Q13113</id>
        <label>PDZK1IP1</label>
    </interactant>
    <organismsDiffer>false</organismsDiffer>
    <experiments>3</experiments>
</comment>
<comment type="interaction">
    <interactant intactId="EBI-990792">
        <id>P00441</id>
    </interactant>
    <interactant intactId="EBI-11959013">
        <id>Q08209-2</id>
        <label>PPP3CA</label>
    </interactant>
    <organismsDiffer>false</organismsDiffer>
    <experiments>3</experiments>
</comment>
<comment type="interaction">
    <interactant intactId="EBI-990792">
        <id>P00441</id>
    </interactant>
    <interactant intactId="EBI-722161">
        <id>P30044</id>
        <label>PRDX5</label>
    </interactant>
    <organismsDiffer>false</organismsDiffer>
    <experiments>10</experiments>
</comment>
<comment type="interaction">
    <interactant intactId="EBI-990792">
        <id>P00441</id>
    </interactant>
    <interactant intactId="EBI-372312">
        <id>P28062-2</id>
        <label>PSMB8</label>
    </interactant>
    <organismsDiffer>false</organismsDiffer>
    <experiments>3</experiments>
</comment>
<comment type="interaction">
    <interactant intactId="EBI-990792">
        <id>P00441</id>
    </interactant>
    <interactant intactId="EBI-357598">
        <id>P62191</id>
        <label>PSMC1</label>
    </interactant>
    <organismsDiffer>false</organismsDiffer>
    <experiments>5</experiments>
</comment>
<comment type="interaction">
    <interactant intactId="EBI-990792">
        <id>P00441</id>
    </interactant>
    <interactant intactId="EBI-359720">
        <id>P17980</id>
        <label>PSMC3</label>
    </interactant>
    <organismsDiffer>false</organismsDiffer>
    <experiments>3</experiments>
</comment>
<comment type="interaction">
    <interactant intactId="EBI-990792">
        <id>P00441</id>
    </interactant>
    <interactant intactId="EBI-21522939">
        <id>P43686-2</id>
        <label>PSMC4</label>
    </interactant>
    <organismsDiffer>false</organismsDiffer>
    <experiments>3</experiments>
</comment>
<comment type="interaction">
    <interactant intactId="EBI-990792">
        <id>P00441</id>
    </interactant>
    <interactant intactId="EBI-620823">
        <id>Q09028</id>
        <label>RBBP4</label>
    </interactant>
    <organismsDiffer>false</organismsDiffer>
    <experiments>3</experiments>
</comment>
<comment type="interaction">
    <interactant intactId="EBI-990792">
        <id>P00441</id>
    </interactant>
    <interactant intactId="EBI-21535400">
        <id>Q6ZNA4-2</id>
        <label>RNF111</label>
    </interactant>
    <organismsDiffer>false</organismsDiffer>
    <experiments>3</experiments>
</comment>
<comment type="interaction">
    <interactant intactId="EBI-990792">
        <id>P00441</id>
    </interactant>
    <interactant intactId="EBI-25829984">
        <id>Q9ULX5</id>
        <label>RNF112</label>
    </interactant>
    <organismsDiffer>false</organismsDiffer>
    <experiments>3</experiments>
</comment>
<comment type="interaction">
    <interactant intactId="EBI-990792">
        <id>P00441</id>
    </interactant>
    <interactant intactId="EBI-1390270">
        <id>Q9NV58</id>
        <label>RNF19A</label>
    </interactant>
    <organismsDiffer>false</organismsDiffer>
    <experiments>3</experiments>
</comment>
<comment type="interaction">
    <interactant intactId="EBI-990792">
        <id>P00441</id>
    </interactant>
    <interactant intactId="EBI-366570">
        <id>Q9BUL9</id>
        <label>RPP25</label>
    </interactant>
    <organismsDiffer>false</organismsDiffer>
    <experiments>3</experiments>
</comment>
<comment type="interaction">
    <interactant intactId="EBI-990792">
        <id>P00441</id>
    </interactant>
    <interactant intactId="EBI-354112">
        <id>P08865</id>
        <label>RPSA</label>
    </interactant>
    <organismsDiffer>false</organismsDiffer>
    <experiments>3</experiments>
</comment>
<comment type="interaction">
    <interactant intactId="EBI-990792">
        <id>P00441</id>
    </interactant>
    <interactant intactId="EBI-752324">
        <id>Q8N488</id>
        <label>RYBP</label>
    </interactant>
    <organismsDiffer>false</organismsDiffer>
    <experiments>3</experiments>
</comment>
<comment type="interaction">
    <interactant intactId="EBI-990792">
        <id>P00441</id>
    </interactant>
    <interactant intactId="EBI-79819">
        <id>P60896</id>
        <label>SEM1</label>
    </interactant>
    <organismsDiffer>false</organismsDiffer>
    <experiments>3</experiments>
</comment>
<comment type="interaction">
    <interactant intactId="EBI-990792">
        <id>P00441</id>
    </interactant>
    <interactant intactId="EBI-346977">
        <id>Q15393</id>
        <label>SF3B3</label>
    </interactant>
    <organismsDiffer>false</organismsDiffer>
    <experiments>3</experiments>
</comment>
<comment type="interaction">
    <interactant intactId="EBI-990792">
        <id>P00441</id>
    </interactant>
    <interactant intactId="EBI-10182463">
        <id>Q2NKQ1-4</id>
        <label>SGSM1</label>
    </interactant>
    <organismsDiffer>false</organismsDiffer>
    <experiments>3</experiments>
</comment>
<comment type="interaction">
    <interactant intactId="EBI-990792">
        <id>P00441</id>
    </interactant>
    <interactant intactId="EBI-358545">
        <id>Q9GZS3</id>
        <label>SKIC8</label>
    </interactant>
    <organismsDiffer>false</organismsDiffer>
    <experiments>3</experiments>
</comment>
<comment type="interaction">
    <interactant intactId="EBI-990792">
        <id>P00441</id>
    </interactant>
    <interactant intactId="EBI-985879">
        <id>P37840</id>
        <label>SNCA</label>
    </interactant>
    <organismsDiffer>false</organismsDiffer>
    <experiments>9</experiments>
</comment>
<comment type="interaction">
    <interactant intactId="EBI-990792">
        <id>P00441</id>
    </interactant>
    <interactant intactId="EBI-990792">
        <id>P00441</id>
        <label>SOD1</label>
    </interactant>
    <organismsDiffer>false</organismsDiffer>
    <experiments>22</experiments>
</comment>
<comment type="interaction">
    <interactant intactId="EBI-990792">
        <id>P00441</id>
    </interactant>
    <interactant intactId="EBI-11175533">
        <id>Q3SY56</id>
        <label>SP6</label>
    </interactant>
    <organismsDiffer>false</organismsDiffer>
    <experiments>3</experiments>
</comment>
<comment type="interaction">
    <interactant intactId="EBI-990792">
        <id>P00441</id>
    </interactant>
    <interactant intactId="EBI-7067260">
        <id>Q8NHS9</id>
        <label>SPATA22</label>
    </interactant>
    <organismsDiffer>false</organismsDiffer>
    <experiments>3</experiments>
</comment>
<comment type="interaction">
    <interactant intactId="EBI-990792">
        <id>P00441</id>
    </interactant>
    <interactant intactId="EBI-745680">
        <id>Q96MF2</id>
        <label>STAC3</label>
    </interactant>
    <organismsDiffer>false</organismsDiffer>
    <experiments>3</experiments>
</comment>
<comment type="interaction">
    <interactant intactId="EBI-990792">
        <id>P00441</id>
    </interactant>
    <interactant intactId="EBI-21560407">
        <id>Q92797-2</id>
        <label>SYMPK</label>
    </interactant>
    <organismsDiffer>false</organismsDiffer>
    <experiments>3</experiments>
</comment>
<comment type="interaction">
    <interactant intactId="EBI-990792">
        <id>P00441</id>
    </interactant>
    <interactant intactId="EBI-765729">
        <id>Q9BZK7</id>
        <label>TBL1XR1</label>
    </interactant>
    <organismsDiffer>false</organismsDiffer>
    <experiments>3</experiments>
</comment>
<comment type="interaction">
    <interactant intactId="EBI-990792">
        <id>P00441</id>
    </interactant>
    <interactant intactId="EBI-25840535">
        <id>Q15554-4</id>
        <label>TERF2</label>
    </interactant>
    <organismsDiffer>false</organismsDiffer>
    <experiments>3</experiments>
</comment>
<comment type="interaction">
    <interactant intactId="EBI-990792">
        <id>P00441</id>
    </interactant>
    <interactant intactId="EBI-1051115">
        <id>Q9H3N1</id>
        <label>TMX1</label>
    </interactant>
    <organismsDiffer>false</organismsDiffer>
    <experiments>3</experiments>
</comment>
<comment type="interaction">
    <interactant intactId="EBI-990792">
        <id>P00441</id>
    </interactant>
    <interactant intactId="EBI-2505861">
        <id>Q13829</id>
        <label>TNFAIP1</label>
    </interactant>
    <organismsDiffer>false</organismsDiffer>
    <experiments>3</experiments>
</comment>
<comment type="interaction">
    <interactant intactId="EBI-990792">
        <id>P00441</id>
    </interactant>
    <interactant intactId="EBI-10977815">
        <id>P07951-2</id>
        <label>TPM2</label>
    </interactant>
    <organismsDiffer>false</organismsDiffer>
    <experiments>3</experiments>
</comment>
<comment type="interaction">
    <interactant intactId="EBI-990792">
        <id>P00441</id>
    </interactant>
    <interactant intactId="EBI-350864">
        <id>P07437</id>
        <label>TUBB</label>
    </interactant>
    <organismsDiffer>false</organismsDiffer>
    <experiments>3</experiments>
</comment>
<comment type="interaction">
    <interactant intactId="EBI-990792">
        <id>P00441</id>
    </interactant>
    <interactant intactId="EBI-413034">
        <id>P0CG47</id>
        <label>UBB</label>
    </interactant>
    <organismsDiffer>false</organismsDiffer>
    <experiments>3</experiments>
</comment>
<comment type="interaction">
    <interactant intactId="EBI-990792">
        <id>P00441</id>
    </interactant>
    <interactant intactId="EBI-10696113">
        <id>O75604-3</id>
        <label>USP2</label>
    </interactant>
    <organismsDiffer>false</organismsDiffer>
    <experiments>3</experiments>
</comment>
<comment type="interaction">
    <interactant intactId="EBI-990792">
        <id>P00441</id>
    </interactant>
    <interactant intactId="EBI-2682299">
        <id>Q96NC0</id>
        <label>ZMAT2</label>
    </interactant>
    <organismsDiffer>false</organismsDiffer>
    <experiments>3</experiments>
</comment>
<comment type="interaction">
    <interactant intactId="EBI-990792">
        <id>P00441</id>
    </interactant>
    <interactant intactId="EBI-12949277">
        <id>O95789-4</id>
        <label>ZMYM6</label>
    </interactant>
    <organismsDiffer>false</organismsDiffer>
    <experiments>3</experiments>
</comment>
<comment type="interaction">
    <interactant intactId="EBI-990792">
        <id>P00441</id>
    </interactant>
    <interactant intactId="EBI-12021938">
        <id>Q8NBB4-2</id>
        <label>ZSCAN1</label>
    </interactant>
    <organismsDiffer>false</organismsDiffer>
    <experiments>3</experiments>
</comment>
<comment type="interaction">
    <interactant intactId="EBI-990792">
        <id>P00441</id>
    </interactant>
    <interactant intactId="EBI-1538838">
        <id>Q2QGD7</id>
        <label>ZXDC</label>
    </interactant>
    <organismsDiffer>false</organismsDiffer>
    <experiments>3</experiments>
</comment>
<comment type="interaction">
    <interactant intactId="EBI-990792">
        <id>P00441</id>
    </interactant>
    <interactant intactId="EBI-990900">
        <id>P26339</id>
        <label>Chga</label>
    </interactant>
    <organismsDiffer>true</organismsDiffer>
    <experiments>5</experiments>
</comment>
<comment type="interaction">
    <interactant intactId="EBI-990792">
        <id>P00441</id>
    </interactant>
    <interactant intactId="EBI-990820">
        <id>P16014</id>
        <label>Chgb</label>
    </interactant>
    <organismsDiffer>true</organismsDiffer>
    <experiments>6</experiments>
</comment>
<comment type="interaction">
    <interactant intactId="EBI-990792">
        <id>P00441</id>
    </interactant>
    <interactant intactId="EBI-26602017">
        <id>P01041</id>
        <label>Cstb</label>
    </interactant>
    <organismsDiffer>true</organismsDiffer>
    <experiments>3</experiments>
</comment>
<comment type="interaction">
    <interactant intactId="EBI-990792">
        <id>P00441</id>
    </interactant>
    <interactant intactId="EBI-772325">
        <id>P20029</id>
        <label>Hspa5</label>
    </interactant>
    <organismsDiffer>true</organismsDiffer>
    <experiments>7</experiments>
</comment>
<comment type="subcellular location">
    <subcellularLocation>
        <location evidence="27">Cytoplasm</location>
    </subcellularLocation>
    <subcellularLocation>
        <location evidence="33">Nucleus</location>
    </subcellularLocation>
    <text evidence="27">Predominantly cytoplasmic; the pathogenic variants ALS1 Arg-86 and Ala-94 gradually aggregates and accumulates in mitochondria.</text>
</comment>
<comment type="PTM">
    <text evidence="9 27">Unlike wild-type protein, the pathogenic variants ALS1 Arg-38, Arg-47, Arg-86 and Ala-94 are polyubiquitinated by RNF19A leading to their proteasomal degradation. The pathogenic variants ALS1 Arg-86 and Ala-94 are ubiquitinated by MARCH5 leading to their proteasomal degradation.</text>
</comment>
<comment type="PTM">
    <text evidence="29">The ditryptophan cross-link at Trp-33 is responsible for the non-disulfide-linked homodimerization. Such modification might only occur in extreme conditions and additional experimental evidence is required.</text>
</comment>
<comment type="PTM">
    <text evidence="33">Palmitoylation helps nuclear targeting and decreases catalytic activity.</text>
</comment>
<comment type="PTM">
    <text evidence="35">Succinylation, adjacent to copper catalytic site, probably inhibits activity. Desuccinylation by SIRT5 enhances activity.</text>
</comment>
<comment type="disease" evidence="4 5 6 7 8 9 10 11 12 14 15 17 24 25 26 27 28 31 32 36 37 39 45 46 47 48 49 50 51 52 53 54 55 56 57 58 59 60 61 62 63 64 65 66 67 68 69 70 71 72 73 74 75 76 78">
    <disease id="DI-00108">
        <name>Amyotrophic lateral sclerosis 1</name>
        <acronym>ALS1</acronym>
        <description>A neurodegenerative disorder affecting upper motor neurons in the brain and lower motor neurons in the brain stem and spinal cord, resulting in fatal paralysis. Sensory abnormalities are absent. The pathologic hallmarks of the disease include pallor of the corticospinal tract due to loss of motor neurons, presence of ubiquitin-positive inclusions within surviving motor neurons, and deposition of pathologic aggregates. The etiology of amyotrophic lateral sclerosis is likely to be multifactorial, involving both genetic and environmental factors. The disease is inherited in 5-10% of the cases.</description>
        <dbReference type="MIM" id="105400"/>
    </disease>
    <text>The disease is caused by variants affecting the gene represented in this entry.</text>
</comment>
<comment type="disease" evidence="41 42">
    <disease id="DI-05666">
        <name>Spastic tetraplegia and axial hypotonia, progressive</name>
        <acronym>STAHP</acronym>
        <description>An autosomal recessive, neurologic disorder characterized by loss of motor abilities in the first year of life, after which severe, progressive spastic tetraparesis develops. Affected individuals have severe axial hypotonia, hyperekplexia, hypertonia, and myokymia, reflecting upper motor neuron involvement. Cognitive development may be affected.</description>
        <dbReference type="MIM" id="618598"/>
    </disease>
    <text>The disease is caused by variants affecting the gene represented in this entry.</text>
</comment>
<comment type="miscellaneous">
    <text>The protein (both wild-type and ALS1 variants) has a tendency to form fibrillar aggregates in the absence of the intramolecular disulfide bond or of bound zinc ions. These aggregates may have cytotoxic effects. Zinc binding promotes dimerization and stabilizes the native form.</text>
</comment>
<comment type="similarity">
    <text evidence="79">Belongs to the Cu-Zn superoxide dismutase family.</text>
</comment>
<comment type="sequence caution" evidence="79">
    <conflict type="erroneous gene model prediction">
        <sequence resource="EMBL-CDS" id="AAC41773"/>
    </conflict>
</comment>
<comment type="sequence caution" evidence="79">
    <conflict type="erroneous gene model prediction">
        <sequence resource="EMBL-CDS" id="CAA25917"/>
    </conflict>
</comment>
<comment type="online information" name="Alsod">
    <link uri="https://alsod.ac.uk"/>
    <text>ALS genetic mutations db</text>
</comment>
<comment type="online information" name="Wikipedia">
    <link uri="https://en.wikipedia.org/wiki/Superoxide_dismutase"/>
    <text>Superoxide dismutase entry</text>
</comment>
<dbReference type="EC" id="1.15.1.1" evidence="35"/>
<dbReference type="EMBL" id="L44139">
    <property type="protein sequence ID" value="AAB05662.1"/>
    <property type="molecule type" value="Genomic_DNA"/>
</dbReference>
<dbReference type="EMBL" id="L44135">
    <property type="protein sequence ID" value="AAB05662.1"/>
    <property type="status" value="JOINED"/>
    <property type="molecule type" value="Genomic_DNA"/>
</dbReference>
<dbReference type="EMBL" id="L44136">
    <property type="protein sequence ID" value="AAB05662.1"/>
    <property type="status" value="JOINED"/>
    <property type="molecule type" value="Genomic_DNA"/>
</dbReference>
<dbReference type="EMBL" id="L44137">
    <property type="protein sequence ID" value="AAB05662.1"/>
    <property type="status" value="JOINED"/>
    <property type="molecule type" value="Genomic_DNA"/>
</dbReference>
<dbReference type="EMBL" id="L44139">
    <property type="protein sequence ID" value="AAB05661.1"/>
    <property type="molecule type" value="Genomic_DNA"/>
</dbReference>
<dbReference type="EMBL" id="L44135">
    <property type="protein sequence ID" value="AAB05661.1"/>
    <property type="status" value="JOINED"/>
    <property type="molecule type" value="Genomic_DNA"/>
</dbReference>
<dbReference type="EMBL" id="L44136">
    <property type="protein sequence ID" value="AAB05661.1"/>
    <property type="status" value="JOINED"/>
    <property type="molecule type" value="Genomic_DNA"/>
</dbReference>
<dbReference type="EMBL" id="L44137">
    <property type="protein sequence ID" value="AAB05661.1"/>
    <property type="status" value="JOINED"/>
    <property type="molecule type" value="Genomic_DNA"/>
</dbReference>
<dbReference type="EMBL" id="X02317">
    <property type="protein sequence ID" value="CAA26182.1"/>
    <property type="molecule type" value="mRNA"/>
</dbReference>
<dbReference type="EMBL" id="X01780">
    <property type="protein sequence ID" value="CAA25915.1"/>
    <property type="molecule type" value="Genomic_DNA"/>
</dbReference>
<dbReference type="EMBL" id="X01781">
    <property type="protein sequence ID" value="CAA25916.1"/>
    <property type="molecule type" value="Genomic_DNA"/>
</dbReference>
<dbReference type="EMBL" id="X01782">
    <property type="protein sequence ID" value="CAA25917.1"/>
    <property type="status" value="ALT_SEQ"/>
    <property type="molecule type" value="Genomic_DNA"/>
</dbReference>
<dbReference type="EMBL" id="X01783">
    <property type="protein sequence ID" value="CAA25918.1"/>
    <property type="molecule type" value="Genomic_DNA"/>
</dbReference>
<dbReference type="EMBL" id="X01784">
    <property type="protein sequence ID" value="CAA25919.1"/>
    <property type="molecule type" value="Genomic_DNA"/>
</dbReference>
<dbReference type="EMBL" id="AY049787">
    <property type="protein sequence ID" value="AAL15444.1"/>
    <property type="molecule type" value="mRNA"/>
</dbReference>
<dbReference type="EMBL" id="AY450286">
    <property type="protein sequence ID" value="AAR21563.1"/>
    <property type="molecule type" value="mRNA"/>
</dbReference>
<dbReference type="EMBL" id="EF151142">
    <property type="protein sequence ID" value="ABL96616.1"/>
    <property type="molecule type" value="mRNA"/>
</dbReference>
<dbReference type="EMBL" id="AK312116">
    <property type="protein sequence ID" value="BAG35052.1"/>
    <property type="molecule type" value="mRNA"/>
</dbReference>
<dbReference type="EMBL" id="CR450355">
    <property type="protein sequence ID" value="CAG29351.1"/>
    <property type="molecule type" value="mRNA"/>
</dbReference>
<dbReference type="EMBL" id="CR541742">
    <property type="protein sequence ID" value="CAG46542.1"/>
    <property type="molecule type" value="mRNA"/>
</dbReference>
<dbReference type="EMBL" id="BT006676">
    <property type="protein sequence ID" value="AAP35322.1"/>
    <property type="molecule type" value="mRNA"/>
</dbReference>
<dbReference type="EMBL" id="AY835629">
    <property type="protein sequence ID" value="AAV80422.1"/>
    <property type="molecule type" value="Genomic_DNA"/>
</dbReference>
<dbReference type="EMBL" id="AP000253">
    <property type="status" value="NOT_ANNOTATED_CDS"/>
    <property type="molecule type" value="Genomic_DNA"/>
</dbReference>
<dbReference type="EMBL" id="CH471079">
    <property type="protein sequence ID" value="EAX09889.1"/>
    <property type="molecule type" value="Genomic_DNA"/>
</dbReference>
<dbReference type="EMBL" id="CH471079">
    <property type="protein sequence ID" value="EAX09890.1"/>
    <property type="molecule type" value="Genomic_DNA"/>
</dbReference>
<dbReference type="EMBL" id="BC001034">
    <property type="protein sequence ID" value="AAH01034.1"/>
    <property type="molecule type" value="mRNA"/>
</dbReference>
<dbReference type="EMBL" id="L46374">
    <property type="protein sequence ID" value="AAB59626.1"/>
    <property type="molecule type" value="Genomic_DNA"/>
</dbReference>
<dbReference type="EMBL" id="L46375">
    <property type="protein sequence ID" value="AAB59627.1"/>
    <property type="molecule type" value="Genomic_DNA"/>
</dbReference>
<dbReference type="EMBL" id="L44746">
    <property type="protein sequence ID" value="AAC41773.1"/>
    <property type="status" value="ALT_SEQ"/>
    <property type="molecule type" value="Genomic_DNA"/>
</dbReference>
<dbReference type="EMBL" id="X95228">
    <property type="protein sequence ID" value="CAA64520.1"/>
    <property type="molecule type" value="Genomic_DNA"/>
</dbReference>
<dbReference type="CCDS" id="CCDS33536.1"/>
<dbReference type="PIR" id="A22703">
    <property type="entry name" value="DSHUCZ"/>
</dbReference>
<dbReference type="RefSeq" id="NP_000445.1">
    <property type="nucleotide sequence ID" value="NM_000454.5"/>
</dbReference>
<dbReference type="PDB" id="1AZV">
    <property type="method" value="X-ray"/>
    <property type="resolution" value="1.90 A"/>
    <property type="chains" value="A/B=2-154"/>
</dbReference>
<dbReference type="PDB" id="1BA9">
    <property type="method" value="NMR"/>
    <property type="chains" value="A=2-154"/>
</dbReference>
<dbReference type="PDB" id="1DSW">
    <property type="method" value="NMR"/>
    <property type="chains" value="A=2-154"/>
</dbReference>
<dbReference type="PDB" id="1FUN">
    <property type="method" value="X-ray"/>
    <property type="resolution" value="2.85 A"/>
    <property type="chains" value="A/B/C/D/E/F/G/H/I/J=2-154"/>
</dbReference>
<dbReference type="PDB" id="1HL4">
    <property type="method" value="X-ray"/>
    <property type="resolution" value="1.82 A"/>
    <property type="chains" value="A/B/C/D=2-154"/>
</dbReference>
<dbReference type="PDB" id="1HL5">
    <property type="method" value="X-ray"/>
    <property type="resolution" value="1.80 A"/>
    <property type="chains" value="A/B/C/D/E/F/G/H/I/J/K/L/M/N/O/P/Q/S=2-154"/>
</dbReference>
<dbReference type="PDB" id="1KMG">
    <property type="method" value="NMR"/>
    <property type="chains" value="A=2-154"/>
</dbReference>
<dbReference type="PDB" id="1L3N">
    <property type="method" value="NMR"/>
    <property type="chains" value="A/B=2-154"/>
</dbReference>
<dbReference type="PDB" id="1MFM">
    <property type="method" value="X-ray"/>
    <property type="resolution" value="1.02 A"/>
    <property type="chains" value="A=2-154"/>
</dbReference>
<dbReference type="PDB" id="1N18">
    <property type="method" value="X-ray"/>
    <property type="resolution" value="2.00 A"/>
    <property type="chains" value="A/B/C/D/E/F/G/H/I/J=1-154"/>
</dbReference>
<dbReference type="PDB" id="1N19">
    <property type="method" value="X-ray"/>
    <property type="resolution" value="1.86 A"/>
    <property type="chains" value="A/B=1-154"/>
</dbReference>
<dbReference type="PDB" id="1OEZ">
    <property type="method" value="X-ray"/>
    <property type="resolution" value="2.15 A"/>
    <property type="chains" value="W/X/Y/Z=2-154"/>
</dbReference>
<dbReference type="PDB" id="1OZT">
    <property type="method" value="X-ray"/>
    <property type="resolution" value="2.50 A"/>
    <property type="chains" value="G/H/I/J/K/L/M/N=2-154"/>
</dbReference>
<dbReference type="PDB" id="1OZU">
    <property type="method" value="X-ray"/>
    <property type="resolution" value="1.30 A"/>
    <property type="chains" value="A/B=2-154"/>
</dbReference>
<dbReference type="PDB" id="1P1V">
    <property type="method" value="X-ray"/>
    <property type="resolution" value="1.40 A"/>
    <property type="chains" value="A/B/C=2-154"/>
</dbReference>
<dbReference type="PDB" id="1PTZ">
    <property type="method" value="X-ray"/>
    <property type="resolution" value="1.80 A"/>
    <property type="chains" value="A/B=2-154"/>
</dbReference>
<dbReference type="PDB" id="1PU0">
    <property type="method" value="X-ray"/>
    <property type="resolution" value="1.70 A"/>
    <property type="chains" value="A/B/C/D/E/F/G/H/I/J=2-154"/>
</dbReference>
<dbReference type="PDB" id="1RK7">
    <property type="method" value="NMR"/>
    <property type="chains" value="A=2-154"/>
</dbReference>
<dbReference type="PDB" id="1SOS">
    <property type="method" value="X-ray"/>
    <property type="resolution" value="2.50 A"/>
    <property type="chains" value="A/B/C/D/E/F/G/H/I/J=2-154"/>
</dbReference>
<dbReference type="PDB" id="1SPD">
    <property type="method" value="X-ray"/>
    <property type="resolution" value="2.40 A"/>
    <property type="chains" value="A/B=2-154"/>
</dbReference>
<dbReference type="PDB" id="1UXL">
    <property type="method" value="X-ray"/>
    <property type="resolution" value="1.60 A"/>
    <property type="chains" value="A/B/C/D/E/F/G/H/I/J=2-154"/>
</dbReference>
<dbReference type="PDB" id="1UXM">
    <property type="method" value="X-ray"/>
    <property type="resolution" value="1.90 A"/>
    <property type="chains" value="A/B/C/D/E/F/G/H/I/J/K/L=2-154"/>
</dbReference>
<dbReference type="PDB" id="2AF2">
    <property type="method" value="NMR"/>
    <property type="chains" value="A/B=2-154"/>
</dbReference>
<dbReference type="PDB" id="2C9S">
    <property type="method" value="X-ray"/>
    <property type="resolution" value="1.24 A"/>
    <property type="chains" value="A/F=2-154"/>
</dbReference>
<dbReference type="PDB" id="2C9U">
    <property type="method" value="X-ray"/>
    <property type="resolution" value="1.24 A"/>
    <property type="chains" value="A/F=2-154"/>
</dbReference>
<dbReference type="PDB" id="2C9V">
    <property type="method" value="X-ray"/>
    <property type="resolution" value="1.07 A"/>
    <property type="chains" value="A/F=2-154"/>
</dbReference>
<dbReference type="PDB" id="2GBT">
    <property type="method" value="X-ray"/>
    <property type="resolution" value="1.70 A"/>
    <property type="chains" value="A/B/C/D=2-154"/>
</dbReference>
<dbReference type="PDB" id="2GBU">
    <property type="method" value="X-ray"/>
    <property type="resolution" value="2.00 A"/>
    <property type="chains" value="A/B/C/D=2-154"/>
</dbReference>
<dbReference type="PDB" id="2GBV">
    <property type="method" value="X-ray"/>
    <property type="resolution" value="2.00 A"/>
    <property type="chains" value="A/B/C/D/E/F/G/H/I/J=2-154"/>
</dbReference>
<dbReference type="PDB" id="2LU5">
    <property type="method" value="NMR"/>
    <property type="chains" value="A=2-154"/>
</dbReference>
<dbReference type="PDB" id="2MP3">
    <property type="method" value="NMR"/>
    <property type="chains" value="A=2-126"/>
</dbReference>
<dbReference type="PDB" id="2NAM">
    <property type="method" value="NMR"/>
    <property type="chains" value="A=2-154"/>
</dbReference>
<dbReference type="PDB" id="2NNX">
    <property type="method" value="X-ray"/>
    <property type="resolution" value="2.30 A"/>
    <property type="chains" value="A/B/C/D=2-154"/>
</dbReference>
<dbReference type="PDB" id="2R27">
    <property type="method" value="X-ray"/>
    <property type="resolution" value="2.00 A"/>
    <property type="chains" value="A/B=1-154"/>
</dbReference>
<dbReference type="PDB" id="2V0A">
    <property type="method" value="X-ray"/>
    <property type="resolution" value="1.15 A"/>
    <property type="chains" value="A/F=2-154"/>
</dbReference>
<dbReference type="PDB" id="2VR6">
    <property type="method" value="X-ray"/>
    <property type="resolution" value="1.30 A"/>
    <property type="chains" value="A/F=2-154"/>
</dbReference>
<dbReference type="PDB" id="2VR7">
    <property type="method" value="X-ray"/>
    <property type="resolution" value="1.58 A"/>
    <property type="chains" value="A/F=2-154"/>
</dbReference>
<dbReference type="PDB" id="2VR8">
    <property type="method" value="X-ray"/>
    <property type="resolution" value="1.36 A"/>
    <property type="chains" value="A/F=2-154"/>
</dbReference>
<dbReference type="PDB" id="2WKO">
    <property type="method" value="X-ray"/>
    <property type="resolution" value="1.97 A"/>
    <property type="chains" value="A/F=2-154"/>
</dbReference>
<dbReference type="PDB" id="2WYT">
    <property type="method" value="X-ray"/>
    <property type="resolution" value="1.00 A"/>
    <property type="chains" value="A/F=2-154"/>
</dbReference>
<dbReference type="PDB" id="2WYZ">
    <property type="method" value="X-ray"/>
    <property type="resolution" value="1.70 A"/>
    <property type="chains" value="A/F=2-154"/>
</dbReference>
<dbReference type="PDB" id="2WZ0">
    <property type="method" value="X-ray"/>
    <property type="resolution" value="1.72 A"/>
    <property type="chains" value="A/F=2-154"/>
</dbReference>
<dbReference type="PDB" id="2WZ5">
    <property type="method" value="X-ray"/>
    <property type="resolution" value="1.50 A"/>
    <property type="chains" value="A/F=2-154"/>
</dbReference>
<dbReference type="PDB" id="2WZ6">
    <property type="method" value="X-ray"/>
    <property type="resolution" value="1.55 A"/>
    <property type="chains" value="A/F=2-154"/>
</dbReference>
<dbReference type="PDB" id="2XJK">
    <property type="method" value="X-ray"/>
    <property type="resolution" value="1.45 A"/>
    <property type="chains" value="A=2-154"/>
</dbReference>
<dbReference type="PDB" id="2XJL">
    <property type="method" value="X-ray"/>
    <property type="resolution" value="1.55 A"/>
    <property type="chains" value="A=2-154"/>
</dbReference>
<dbReference type="PDB" id="2ZKW">
    <property type="method" value="X-ray"/>
    <property type="resolution" value="1.90 A"/>
    <property type="chains" value="A/B=1-154"/>
</dbReference>
<dbReference type="PDB" id="2ZKX">
    <property type="method" value="X-ray"/>
    <property type="resolution" value="2.72 A"/>
    <property type="chains" value="A/B/C/D=1-154"/>
</dbReference>
<dbReference type="PDB" id="2ZKY">
    <property type="method" value="X-ray"/>
    <property type="resolution" value="2.40 A"/>
    <property type="chains" value="A/B/C/D/E/F/G/H/I/J=1-154"/>
</dbReference>
<dbReference type="PDB" id="3CQP">
    <property type="method" value="X-ray"/>
    <property type="resolution" value="1.95 A"/>
    <property type="chains" value="A/B/C/D=2-154"/>
</dbReference>
<dbReference type="PDB" id="3CQQ">
    <property type="method" value="X-ray"/>
    <property type="resolution" value="1.90 A"/>
    <property type="chains" value="A/B=2-154"/>
</dbReference>
<dbReference type="PDB" id="3ECU">
    <property type="method" value="X-ray"/>
    <property type="resolution" value="1.90 A"/>
    <property type="chains" value="A/B/C/D=2-154"/>
</dbReference>
<dbReference type="PDB" id="3ECV">
    <property type="method" value="X-ray"/>
    <property type="resolution" value="1.90 A"/>
    <property type="chains" value="A/B/C/D=2-154"/>
</dbReference>
<dbReference type="PDB" id="3ECW">
    <property type="method" value="X-ray"/>
    <property type="resolution" value="2.15 A"/>
    <property type="chains" value="A/B/C/D=2-154"/>
</dbReference>
<dbReference type="PDB" id="3GQF">
    <property type="method" value="X-ray"/>
    <property type="resolution" value="2.20 A"/>
    <property type="chains" value="A/B/C/D/E/F=2-154"/>
</dbReference>
<dbReference type="PDB" id="3GTV">
    <property type="method" value="X-ray"/>
    <property type="resolution" value="2.20 A"/>
    <property type="chains" value="A/B/C/D/E/F/G/H/I/J/K/L=2-81"/>
</dbReference>
<dbReference type="PDB" id="3GZO">
    <property type="method" value="X-ray"/>
    <property type="resolution" value="2.10 A"/>
    <property type="chains" value="A/B/C/D/E/F/G/H/I/J=2-154"/>
</dbReference>
<dbReference type="PDB" id="3GZP">
    <property type="method" value="X-ray"/>
    <property type="resolution" value="3.10 A"/>
    <property type="chains" value="A/B/C/D=2-154"/>
</dbReference>
<dbReference type="PDB" id="3GZQ">
    <property type="method" value="X-ray"/>
    <property type="resolution" value="1.40 A"/>
    <property type="chains" value="A/B=2-154"/>
</dbReference>
<dbReference type="PDB" id="3H2P">
    <property type="method" value="X-ray"/>
    <property type="resolution" value="1.55 A"/>
    <property type="chains" value="A/B=2-154"/>
</dbReference>
<dbReference type="PDB" id="3H2Q">
    <property type="method" value="X-ray"/>
    <property type="resolution" value="1.85 A"/>
    <property type="chains" value="A/B/C/D=2-154"/>
</dbReference>
<dbReference type="PDB" id="3HFF">
    <property type="method" value="X-ray"/>
    <property type="resolution" value="2.20 A"/>
    <property type="chains" value="A=2-154"/>
</dbReference>
<dbReference type="PDB" id="3K91">
    <property type="method" value="X-ray"/>
    <property type="resolution" value="1.75 A"/>
    <property type="chains" value="A/B=2-154"/>
</dbReference>
<dbReference type="PDB" id="3KH3">
    <property type="method" value="X-ray"/>
    <property type="resolution" value="3.50 A"/>
    <property type="chains" value="A/B/C/D/E/F/G/H/I/J/K/L=2-154"/>
</dbReference>
<dbReference type="PDB" id="3KH4">
    <property type="method" value="X-ray"/>
    <property type="resolution" value="3.50 A"/>
    <property type="chains" value="A/B/C/D/E/F=2-154"/>
</dbReference>
<dbReference type="PDB" id="3LTV">
    <property type="method" value="X-ray"/>
    <property type="resolution" value="2.45 A"/>
    <property type="chains" value="A/B/C/D/E/F=82-154"/>
</dbReference>
<dbReference type="PDB" id="3QQD">
    <property type="method" value="X-ray"/>
    <property type="resolution" value="1.65 A"/>
    <property type="chains" value="A/B=2-154"/>
</dbReference>
<dbReference type="PDB" id="3RE0">
    <property type="method" value="X-ray"/>
    <property type="resolution" value="2.28 A"/>
    <property type="chains" value="A/B/C/D=2-154"/>
</dbReference>
<dbReference type="PDB" id="3T5W">
    <property type="method" value="X-ray"/>
    <property type="resolution" value="1.80 A"/>
    <property type="chains" value="A/B/D/E/F/G/H/I/J/K/L/M=2-154"/>
</dbReference>
<dbReference type="PDB" id="4A7G">
    <property type="method" value="X-ray"/>
    <property type="resolution" value="1.24 A"/>
    <property type="chains" value="A/F=2-154"/>
</dbReference>
<dbReference type="PDB" id="4A7Q">
    <property type="method" value="X-ray"/>
    <property type="resolution" value="1.22 A"/>
    <property type="chains" value="A/F=2-154"/>
</dbReference>
<dbReference type="PDB" id="4A7S">
    <property type="method" value="X-ray"/>
    <property type="resolution" value="1.06 A"/>
    <property type="chains" value="A/F=2-154"/>
</dbReference>
<dbReference type="PDB" id="4A7T">
    <property type="method" value="X-ray"/>
    <property type="resolution" value="1.45 A"/>
    <property type="chains" value="A/F=2-154"/>
</dbReference>
<dbReference type="PDB" id="4A7U">
    <property type="method" value="X-ray"/>
    <property type="resolution" value="0.98 A"/>
    <property type="chains" value="A/F=2-154"/>
</dbReference>
<dbReference type="PDB" id="4A7V">
    <property type="method" value="X-ray"/>
    <property type="resolution" value="1.00 A"/>
    <property type="chains" value="A/F=2-154"/>
</dbReference>
<dbReference type="PDB" id="4B3E">
    <property type="method" value="X-ray"/>
    <property type="resolution" value="2.15 A"/>
    <property type="chains" value="A/B/C/D/E/F/G/H/I/J=1-154"/>
</dbReference>
<dbReference type="PDB" id="4BCY">
    <property type="method" value="X-ray"/>
    <property type="resolution" value="1.27 A"/>
    <property type="chains" value="A=2-154"/>
</dbReference>
<dbReference type="PDB" id="4BCZ">
    <property type="method" value="X-ray"/>
    <property type="resolution" value="1.93 A"/>
    <property type="chains" value="A/B=2-49, A/B=83-124, A/B=141-154"/>
</dbReference>
<dbReference type="PDB" id="4BD4">
    <property type="method" value="X-ray"/>
    <property type="resolution" value="2.78 A"/>
    <property type="chains" value="A/B/C/D/E/F/G/H/I=2-49, A/B/C/D/E/F/G/H/I=83-124, A/B/C/D/E/F/G/H/I=141-154"/>
</dbReference>
<dbReference type="PDB" id="4FF9">
    <property type="method" value="X-ray"/>
    <property type="resolution" value="2.50 A"/>
    <property type="chains" value="A/B=2-154"/>
</dbReference>
<dbReference type="PDB" id="4MCM">
    <property type="method" value="X-ray"/>
    <property type="resolution" value="2.20 A"/>
    <property type="chains" value="A/B/C/D/E/F/G/H/I/J/K/L=2-154"/>
</dbReference>
<dbReference type="PDB" id="4MCN">
    <property type="method" value="X-ray"/>
    <property type="resolution" value="2.60 A"/>
    <property type="chains" value="A/B=2-154"/>
</dbReference>
<dbReference type="PDB" id="4NIN">
    <property type="method" value="X-ray"/>
    <property type="resolution" value="1.40 A"/>
    <property type="chains" value="A=102-108"/>
</dbReference>
<dbReference type="PDB" id="4NIO">
    <property type="method" value="X-ray"/>
    <property type="resolution" value="1.30 A"/>
    <property type="chains" value="A=148-154"/>
</dbReference>
<dbReference type="PDB" id="4NIP">
    <property type="method" value="X-ray"/>
    <property type="resolution" value="1.90 A"/>
    <property type="chains" value="A=148-154"/>
</dbReference>
<dbReference type="PDB" id="4OH2">
    <property type="method" value="X-ray"/>
    <property type="resolution" value="2.38 A"/>
    <property type="chains" value="A/B/C/D/E/F/G/H/I/J=2-154"/>
</dbReference>
<dbReference type="PDB" id="4XCR">
    <property type="method" value="X-ray"/>
    <property type="resolution" value="3.60 A"/>
    <property type="chains" value="A/B=2-154"/>
</dbReference>
<dbReference type="PDB" id="5DLI">
    <property type="method" value="X-ray"/>
    <property type="resolution" value="2.10 A"/>
    <property type="chains" value="A/B/C/D/E/F/G/H=29-39"/>
</dbReference>
<dbReference type="PDB" id="5IIW">
    <property type="method" value="X-ray"/>
    <property type="resolution" value="2.00 A"/>
    <property type="chains" value="A/B/C/D/E/F/G/H=29-39"/>
</dbReference>
<dbReference type="PDB" id="5J07">
    <property type="method" value="X-ray"/>
    <property type="resolution" value="2.00 A"/>
    <property type="chains" value="A/B=14-49, A/B=84-124, A/B=141-154"/>
</dbReference>
<dbReference type="PDB" id="5J0C">
    <property type="method" value="X-ray"/>
    <property type="resolution" value="1.60 A"/>
    <property type="chains" value="A/B=29-49, A/B=84-124"/>
</dbReference>
<dbReference type="PDB" id="5J0F">
    <property type="method" value="X-ray"/>
    <property type="resolution" value="1.25 A"/>
    <property type="chains" value="A/B=83-124"/>
</dbReference>
<dbReference type="PDB" id="5J0G">
    <property type="method" value="X-ray"/>
    <property type="resolution" value="2.50 A"/>
    <property type="chains" value="A/B=2-124"/>
</dbReference>
<dbReference type="PDB" id="5K02">
    <property type="method" value="X-ray"/>
    <property type="resolution" value="1.99 A"/>
    <property type="chains" value="A/B/C/D/E/F/G/H/I/J/K/L/M/N/O/P/Q/R/S/T/U/V/W/X=2-154"/>
</dbReference>
<dbReference type="PDB" id="5O3Y">
    <property type="method" value="X-ray"/>
    <property type="resolution" value="1.30 A"/>
    <property type="chains" value="A/F=2-154"/>
</dbReference>
<dbReference type="PDB" id="5O40">
    <property type="method" value="X-ray"/>
    <property type="resolution" value="1.50 A"/>
    <property type="chains" value="A/F=2-154"/>
</dbReference>
<dbReference type="PDB" id="5U9M">
    <property type="method" value="X-ray"/>
    <property type="resolution" value="2.35 A"/>
    <property type="chains" value="A/C=2-154"/>
</dbReference>
<dbReference type="PDB" id="5WMJ">
    <property type="method" value="X-ray"/>
    <property type="resolution" value="1.40 A"/>
    <property type="chains" value="A/B=31-36"/>
</dbReference>
<dbReference type="PDB" id="5WOR">
    <property type="method" value="X-ray"/>
    <property type="resolution" value="2.77 A"/>
    <property type="chains" value="A/B/C/D/E/F/G/H/I/J=29-39"/>
</dbReference>
<dbReference type="PDB" id="5YTO">
    <property type="method" value="X-ray"/>
    <property type="resolution" value="1.90 A"/>
    <property type="chains" value="A/B/C/D/E/F/G/H/I/J=1-154"/>
</dbReference>
<dbReference type="PDB" id="5YTU">
    <property type="method" value="X-ray"/>
    <property type="resolution" value="1.90 A"/>
    <property type="chains" value="A/B/C/D/E/F/G/H/I/J=1-154"/>
</dbReference>
<dbReference type="PDB" id="5YUL">
    <property type="method" value="X-ray"/>
    <property type="resolution" value="1.90 A"/>
    <property type="chains" value="A/B/C/D/E/F/G/H/I/J=1-154"/>
</dbReference>
<dbReference type="PDB" id="6A9O">
    <property type="method" value="X-ray"/>
    <property type="resolution" value="2.50 A"/>
    <property type="chains" value="A/B/C/D/E/F/G/H/I/J=1-154"/>
</dbReference>
<dbReference type="PDB" id="6B79">
    <property type="method" value="X-ray"/>
    <property type="resolution" value="1.80 A"/>
    <property type="chains" value="A/B=29-39"/>
</dbReference>
<dbReference type="PDB" id="6DTK">
    <property type="method" value="X-ray"/>
    <property type="resolution" value="2.00 A"/>
    <property type="chains" value="A/C/E/G/I=1-154"/>
</dbReference>
<dbReference type="PDB" id="6FFK">
    <property type="method" value="X-ray"/>
    <property type="resolution" value="1.94 A"/>
    <property type="chains" value="A/B/D/F=2-154"/>
</dbReference>
<dbReference type="PDB" id="6FLH">
    <property type="method" value="X-ray"/>
    <property type="resolution" value="1.79 A"/>
    <property type="chains" value="A=2-154"/>
</dbReference>
<dbReference type="PDB" id="6FOI">
    <property type="method" value="X-ray"/>
    <property type="resolution" value="2.00 A"/>
    <property type="chains" value="A/D/F/G/I/K/M/O/Q/S/U/W=2-154"/>
</dbReference>
<dbReference type="PDB" id="6FOL">
    <property type="method" value="X-ray"/>
    <property type="resolution" value="2.55 A"/>
    <property type="chains" value="B/C/F/G=2-154"/>
</dbReference>
<dbReference type="PDB" id="6FON">
    <property type="method" value="X-ray"/>
    <property type="resolution" value="3.05 A"/>
    <property type="chains" value="B/D=2-154"/>
</dbReference>
<dbReference type="PDB" id="6FP6">
    <property type="method" value="X-ray"/>
    <property type="resolution" value="3.00 A"/>
    <property type="chains" value="A/C/E/G/I/K/M/O/Q/S/U/W=2-154"/>
</dbReference>
<dbReference type="PDB" id="6SPA">
    <property type="method" value="X-ray"/>
    <property type="resolution" value="1.65 A"/>
    <property type="chains" value="A/C/E/G/J/L=2-154"/>
</dbReference>
<dbReference type="PDB" id="6SPH">
    <property type="method" value="X-ray"/>
    <property type="resolution" value="2.25 A"/>
    <property type="chains" value="A/C/E/G/J/L=2-154"/>
</dbReference>
<dbReference type="PDB" id="6SPI">
    <property type="method" value="X-ray"/>
    <property type="resolution" value="2.80 A"/>
    <property type="chains" value="A/B/C/D/E/F/G/H/I/J/K/L=1-154"/>
</dbReference>
<dbReference type="PDB" id="6SPJ">
    <property type="method" value="X-ray"/>
    <property type="resolution" value="1.97 A"/>
    <property type="chains" value="A/B/E/F/I/J=2-154"/>
</dbReference>
<dbReference type="PDB" id="6SPK">
    <property type="method" value="X-ray"/>
    <property type="resolution" value="2.77 A"/>
    <property type="chains" value="A/B/E/F/I/J=2-154"/>
</dbReference>
<dbReference type="PDB" id="6Z3V">
    <property type="method" value="X-ray"/>
    <property type="resolution" value="1.25 A"/>
    <property type="chains" value="AAA/BBB=2-154"/>
</dbReference>
<dbReference type="PDB" id="6Z4G">
    <property type="method" value="X-ray"/>
    <property type="resolution" value="1.45 A"/>
    <property type="chains" value="AAA/BBB=2-154"/>
</dbReference>
<dbReference type="PDB" id="6Z4H">
    <property type="method" value="X-ray"/>
    <property type="resolution" value="1.95 A"/>
    <property type="chains" value="AAA/BBB=2-154"/>
</dbReference>
<dbReference type="PDB" id="6Z4I">
    <property type="method" value="X-ray"/>
    <property type="resolution" value="1.60 A"/>
    <property type="chains" value="AAA/FFF=2-154"/>
</dbReference>
<dbReference type="PDB" id="6Z4J">
    <property type="method" value="X-ray"/>
    <property type="resolution" value="1.55 A"/>
    <property type="chains" value="AAA/BBB=2-154"/>
</dbReference>
<dbReference type="PDB" id="6Z4K">
    <property type="method" value="X-ray"/>
    <property type="resolution" value="1.45 A"/>
    <property type="chains" value="AAA/BBB=2-154"/>
</dbReference>
<dbReference type="PDB" id="6Z4L">
    <property type="method" value="X-ray"/>
    <property type="resolution" value="1.60 A"/>
    <property type="chains" value="AAA/BBB=2-154"/>
</dbReference>
<dbReference type="PDB" id="6Z4M">
    <property type="method" value="X-ray"/>
    <property type="resolution" value="1.55 A"/>
    <property type="chains" value="AAA/BBB=2-154"/>
</dbReference>
<dbReference type="PDB" id="6Z4O">
    <property type="method" value="X-ray"/>
    <property type="resolution" value="1.40 A"/>
    <property type="chains" value="AAA/BBB=2-154"/>
</dbReference>
<dbReference type="PDB" id="7CJV">
    <property type="method" value="NMR"/>
    <property type="chains" value="A=2-154"/>
</dbReference>
<dbReference type="PDB" id="7CJW">
    <property type="method" value="NMR"/>
    <property type="chains" value="A=2-154"/>
</dbReference>
<dbReference type="PDB" id="7FB6">
    <property type="method" value="X-ray"/>
    <property type="resolution" value="1.80 A"/>
    <property type="chains" value="A/B=1-154"/>
</dbReference>
<dbReference type="PDB" id="7FB9">
    <property type="method" value="X-ray"/>
    <property type="resolution" value="2.70 A"/>
    <property type="chains" value="A/B/C/D/E/F/G/H/I/J/K/L/M/N=1-154"/>
</dbReference>
<dbReference type="PDB" id="7NXX">
    <property type="method" value="X-ray"/>
    <property type="resolution" value="2.19 A"/>
    <property type="chains" value="A=2-154"/>
</dbReference>
<dbReference type="PDB" id="7T8E">
    <property type="method" value="X-ray"/>
    <property type="resolution" value="1.40 A"/>
    <property type="chains" value="A/F=2-154"/>
</dbReference>
<dbReference type="PDB" id="7T8F">
    <property type="method" value="X-ray"/>
    <property type="resolution" value="1.40 A"/>
    <property type="chains" value="A/F=2-154"/>
</dbReference>
<dbReference type="PDB" id="7T8G">
    <property type="method" value="X-ray"/>
    <property type="resolution" value="1.35 A"/>
    <property type="chains" value="A/F=2-154"/>
</dbReference>
<dbReference type="PDB" id="7T8H">
    <property type="method" value="X-ray"/>
    <property type="resolution" value="1.50 A"/>
    <property type="chains" value="A/F=2-154"/>
</dbReference>
<dbReference type="PDB" id="7VZF">
    <property type="method" value="EM"/>
    <property type="resolution" value="2.95 A"/>
    <property type="chains" value="A/B/C=1-154"/>
</dbReference>
<dbReference type="PDB" id="7XX3">
    <property type="method" value="X-ray"/>
    <property type="resolution" value="1.90 A"/>
    <property type="chains" value="A/B/C/D/E/F/G/H/I/J=1-154"/>
</dbReference>
<dbReference type="PDB" id="8CCX">
    <property type="method" value="X-ray"/>
    <property type="resolution" value="1.67 A"/>
    <property type="chains" value="A/F=1-154"/>
</dbReference>
<dbReference type="PDB" id="8GSQ">
    <property type="method" value="X-ray"/>
    <property type="resolution" value="2.10 A"/>
    <property type="chains" value="A/B/C/D/F/I/J=1-154"/>
</dbReference>
<dbReference type="PDB" id="8IHU">
    <property type="method" value="EM"/>
    <property type="resolution" value="2.97 A"/>
    <property type="chains" value="A/B/C=1-154"/>
</dbReference>
<dbReference type="PDB" id="8IHV">
    <property type="method" value="EM"/>
    <property type="resolution" value="3.11 A"/>
    <property type="chains" value="A/B/C=1-154"/>
</dbReference>
<dbReference type="PDB" id="8K33">
    <property type="method" value="X-ray"/>
    <property type="resolution" value="2.13 A"/>
    <property type="chains" value="A/C/E/G/I/K/L/N/P/U/W/Y=2-154"/>
</dbReference>
<dbReference type="PDB" id="8K3A">
    <property type="method" value="X-ray"/>
    <property type="resolution" value="2.74 A"/>
    <property type="chains" value="A=2-154"/>
</dbReference>
<dbReference type="PDB" id="8K3L">
    <property type="method" value="X-ray"/>
    <property type="resolution" value="2.30 A"/>
    <property type="chains" value="A/C/E/G=2-154"/>
</dbReference>
<dbReference type="PDB" id="8Q6M">
    <property type="method" value="X-ray"/>
    <property type="resolution" value="1.77 A"/>
    <property type="chains" value="A/B=1-154"/>
</dbReference>
<dbReference type="PDB" id="8YAT">
    <property type="method" value="X-ray"/>
    <property type="resolution" value="3.94 A"/>
    <property type="chains" value="A/E/I/M=2-154"/>
</dbReference>
<dbReference type="PDB" id="8YD3">
    <property type="method" value="X-ray"/>
    <property type="resolution" value="1.96 A"/>
    <property type="chains" value="A/B/C/D/E/F/G/H/I/J=1-154"/>
</dbReference>
<dbReference type="PDB" id="9IYK">
    <property type="method" value="X-ray"/>
    <property type="resolution" value="2.34 A"/>
    <property type="chains" value="A/B/C/D/E/F/G/H/I/J/K/L=1-154"/>
</dbReference>
<dbReference type="PDB" id="9JBO">
    <property type="method" value="EM"/>
    <property type="resolution" value="3.39 A"/>
    <property type="chains" value="A/B/C=1-154"/>
</dbReference>
<dbReference type="PDB" id="9JBP">
    <property type="method" value="EM"/>
    <property type="resolution" value="3.18 A"/>
    <property type="chains" value="A/B/C/D/E/F=1-154"/>
</dbReference>
<dbReference type="PDBsum" id="1AZV"/>
<dbReference type="PDBsum" id="1BA9"/>
<dbReference type="PDBsum" id="1DSW"/>
<dbReference type="PDBsum" id="1FUN"/>
<dbReference type="PDBsum" id="1HL4"/>
<dbReference type="PDBsum" id="1HL5"/>
<dbReference type="PDBsum" id="1KMG"/>
<dbReference type="PDBsum" id="1L3N"/>
<dbReference type="PDBsum" id="1MFM"/>
<dbReference type="PDBsum" id="1N18"/>
<dbReference type="PDBsum" id="1N19"/>
<dbReference type="PDBsum" id="1OEZ"/>
<dbReference type="PDBsum" id="1OZT"/>
<dbReference type="PDBsum" id="1OZU"/>
<dbReference type="PDBsum" id="1P1V"/>
<dbReference type="PDBsum" id="1PTZ"/>
<dbReference type="PDBsum" id="1PU0"/>
<dbReference type="PDBsum" id="1RK7"/>
<dbReference type="PDBsum" id="1SOS"/>
<dbReference type="PDBsum" id="1SPD"/>
<dbReference type="PDBsum" id="1UXL"/>
<dbReference type="PDBsum" id="1UXM"/>
<dbReference type="PDBsum" id="2AF2"/>
<dbReference type="PDBsum" id="2C9S"/>
<dbReference type="PDBsum" id="2C9U"/>
<dbReference type="PDBsum" id="2C9V"/>
<dbReference type="PDBsum" id="2GBT"/>
<dbReference type="PDBsum" id="2GBU"/>
<dbReference type="PDBsum" id="2GBV"/>
<dbReference type="PDBsum" id="2LU5"/>
<dbReference type="PDBsum" id="2MP3"/>
<dbReference type="PDBsum" id="2NAM"/>
<dbReference type="PDBsum" id="2NNX"/>
<dbReference type="PDBsum" id="2R27"/>
<dbReference type="PDBsum" id="2V0A"/>
<dbReference type="PDBsum" id="2VR6"/>
<dbReference type="PDBsum" id="2VR7"/>
<dbReference type="PDBsum" id="2VR8"/>
<dbReference type="PDBsum" id="2WKO"/>
<dbReference type="PDBsum" id="2WYT"/>
<dbReference type="PDBsum" id="2WYZ"/>
<dbReference type="PDBsum" id="2WZ0"/>
<dbReference type="PDBsum" id="2WZ5"/>
<dbReference type="PDBsum" id="2WZ6"/>
<dbReference type="PDBsum" id="2XJK"/>
<dbReference type="PDBsum" id="2XJL"/>
<dbReference type="PDBsum" id="2ZKW"/>
<dbReference type="PDBsum" id="2ZKX"/>
<dbReference type="PDBsum" id="2ZKY"/>
<dbReference type="PDBsum" id="3CQP"/>
<dbReference type="PDBsum" id="3CQQ"/>
<dbReference type="PDBsum" id="3ECU"/>
<dbReference type="PDBsum" id="3ECV"/>
<dbReference type="PDBsum" id="3ECW"/>
<dbReference type="PDBsum" id="3GQF"/>
<dbReference type="PDBsum" id="3GTV"/>
<dbReference type="PDBsum" id="3GZO"/>
<dbReference type="PDBsum" id="3GZP"/>
<dbReference type="PDBsum" id="3GZQ"/>
<dbReference type="PDBsum" id="3H2P"/>
<dbReference type="PDBsum" id="3H2Q"/>
<dbReference type="PDBsum" id="3HFF"/>
<dbReference type="PDBsum" id="3K91"/>
<dbReference type="PDBsum" id="3KH3"/>
<dbReference type="PDBsum" id="3KH4"/>
<dbReference type="PDBsum" id="3LTV"/>
<dbReference type="PDBsum" id="3QQD"/>
<dbReference type="PDBsum" id="3RE0"/>
<dbReference type="PDBsum" id="3T5W"/>
<dbReference type="PDBsum" id="4A7G"/>
<dbReference type="PDBsum" id="4A7Q"/>
<dbReference type="PDBsum" id="4A7S"/>
<dbReference type="PDBsum" id="4A7T"/>
<dbReference type="PDBsum" id="4A7U"/>
<dbReference type="PDBsum" id="4A7V"/>
<dbReference type="PDBsum" id="4B3E"/>
<dbReference type="PDBsum" id="4BCY"/>
<dbReference type="PDBsum" id="4BCZ"/>
<dbReference type="PDBsum" id="4BD4"/>
<dbReference type="PDBsum" id="4FF9"/>
<dbReference type="PDBsum" id="4MCM"/>
<dbReference type="PDBsum" id="4MCN"/>
<dbReference type="PDBsum" id="4NIN"/>
<dbReference type="PDBsum" id="4NIO"/>
<dbReference type="PDBsum" id="4NIP"/>
<dbReference type="PDBsum" id="4OH2"/>
<dbReference type="PDBsum" id="4XCR"/>
<dbReference type="PDBsum" id="5DLI"/>
<dbReference type="PDBsum" id="5IIW"/>
<dbReference type="PDBsum" id="5J07"/>
<dbReference type="PDBsum" id="5J0C"/>
<dbReference type="PDBsum" id="5J0F"/>
<dbReference type="PDBsum" id="5J0G"/>
<dbReference type="PDBsum" id="5K02"/>
<dbReference type="PDBsum" id="5O3Y"/>
<dbReference type="PDBsum" id="5O40"/>
<dbReference type="PDBsum" id="5U9M"/>
<dbReference type="PDBsum" id="5WMJ"/>
<dbReference type="PDBsum" id="5WOR"/>
<dbReference type="PDBsum" id="5YTO"/>
<dbReference type="PDBsum" id="5YTU"/>
<dbReference type="PDBsum" id="5YUL"/>
<dbReference type="PDBsum" id="6A9O"/>
<dbReference type="PDBsum" id="6B79"/>
<dbReference type="PDBsum" id="6DTK"/>
<dbReference type="PDBsum" id="6FFK"/>
<dbReference type="PDBsum" id="6FLH"/>
<dbReference type="PDBsum" id="6FOI"/>
<dbReference type="PDBsum" id="6FOL"/>
<dbReference type="PDBsum" id="6FON"/>
<dbReference type="PDBsum" id="6FP6"/>
<dbReference type="PDBsum" id="6SPA"/>
<dbReference type="PDBsum" id="6SPH"/>
<dbReference type="PDBsum" id="6SPI"/>
<dbReference type="PDBsum" id="6SPJ"/>
<dbReference type="PDBsum" id="6SPK"/>
<dbReference type="PDBsum" id="6Z3V"/>
<dbReference type="PDBsum" id="6Z4G"/>
<dbReference type="PDBsum" id="6Z4H"/>
<dbReference type="PDBsum" id="6Z4I"/>
<dbReference type="PDBsum" id="6Z4J"/>
<dbReference type="PDBsum" id="6Z4K"/>
<dbReference type="PDBsum" id="6Z4L"/>
<dbReference type="PDBsum" id="6Z4M"/>
<dbReference type="PDBsum" id="6Z4O"/>
<dbReference type="PDBsum" id="7CJV"/>
<dbReference type="PDBsum" id="7CJW"/>
<dbReference type="PDBsum" id="7FB6"/>
<dbReference type="PDBsum" id="7FB9"/>
<dbReference type="PDBsum" id="7NXX"/>
<dbReference type="PDBsum" id="7T8E"/>
<dbReference type="PDBsum" id="7T8F"/>
<dbReference type="PDBsum" id="7T8G"/>
<dbReference type="PDBsum" id="7T8H"/>
<dbReference type="PDBsum" id="7VZF"/>
<dbReference type="PDBsum" id="7XX3"/>
<dbReference type="PDBsum" id="8CCX"/>
<dbReference type="PDBsum" id="8GSQ"/>
<dbReference type="PDBsum" id="8IHU"/>
<dbReference type="PDBsum" id="8IHV"/>
<dbReference type="PDBsum" id="8K33"/>
<dbReference type="PDBsum" id="8K3A"/>
<dbReference type="PDBsum" id="8K3L"/>
<dbReference type="PDBsum" id="8Q6M"/>
<dbReference type="PDBsum" id="8YAT"/>
<dbReference type="PDBsum" id="8YD3"/>
<dbReference type="PDBsum" id="9IYK"/>
<dbReference type="PDBsum" id="9JBO"/>
<dbReference type="PDBsum" id="9JBP"/>
<dbReference type="BMRB" id="P00441"/>
<dbReference type="EMDB" id="EMD-32227"/>
<dbReference type="EMDB" id="EMD-35459"/>
<dbReference type="EMDB" id="EMD-35460"/>
<dbReference type="EMDB" id="EMD-61321"/>
<dbReference type="EMDB" id="EMD-61322"/>
<dbReference type="SMR" id="P00441"/>
<dbReference type="BioGRID" id="112530">
    <property type="interactions" value="436"/>
</dbReference>
<dbReference type="ComplexPortal" id="CPX-2897">
    <property type="entry name" value="[Cu-Zn] Superoxide dismutase complex"/>
</dbReference>
<dbReference type="DIP" id="DIP-44941N"/>
<dbReference type="FunCoup" id="P00441">
    <property type="interactions" value="1586"/>
</dbReference>
<dbReference type="IntAct" id="P00441">
    <property type="interactions" value="341"/>
</dbReference>
<dbReference type="MINT" id="P00441"/>
<dbReference type="STRING" id="9606.ENSP00000270142"/>
<dbReference type="BindingDB" id="P00441"/>
<dbReference type="ChEMBL" id="CHEMBL2354"/>
<dbReference type="DrugBank" id="DB01629">
    <property type="generic name" value="5-fluorouridine"/>
</dbReference>
<dbReference type="DrugBank" id="DB14511">
    <property type="generic name" value="Acetate"/>
</dbReference>
<dbReference type="DrugBank" id="DB05874">
    <property type="generic name" value="AEOL-10150"/>
</dbReference>
<dbReference type="DrugBank" id="DB14001">
    <property type="generic name" value="alpha-Tocopherol succinate"/>
</dbReference>
<dbReference type="DrugBank" id="DB09096">
    <property type="generic name" value="Benzoyl peroxide"/>
</dbReference>
<dbReference type="DrugBank" id="DB09061">
    <property type="generic name" value="Cannabidiol"/>
</dbReference>
<dbReference type="DrugBank" id="DB00958">
    <property type="generic name" value="Carboplatin"/>
</dbReference>
<dbReference type="DrugBank" id="DB00515">
    <property type="generic name" value="Cisplatin"/>
</dbReference>
<dbReference type="DrugBank" id="DB09130">
    <property type="generic name" value="Copper"/>
</dbReference>
<dbReference type="DrugBank" id="DB14002">
    <property type="generic name" value="D-alpha-Tocopherol acetate"/>
</dbReference>
<dbReference type="DrugBank" id="DB00988">
    <property type="generic name" value="Dopamine"/>
</dbReference>
<dbReference type="DrugBank" id="DB01064">
    <property type="generic name" value="Isoprenaline"/>
</dbReference>
<dbReference type="DrugBank" id="DB14009">
    <property type="generic name" value="Medical Cannabis"/>
</dbReference>
<dbReference type="DrugBank" id="DB14011">
    <property type="generic name" value="Nabiximols"/>
</dbReference>
<dbReference type="DrugBank" id="DB00526">
    <property type="generic name" value="Oxaliplatin"/>
</dbReference>
<dbReference type="DrugBank" id="DB09221">
    <property type="generic name" value="Polaprezinc"/>
</dbReference>
<dbReference type="DrugBank" id="DB03382">
    <property type="generic name" value="S-oxy-L-cysteine"/>
</dbReference>
<dbReference type="DrugBank" id="DB12449">
    <property type="generic name" value="Tempol"/>
</dbReference>
<dbReference type="DrugBank" id="DB00163">
    <property type="generic name" value="Vitamin E"/>
</dbReference>
<dbReference type="DrugBank" id="DB01593">
    <property type="generic name" value="Zinc"/>
</dbReference>
<dbReference type="DrugBank" id="DB14487">
    <property type="generic name" value="Zinc acetate"/>
</dbReference>
<dbReference type="DrugBank" id="DB14533">
    <property type="generic name" value="Zinc chloride"/>
</dbReference>
<dbReference type="DrugBank" id="DB14548">
    <property type="generic name" value="Zinc sulfate, unspecified form"/>
</dbReference>
<dbReference type="DrugCentral" id="P00441"/>
<dbReference type="CarbonylDB" id="P00441"/>
<dbReference type="GlyConnect" id="1778">
    <property type="glycosylation" value="2 N-Linked glycans (1 site)"/>
</dbReference>
<dbReference type="GlyCosmos" id="P00441">
    <property type="glycosylation" value="1 site, 2 glycans"/>
</dbReference>
<dbReference type="GlyGen" id="P00441">
    <property type="glycosylation" value="3 sites, 2 N-linked glycans (1 site), 1 O-linked glycan (1 site)"/>
</dbReference>
<dbReference type="iPTMnet" id="P00441"/>
<dbReference type="PhosphoSitePlus" id="P00441"/>
<dbReference type="SwissPalm" id="P00441"/>
<dbReference type="BioMuta" id="SOD1"/>
<dbReference type="OGP" id="P00441"/>
<dbReference type="REPRODUCTION-2DPAGE" id="IPI00783680"/>
<dbReference type="jPOST" id="P00441"/>
<dbReference type="MassIVE" id="P00441"/>
<dbReference type="PaxDb" id="9606-ENSP00000270142"/>
<dbReference type="PeptideAtlas" id="P00441"/>
<dbReference type="ProteomicsDB" id="51250"/>
<dbReference type="Pumba" id="P00441"/>
<dbReference type="TopDownProteomics" id="P00441"/>
<dbReference type="ABCD" id="P00441">
    <property type="antibodies" value="35 sequenced antibodies"/>
</dbReference>
<dbReference type="Antibodypedia" id="786">
    <property type="antibodies" value="1558 antibodies from 49 providers"/>
</dbReference>
<dbReference type="DNASU" id="6647"/>
<dbReference type="YCharOS" id="P00441">
    <property type="antibodies" value="Tested 12 antibodies from 6 manufacturers"/>
</dbReference>
<dbReference type="Ensembl" id="ENST00000270142.11">
    <property type="protein sequence ID" value="ENSP00000270142.7"/>
    <property type="gene ID" value="ENSG00000142168.15"/>
</dbReference>
<dbReference type="GeneID" id="6647"/>
<dbReference type="KEGG" id="hsa:6647"/>
<dbReference type="MANE-Select" id="ENST00000270142.11">
    <property type="protein sequence ID" value="ENSP00000270142.7"/>
    <property type="RefSeq nucleotide sequence ID" value="NM_000454.5"/>
    <property type="RefSeq protein sequence ID" value="NP_000445.1"/>
</dbReference>
<dbReference type="AGR" id="HGNC:11179"/>
<dbReference type="CTD" id="6647"/>
<dbReference type="DisGeNET" id="6647"/>
<dbReference type="GeneCards" id="SOD1"/>
<dbReference type="HGNC" id="HGNC:11179">
    <property type="gene designation" value="SOD1"/>
</dbReference>
<dbReference type="HPA" id="ENSG00000142168">
    <property type="expression patterns" value="Tissue enhanced (liver)"/>
</dbReference>
<dbReference type="MalaCards" id="SOD1"/>
<dbReference type="MIM" id="105400">
    <property type="type" value="phenotype"/>
</dbReference>
<dbReference type="MIM" id="147450">
    <property type="type" value="gene"/>
</dbReference>
<dbReference type="MIM" id="618598">
    <property type="type" value="phenotype"/>
</dbReference>
<dbReference type="neXtProt" id="NX_P00441"/>
<dbReference type="OpenTargets" id="ENSG00000142168"/>
<dbReference type="Orphanet" id="803">
    <property type="disease" value="Amyotrophic lateral sclerosis"/>
</dbReference>
<dbReference type="PharmGKB" id="PA334"/>
<dbReference type="VEuPathDB" id="HostDB:ENSG00000142168"/>
<dbReference type="eggNOG" id="KOG0441">
    <property type="taxonomic scope" value="Eukaryota"/>
</dbReference>
<dbReference type="GeneTree" id="ENSGT00940000155551"/>
<dbReference type="HOGENOM" id="CLU_056632_4_1_1"/>
<dbReference type="InParanoid" id="P00441"/>
<dbReference type="OMA" id="AQRGFHI"/>
<dbReference type="OrthoDB" id="2015551at2759"/>
<dbReference type="PAN-GO" id="P00441">
    <property type="GO annotations" value="7 GO annotations based on evolutionary models"/>
</dbReference>
<dbReference type="PhylomeDB" id="P00441"/>
<dbReference type="TreeFam" id="TF105131"/>
<dbReference type="BioCyc" id="MetaCyc:HS06899-MONOMER"/>
<dbReference type="BRENDA" id="1.15.1.1">
    <property type="organism ID" value="2681"/>
</dbReference>
<dbReference type="PathwayCommons" id="P00441"/>
<dbReference type="Reactome" id="R-HSA-114608">
    <property type="pathway name" value="Platelet degranulation"/>
</dbReference>
<dbReference type="Reactome" id="R-HSA-3299685">
    <property type="pathway name" value="Detoxification of Reactive Oxygen Species"/>
</dbReference>
<dbReference type="Reactome" id="R-HSA-8950505">
    <property type="pathway name" value="Gene and protein expression by JAK-STAT signaling after Interleukin-12 stimulation"/>
</dbReference>
<dbReference type="SignaLink" id="P00441"/>
<dbReference type="SIGNOR" id="P00441"/>
<dbReference type="BioGRID-ORCS" id="6647">
    <property type="hits" value="803 hits in 1146 CRISPR screens"/>
</dbReference>
<dbReference type="CD-CODE" id="DEE660B4">
    <property type="entry name" value="Stress granule"/>
</dbReference>
<dbReference type="CD-CODE" id="F1AC7DF2">
    <property type="entry name" value="SOD1 in vitro condensate"/>
</dbReference>
<dbReference type="ChiTaRS" id="SOD1">
    <property type="organism name" value="human"/>
</dbReference>
<dbReference type="EvolutionaryTrace" id="P00441"/>
<dbReference type="GeneWiki" id="SOD1"/>
<dbReference type="GenomeRNAi" id="6647"/>
<dbReference type="Pharos" id="P00441">
    <property type="development level" value="Tchem"/>
</dbReference>
<dbReference type="PRO" id="PR:P00441"/>
<dbReference type="Proteomes" id="UP000005640">
    <property type="component" value="Chromosome 21"/>
</dbReference>
<dbReference type="RNAct" id="P00441">
    <property type="molecule type" value="protein"/>
</dbReference>
<dbReference type="Bgee" id="ENSG00000142168">
    <property type="expression patterns" value="Expressed in pons and 213 other cell types or tissues"/>
</dbReference>
<dbReference type="ExpressionAtlas" id="P00441">
    <property type="expression patterns" value="baseline and differential"/>
</dbReference>
<dbReference type="GO" id="GO:1904115">
    <property type="term" value="C:axon cytoplasm"/>
    <property type="evidence" value="ECO:0007669"/>
    <property type="project" value="GOC"/>
</dbReference>
<dbReference type="GO" id="GO:0005737">
    <property type="term" value="C:cytoplasm"/>
    <property type="evidence" value="ECO:0000314"/>
    <property type="project" value="UniProtKB"/>
</dbReference>
<dbReference type="GO" id="GO:0031410">
    <property type="term" value="C:cytoplasmic vesicle"/>
    <property type="evidence" value="ECO:0000314"/>
    <property type="project" value="UniProtKB"/>
</dbReference>
<dbReference type="GO" id="GO:0005829">
    <property type="term" value="C:cytosol"/>
    <property type="evidence" value="ECO:0000314"/>
    <property type="project" value="UniProtKB"/>
</dbReference>
<dbReference type="GO" id="GO:0032839">
    <property type="term" value="C:dendrite cytoplasm"/>
    <property type="evidence" value="ECO:0000314"/>
    <property type="project" value="UniProtKB"/>
</dbReference>
<dbReference type="GO" id="GO:0031045">
    <property type="term" value="C:dense core granule"/>
    <property type="evidence" value="ECO:0007669"/>
    <property type="project" value="Ensembl"/>
</dbReference>
<dbReference type="GO" id="GO:0070062">
    <property type="term" value="C:extracellular exosome"/>
    <property type="evidence" value="ECO:0007005"/>
    <property type="project" value="UniProtKB"/>
</dbReference>
<dbReference type="GO" id="GO:0005576">
    <property type="term" value="C:extracellular region"/>
    <property type="evidence" value="ECO:0000304"/>
    <property type="project" value="Reactome"/>
</dbReference>
<dbReference type="GO" id="GO:0005615">
    <property type="term" value="C:extracellular space"/>
    <property type="evidence" value="ECO:0000314"/>
    <property type="project" value="UniProtKB"/>
</dbReference>
<dbReference type="GO" id="GO:0005764">
    <property type="term" value="C:lysosome"/>
    <property type="evidence" value="ECO:0007669"/>
    <property type="project" value="Ensembl"/>
</dbReference>
<dbReference type="GO" id="GO:0005758">
    <property type="term" value="C:mitochondrial intermembrane space"/>
    <property type="evidence" value="ECO:0000304"/>
    <property type="project" value="Reactome"/>
</dbReference>
<dbReference type="GO" id="GO:0005759">
    <property type="term" value="C:mitochondrial matrix"/>
    <property type="evidence" value="ECO:0000303"/>
    <property type="project" value="UniProtKB"/>
</dbReference>
<dbReference type="GO" id="GO:0005739">
    <property type="term" value="C:mitochondrion"/>
    <property type="evidence" value="ECO:0000314"/>
    <property type="project" value="UniProtKB"/>
</dbReference>
<dbReference type="GO" id="GO:0043025">
    <property type="term" value="C:neuronal cell body"/>
    <property type="evidence" value="ECO:0000314"/>
    <property type="project" value="UniProtKB"/>
</dbReference>
<dbReference type="GO" id="GO:0005654">
    <property type="term" value="C:nucleoplasm"/>
    <property type="evidence" value="ECO:0000314"/>
    <property type="project" value="HPA"/>
</dbReference>
<dbReference type="GO" id="GO:0005634">
    <property type="term" value="C:nucleus"/>
    <property type="evidence" value="ECO:0000314"/>
    <property type="project" value="UniProtKB"/>
</dbReference>
<dbReference type="GO" id="GO:0005777">
    <property type="term" value="C:peroxisome"/>
    <property type="evidence" value="ECO:0000314"/>
    <property type="project" value="UniProtKB"/>
</dbReference>
<dbReference type="GO" id="GO:0032991">
    <property type="term" value="C:protein-containing complex"/>
    <property type="evidence" value="ECO:0000314"/>
    <property type="project" value="UniProtKB"/>
</dbReference>
<dbReference type="GO" id="GO:0005507">
    <property type="term" value="F:copper ion binding"/>
    <property type="evidence" value="ECO:0000314"/>
    <property type="project" value="UniProtKB"/>
</dbReference>
<dbReference type="GO" id="GO:0042802">
    <property type="term" value="F:identical protein binding"/>
    <property type="evidence" value="ECO:0000353"/>
    <property type="project" value="IntAct"/>
</dbReference>
<dbReference type="GO" id="GO:0042803">
    <property type="term" value="F:protein homodimerization activity"/>
    <property type="evidence" value="ECO:0000353"/>
    <property type="project" value="ParkinsonsUK-UCL"/>
</dbReference>
<dbReference type="GO" id="GO:0030346">
    <property type="term" value="F:protein phosphatase 2B binding"/>
    <property type="evidence" value="ECO:0000314"/>
    <property type="project" value="UniProtKB"/>
</dbReference>
<dbReference type="GO" id="GO:0051087">
    <property type="term" value="F:protein-folding chaperone binding"/>
    <property type="evidence" value="ECO:0000353"/>
    <property type="project" value="UniProtKB"/>
</dbReference>
<dbReference type="GO" id="GO:0031267">
    <property type="term" value="F:small GTPase binding"/>
    <property type="evidence" value="ECO:0000314"/>
    <property type="project" value="UniProtKB"/>
</dbReference>
<dbReference type="GO" id="GO:0004784">
    <property type="term" value="F:superoxide dismutase activity"/>
    <property type="evidence" value="ECO:0000314"/>
    <property type="project" value="UniProtKB"/>
</dbReference>
<dbReference type="GO" id="GO:0008270">
    <property type="term" value="F:zinc ion binding"/>
    <property type="evidence" value="ECO:0000314"/>
    <property type="project" value="UniProtKB"/>
</dbReference>
<dbReference type="GO" id="GO:0099610">
    <property type="term" value="P:action potential initiation"/>
    <property type="evidence" value="ECO:0007669"/>
    <property type="project" value="Ensembl"/>
</dbReference>
<dbReference type="GO" id="GO:0008089">
    <property type="term" value="P:anterograde axonal transport"/>
    <property type="evidence" value="ECO:0000250"/>
    <property type="project" value="BHF-UCL"/>
</dbReference>
<dbReference type="GO" id="GO:0006915">
    <property type="term" value="P:apoptotic process"/>
    <property type="evidence" value="ECO:0007669"/>
    <property type="project" value="Ensembl"/>
</dbReference>
<dbReference type="GO" id="GO:0060088">
    <property type="term" value="P:auditory receptor cell stereocilium organization"/>
    <property type="evidence" value="ECO:0000250"/>
    <property type="project" value="UniProtKB"/>
</dbReference>
<dbReference type="GO" id="GO:0071318">
    <property type="term" value="P:cellular response to ATP"/>
    <property type="evidence" value="ECO:0007669"/>
    <property type="project" value="Ensembl"/>
</dbReference>
<dbReference type="GO" id="GO:0071276">
    <property type="term" value="P:cellular response to cadmium ion"/>
    <property type="evidence" value="ECO:0007669"/>
    <property type="project" value="Ensembl"/>
</dbReference>
<dbReference type="GO" id="GO:0035865">
    <property type="term" value="P:cellular response to potassium ion"/>
    <property type="evidence" value="ECO:0007669"/>
    <property type="project" value="Ensembl"/>
</dbReference>
<dbReference type="GO" id="GO:0008340">
    <property type="term" value="P:determination of adult lifespan"/>
    <property type="evidence" value="ECO:0007669"/>
    <property type="project" value="Ensembl"/>
</dbReference>
<dbReference type="GO" id="GO:0035234">
    <property type="term" value="P:ectopic germ cell programmed cell death"/>
    <property type="evidence" value="ECO:0007669"/>
    <property type="project" value="Ensembl"/>
</dbReference>
<dbReference type="GO" id="GO:0007566">
    <property type="term" value="P:embryo implantation"/>
    <property type="evidence" value="ECO:0000250"/>
    <property type="project" value="UniProtKB"/>
</dbReference>
<dbReference type="GO" id="GO:0010467">
    <property type="term" value="P:gene expression"/>
    <property type="evidence" value="ECO:0007669"/>
    <property type="project" value="Ensembl"/>
</dbReference>
<dbReference type="GO" id="GO:0006749">
    <property type="term" value="P:glutathione metabolic process"/>
    <property type="evidence" value="ECO:0000250"/>
    <property type="project" value="UniProtKB"/>
</dbReference>
<dbReference type="GO" id="GO:0060047">
    <property type="term" value="P:heart contraction"/>
    <property type="evidence" value="ECO:0000314"/>
    <property type="project" value="UniProtKB"/>
</dbReference>
<dbReference type="GO" id="GO:0050665">
    <property type="term" value="P:hydrogen peroxide biosynthetic process"/>
    <property type="evidence" value="ECO:0000314"/>
    <property type="project" value="UniProtKB"/>
</dbReference>
<dbReference type="GO" id="GO:0006879">
    <property type="term" value="P:intracellular iron ion homeostasis"/>
    <property type="evidence" value="ECO:0000250"/>
    <property type="project" value="UniProtKB"/>
</dbReference>
<dbReference type="GO" id="GO:0007626">
    <property type="term" value="P:locomotory behavior"/>
    <property type="evidence" value="ECO:0000250"/>
    <property type="project" value="UniProtKB"/>
</dbReference>
<dbReference type="GO" id="GO:0046716">
    <property type="term" value="P:muscle cell cellular homeostasis"/>
    <property type="evidence" value="ECO:0000250"/>
    <property type="project" value="UniProtKB"/>
</dbReference>
<dbReference type="GO" id="GO:0002262">
    <property type="term" value="P:myeloid cell homeostasis"/>
    <property type="evidence" value="ECO:0000250"/>
    <property type="project" value="UniProtKB"/>
</dbReference>
<dbReference type="GO" id="GO:0051093">
    <property type="term" value="P:negative regulation of developmental process"/>
    <property type="evidence" value="ECO:0007669"/>
    <property type="project" value="Ensembl"/>
</dbReference>
<dbReference type="GO" id="GO:0050728">
    <property type="term" value="P:negative regulation of inflammatory response"/>
    <property type="evidence" value="ECO:0007669"/>
    <property type="project" value="Ensembl"/>
</dbReference>
<dbReference type="GO" id="GO:0043524">
    <property type="term" value="P:negative regulation of neuron apoptotic process"/>
    <property type="evidence" value="ECO:0000250"/>
    <property type="project" value="UniProtKB"/>
</dbReference>
<dbReference type="GO" id="GO:2000242">
    <property type="term" value="P:negative regulation of reproductive process"/>
    <property type="evidence" value="ECO:0007669"/>
    <property type="project" value="Ensembl"/>
</dbReference>
<dbReference type="GO" id="GO:0060052">
    <property type="term" value="P:neurofilament cytoskeleton organization"/>
    <property type="evidence" value="ECO:0000250"/>
    <property type="project" value="UniProtKB"/>
</dbReference>
<dbReference type="GO" id="GO:0019228">
    <property type="term" value="P:neuronal action potential"/>
    <property type="evidence" value="ECO:0007669"/>
    <property type="project" value="Ensembl"/>
</dbReference>
<dbReference type="GO" id="GO:0001541">
    <property type="term" value="P:ovarian follicle development"/>
    <property type="evidence" value="ECO:0000250"/>
    <property type="project" value="UniProtKB"/>
</dbReference>
<dbReference type="GO" id="GO:0032287">
    <property type="term" value="P:peripheral nervous system myelin maintenance"/>
    <property type="evidence" value="ECO:0000250"/>
    <property type="project" value="UniProtKB"/>
</dbReference>
<dbReference type="GO" id="GO:0001890">
    <property type="term" value="P:placenta development"/>
    <property type="evidence" value="ECO:0000303"/>
    <property type="project" value="UniProtKB"/>
</dbReference>
<dbReference type="GO" id="GO:0043065">
    <property type="term" value="P:positive regulation of apoptotic process"/>
    <property type="evidence" value="ECO:0000305"/>
    <property type="project" value="UniProtKB"/>
</dbReference>
<dbReference type="GO" id="GO:0001819">
    <property type="term" value="P:positive regulation of cytokine production"/>
    <property type="evidence" value="ECO:0000314"/>
    <property type="project" value="UniProtKB"/>
</dbReference>
<dbReference type="GO" id="GO:0043410">
    <property type="term" value="P:positive regulation of MAPK cascade"/>
    <property type="evidence" value="ECO:0000250"/>
    <property type="project" value="UniProtKB"/>
</dbReference>
<dbReference type="GO" id="GO:1902177">
    <property type="term" value="P:positive regulation of oxidative stress-induced intrinsic apoptotic signaling pathway"/>
    <property type="evidence" value="ECO:0000315"/>
    <property type="project" value="BHF-UCL"/>
</dbReference>
<dbReference type="GO" id="GO:0050766">
    <property type="term" value="P:positive regulation of phagocytosis"/>
    <property type="evidence" value="ECO:0007669"/>
    <property type="project" value="Ensembl"/>
</dbReference>
<dbReference type="GO" id="GO:0032930">
    <property type="term" value="P:positive regulation of superoxide anion generation"/>
    <property type="evidence" value="ECO:0000314"/>
    <property type="project" value="UniProtKB"/>
</dbReference>
<dbReference type="GO" id="GO:0072593">
    <property type="term" value="P:reactive oxygen species metabolic process"/>
    <property type="evidence" value="ECO:0000314"/>
    <property type="project" value="UniProtKB"/>
</dbReference>
<dbReference type="GO" id="GO:0008217">
    <property type="term" value="P:regulation of blood pressure"/>
    <property type="evidence" value="ECO:0000250"/>
    <property type="project" value="UniProtKB"/>
</dbReference>
<dbReference type="GO" id="GO:0043087">
    <property type="term" value="P:regulation of GTPase activity"/>
    <property type="evidence" value="ECO:0000314"/>
    <property type="project" value="UniProtKB"/>
</dbReference>
<dbReference type="GO" id="GO:0051881">
    <property type="term" value="P:regulation of mitochondrial membrane potential"/>
    <property type="evidence" value="ECO:0000315"/>
    <property type="project" value="UniProtKB"/>
</dbReference>
<dbReference type="GO" id="GO:0040014">
    <property type="term" value="P:regulation of multicellular organism growth"/>
    <property type="evidence" value="ECO:0000250"/>
    <property type="project" value="UniProtKB"/>
</dbReference>
<dbReference type="GO" id="GO:0046620">
    <property type="term" value="P:regulation of organ growth"/>
    <property type="evidence" value="ECO:0000303"/>
    <property type="project" value="UniProtKB"/>
</dbReference>
<dbReference type="GO" id="GO:0033081">
    <property type="term" value="P:regulation of T cell differentiation in thymus"/>
    <property type="evidence" value="ECO:0000303"/>
    <property type="project" value="UniProtKB"/>
</dbReference>
<dbReference type="GO" id="GO:0060087">
    <property type="term" value="P:relaxation of vascular associated smooth muscle"/>
    <property type="evidence" value="ECO:0000250"/>
    <property type="project" value="UniProtKB"/>
</dbReference>
<dbReference type="GO" id="GO:0019430">
    <property type="term" value="P:removal of superoxide radicals"/>
    <property type="evidence" value="ECO:0000314"/>
    <property type="project" value="UniProtKB"/>
</dbReference>
<dbReference type="GO" id="GO:0001975">
    <property type="term" value="P:response to amphetamine"/>
    <property type="evidence" value="ECO:0007669"/>
    <property type="project" value="Ensembl"/>
</dbReference>
<dbReference type="GO" id="GO:0097332">
    <property type="term" value="P:response to antipsychotic drug"/>
    <property type="evidence" value="ECO:0007669"/>
    <property type="project" value="Ensembl"/>
</dbReference>
<dbReference type="GO" id="GO:0048678">
    <property type="term" value="P:response to axon injury"/>
    <property type="evidence" value="ECO:0000250"/>
    <property type="project" value="UniProtKB"/>
</dbReference>
<dbReference type="GO" id="GO:0034465">
    <property type="term" value="P:response to carbon monoxide"/>
    <property type="evidence" value="ECO:0007669"/>
    <property type="project" value="Ensembl"/>
</dbReference>
<dbReference type="GO" id="GO:0046688">
    <property type="term" value="P:response to copper ion"/>
    <property type="evidence" value="ECO:0007669"/>
    <property type="project" value="Ensembl"/>
</dbReference>
<dbReference type="GO" id="GO:0045471">
    <property type="term" value="P:response to ethanol"/>
    <property type="evidence" value="ECO:0000250"/>
    <property type="project" value="UniProtKB"/>
</dbReference>
<dbReference type="GO" id="GO:0009408">
    <property type="term" value="P:response to heat"/>
    <property type="evidence" value="ECO:0000250"/>
    <property type="project" value="UniProtKB"/>
</dbReference>
<dbReference type="GO" id="GO:0042542">
    <property type="term" value="P:response to hydrogen peroxide"/>
    <property type="evidence" value="ECO:0000250"/>
    <property type="project" value="UniProtKB"/>
</dbReference>
<dbReference type="GO" id="GO:0031667">
    <property type="term" value="P:response to nutrient levels"/>
    <property type="evidence" value="ECO:0007669"/>
    <property type="project" value="Ensembl"/>
</dbReference>
<dbReference type="GO" id="GO:0000303">
    <property type="term" value="P:response to superoxide"/>
    <property type="evidence" value="ECO:0000314"/>
    <property type="project" value="UniProtKB"/>
</dbReference>
<dbReference type="GO" id="GO:0009410">
    <property type="term" value="P:response to xenobiotic stimulus"/>
    <property type="evidence" value="ECO:0007669"/>
    <property type="project" value="Ensembl"/>
</dbReference>
<dbReference type="GO" id="GO:0001895">
    <property type="term" value="P:retina homeostasis"/>
    <property type="evidence" value="ECO:0000250"/>
    <property type="project" value="UniProtKB"/>
</dbReference>
<dbReference type="GO" id="GO:0008090">
    <property type="term" value="P:retrograde axonal transport"/>
    <property type="evidence" value="ECO:0000250"/>
    <property type="project" value="BHF-UCL"/>
</dbReference>
<dbReference type="GO" id="GO:0007605">
    <property type="term" value="P:sensory perception of sound"/>
    <property type="evidence" value="ECO:0000250"/>
    <property type="project" value="UniProtKB"/>
</dbReference>
<dbReference type="GO" id="GO:0007283">
    <property type="term" value="P:spermatogenesis"/>
    <property type="evidence" value="ECO:0000250"/>
    <property type="project" value="UniProtKB"/>
</dbReference>
<dbReference type="GO" id="GO:0042554">
    <property type="term" value="P:superoxide anion generation"/>
    <property type="evidence" value="ECO:0007669"/>
    <property type="project" value="Ensembl"/>
</dbReference>
<dbReference type="GO" id="GO:0006801">
    <property type="term" value="P:superoxide metabolic process"/>
    <property type="evidence" value="ECO:0000314"/>
    <property type="project" value="BHF-UCL"/>
</dbReference>
<dbReference type="GO" id="GO:0048538">
    <property type="term" value="P:thymus development"/>
    <property type="evidence" value="ECO:0000303"/>
    <property type="project" value="UniProtKB"/>
</dbReference>
<dbReference type="GO" id="GO:0019226">
    <property type="term" value="P:transmission of nerve impulse"/>
    <property type="evidence" value="ECO:0000250"/>
    <property type="project" value="UniProtKB"/>
</dbReference>
<dbReference type="CDD" id="cd00305">
    <property type="entry name" value="Cu-Zn_Superoxide_Dismutase"/>
    <property type="match status" value="1"/>
</dbReference>
<dbReference type="DisProt" id="DP00652"/>
<dbReference type="FunFam" id="2.60.40.200:FF:000001">
    <property type="entry name" value="Superoxide dismutase [Cu-Zn]"/>
    <property type="match status" value="1"/>
</dbReference>
<dbReference type="Gene3D" id="2.60.40.200">
    <property type="entry name" value="Superoxide dismutase, copper/zinc binding domain"/>
    <property type="match status" value="1"/>
</dbReference>
<dbReference type="InterPro" id="IPR036423">
    <property type="entry name" value="SOD-like_Cu/Zn_dom_sf"/>
</dbReference>
<dbReference type="InterPro" id="IPR024134">
    <property type="entry name" value="SOD_Cu/Zn_/chaperone"/>
</dbReference>
<dbReference type="InterPro" id="IPR018152">
    <property type="entry name" value="SOD_Cu/Zn_BS"/>
</dbReference>
<dbReference type="InterPro" id="IPR001424">
    <property type="entry name" value="SOD_Cu_Zn_dom"/>
</dbReference>
<dbReference type="PANTHER" id="PTHR10003">
    <property type="entry name" value="SUPEROXIDE DISMUTASE CU-ZN -RELATED"/>
    <property type="match status" value="1"/>
</dbReference>
<dbReference type="Pfam" id="PF00080">
    <property type="entry name" value="Sod_Cu"/>
    <property type="match status" value="1"/>
</dbReference>
<dbReference type="PRINTS" id="PR00068">
    <property type="entry name" value="CUZNDISMTASE"/>
</dbReference>
<dbReference type="SUPFAM" id="SSF49329">
    <property type="entry name" value="Cu,Zn superoxide dismutase-like"/>
    <property type="match status" value="1"/>
</dbReference>
<dbReference type="PROSITE" id="PS00087">
    <property type="entry name" value="SOD_CU_ZN_1"/>
    <property type="match status" value="1"/>
</dbReference>
<dbReference type="PROSITE" id="PS00332">
    <property type="entry name" value="SOD_CU_ZN_2"/>
    <property type="match status" value="1"/>
</dbReference>